<sequence length="4128" mass="469089">MAGSGAGVRCSLLRLQETLSAADRCGAALAGHQLIRGLGQECVLSSSPAVLALQTSLVFSRDFGLLVFVRKSLNSIEFRECREEILKFLCIFLEKMGQKIAPYSVEIKNTCTSVYTKDRAAKCKIPALDLLIKLLQTFRSSRLMDEFKIGELFSKFYGELALKKKIPDTVLEKVYELLGLLGEVHPSEMINNAENLFRAFLGELKTQMTSAVREPKLPVLAGCLKGLSSLLCNFTKSMEEDPQTSREIFNFVLKAIRPQIDLKRYAVPSAGLRLFALHASQFSTCLLDNYVSLFEVLLKWCAHTNVELKKAALSALESFLKQVSNMVAKNAEMHKNKLQYFMEQFYGIIRNVDSNNKELSIAIRGYGLFAGPCKVINAKDVDFMYVELIQRCKQMFLTQTDTGDDRVYQMPSFLQSVASVLLYLDTVPEVYTPVLEHLVVMQIDSFPQYSPKMQLVCCRAIVKVFLALAAKGPVLRNCISTVVHQGLIRICSKPVVLPKGPESESEDHRASGEVRTGKWKVPTYKDYVDLFRHLLSSDQMMDSILADEAFFSVNSSSESLNHLLYDEFVKSVLKIVEKLDLTLEIQTVGEQENGDEAPGVWMIPTSDPAANLHPAKPKDFSAFINLVEFCREILPEKQAEFFEPWVYSFSYELILQSTRLPLISGFYKLLSITVRNAKKIKYFEGVSPKSLKHSPEDPEKYSCFALFVKFGKEVAVKMKQYKDELLASCLTFLLSLPHNIIELDVRAYVPALQMAFKLGLSYTPLAEVGLNALEEWSIYIDRHVMQPYYKDILPCLDGYLKTSALSDETKNNWEVSALSRAAQKGFNKVVLKHLKKTKNLSSNEAISLEEIRIRVVQMLGSLGGQINKNLLTVTSSDEMMKSYVAWDREKRLSFAVPFREMKPVIFLDVFLPRVTELALTASDRQTKVAACELLHSMVMFMLGKATQMPEGGQGAPPMYQLYKRTFPVLLRLACDVDQVTRQLYEPLVMQLIHWFTNNKKFESQDTVALLEAILDGIVDPVDSTLRDFCGRCIREFLKWSIKQITPQQQEKSPVNTKSLFKRLYSLALHPNAFKRLGASLAFNNIYREFREEESLVEQFVFEALVIYMESLALAHADEKSLGTIQQCCDAIDHLCRIIEKKHVSLNKAKKRRLPRGFPPSASLCLLDLVKWLLAHCGRPQTECRHKSIELFYKFVPLLPGNRSPNLWLKDVLKEEGVSFLINTFEGGGCGQPSGILAQPTLLYLRGPFSLQATLCWLDLLLAALECYNTFIGERTVGALQVLGTEAQSSLLKAVAFFLESIAMHDIIAAEKCFGTGAAGNRTSPQEGERYNYSKCTVVVRIMEFTTTLLNTSPEGWKLLKKDLCNTHLMRVLVQTLCEPASIGFNIGDVQVMAHLPDVCVNLMKALKMSPYKDILETHLREKITAQSIEELCAVNLYGPDAQVDRSRLAAVVSACKQLHRAGLLHNILPSQSTDLHHSVGTELLSLVYKGIAPGDERQCLPSLDLSCKQLASGLLELAFAFGGLCERLVSLLLNPAVLSTASLGSSQGSVIHFSHGEYFYSLFSETINTELLKNLDLAVLELMQSSVDNTKMVSAVLNGMLDQSFRERANQKHQGLKLATTILQHWKKCDSWWAKDSPLETKMAVLALLAKILQIDSSVSFNTSHGSFPEVFTTYISLLADTKLDLHLKGQAVTLLPFFTSLTGGSLEELRRVLEQLIVAHFPMQSREFPPGTPRFNNYVDCMKKFLDALELSQSPMLLELMTEVLCREQQHVMEELFQSSFRRIARRGSCVTQVGLLESVYEMFRKDDPRLSFTRQSFVDRSLLTLLWHCSLDALREFFSTIVVDAIDVLKSRFTKLNESTFDTQITKKMGYYKILDVMYSRLPKDDVHAKESKINQVFHGSCITEGNELTKTLIKLCYDAFTENMAGENQLLERRRLYHCAAYNCAISVICCVFNELKFYQGFLFSEKPEKNLLIFENLIDLKRRYNFPVEVEVPMERKKKYIEIRKEAREAANGDSDGPSYMSSLSYLADSTLSEEMSQFDFSTGVQSYSYSSQDPRPATGRFRRREQRDPTVHDDVLELEMDELNRHECMAPLTALVKHMHRSLGPPQGEEDSVPRDLPSWMKFLHGKLGNPIVPLNIRLFLAKLVINTEEVFRPYAKHWLSPLLQLAASENNGGEGIHYMVVEIVATILSWTGLATPTGVPKDEVLANRLLNFLMKHVFHPKRAVFRHNLEIIKTLVECWKDCLSIPYRLIFEKFSGKDPNSKDNSVGIQLLGIVMANDLPPYDPQCGIQSSEYFQALVNNMSFVRYKEVYAAAAEVLGLILRYVMERKNILEESLCELVAKQLKQHQNTMEDKFIVCLNKVTKSFPPLADRFMNAVFFLLPKFHGVLKTLCLEVVLCRVEGMTELYFQLKSKDFVQVMRHRDDERQKVCLDIIYKMMPKLKPVELRELLNPVVEFVSHPSTTCREQMYNILMWIHDNYRDPESETDNDSQEIFKLAKDVLIQGLIDENPGLQLIIRNFWSHETRLPSNTLDRLLALNSLYSPKIEVHFLSLATNFLLEMTSMSPDYPNPMFEHPLSECEFQEYTIDSDWRFRSTVLTPMFVETQASQGTLQTRTQEGSLSARWPVAGQIRATQQQHDFTLTQTADGRSSFDWLTGSSTDPLVDHTSPSSDSLLFAHKRSERLQRAPLKSVGPDFGKKRLGLPGDEVDNKVKGAAGRTDLLRLRRRFMRDQEKLSLMYARKGVAEQKREKEIKSELKMKQDAQVVLYRSYRHGDLPDIQIKHSSLITPLQAVAQRDPIIAKQLFSSLFSGILKEMDKFKTLSEKNNITQKLLQDFNRFLNTTFSFFPPFVSCIQDISCQHAALLSLDPAAVSAGCLASLQQPVGIRLLEEALLRLLPAELPAKRVRGKARLPPDVLRWVELAKLYRSIGEYDVLRGIFTSEIGTKQITQSALLAEARSDYSEAAKQYDEALNKQDWVDGEPTEAEKDFWELASLDCYNHLAEWKSLEYCSTASIDSENPPDLNKIWSEPFYQETYLPYMIRSKLKLLLQGEADQSLLTFIDKAMHGELQKAILELHYSQELSLLYLLQDDVDRAKYYIQNGIQSFMQNYSSIDVLLHQSRLTKLQSVQALTEIQEFISFISKQGNLSSQVPLKRLLNTWTNRYPDAKMDPMNIWDDIITNRCFFLSKIEEKLTPLPEDNSMNVDQDGDPSDRMEVQEQEEDISSLIRSCKFSMKMKMIDSARKQNNFSLAMKLLKELHKESKTRDDWLVSWVQSYCRLSHCRSRSQGCSEQVLTVLKTVSLLDENNVSSYLSKNILAFRDQNILLGTTYRIIANALSSEPACLAEIEEDKARRILELSGSSSEDSEKVIAGLYQRAFQHLSEAVQAAEEEAQPPSWSCGPAAGVIDAYMTLADFCDQQLRKEEENASVIDSAELQAYPALVVEKMLKALKLNSNEARLKFPRLLQIIERYPEETLSLMTKEISSVPCWQFISWISHMVALLDKDQAVAVQHSVEEITDNYPQAIVYPFIISSESYSFKDTSTGHKNKEFVARIKSKLDQGGVIQDFINALDQLSNPELLFKDWSNDVRAELAKTPVNKKNIEKMYERMYAALGDPKAPGLGAFRRKFIQTFGKEFDKHFGKGGSKLLRMKLSDFNDITNMLLLKMNKDSKPPGNLKECSPWMSDFKVEFLRNELEIPGQYDGRGKPLPEYHVRIAGFDERVTVMASLRRPKRIIIRGHDEREHPFLVKGGEDLRQDQRVEQLFQVMNGILAQDSACSQRALQLRTYSVVPMTSRLGLIEWLENTVTLKDLLLNTMSQEEKAAYLSDPRAPPCEYKDWLTKMSGKHDVGAYMLMYKGANRTETVTSFRKRESKVPADLLKRAFVRMSTSPEAFLALRSHFASSHALICISHWILGIGDRHLNNFMVAMETGGVIGIDFGHAFGSATQFLPVPELMPFRLTRQFINLMLPMKETGLMYSIMVHALRAFRSDPGLLTNTMDVFVKEPSFDWKNFEQKMLKKGGSWIQEINVAEKNWYPRQKICYAKRKLAGANPAVITCDELLLGHEKAPAFRDYVAVARGSKDHNIRAQEPESGLSEETQVKCLMDQATDPNILGRTWEGWEPWM</sequence>
<dbReference type="EC" id="2.7.11.1" evidence="22 48 53 58"/>
<dbReference type="EMBL" id="U47077">
    <property type="protein sequence ID" value="AAB39925.5"/>
    <property type="molecule type" value="mRNA"/>
</dbReference>
<dbReference type="EMBL" id="U34994">
    <property type="protein sequence ID" value="AAC50210.3"/>
    <property type="molecule type" value="mRNA"/>
</dbReference>
<dbReference type="EMBL" id="AY316117">
    <property type="protein sequence ID" value="AAP69525.1"/>
    <property type="molecule type" value="Genomic_DNA"/>
</dbReference>
<dbReference type="EMBL" id="U63630">
    <property type="protein sequence ID" value="AAC52019.2"/>
    <property type="molecule type" value="Genomic_DNA"/>
</dbReference>
<dbReference type="EMBL" id="U90415">
    <property type="protein sequence ID" value="AAB51722.1"/>
    <property type="molecule type" value="Genomic_DNA"/>
</dbReference>
<dbReference type="EMBL" id="L27425">
    <property type="protein sequence ID" value="AAA79244.1"/>
    <property type="molecule type" value="Genomic_DNA"/>
</dbReference>
<dbReference type="EMBL" id="AB052953">
    <property type="protein sequence ID" value="BAB79635.1"/>
    <property type="molecule type" value="Genomic_DNA"/>
</dbReference>
<dbReference type="EMBL" id="U35835">
    <property type="protein sequence ID" value="AAA79184.1"/>
    <property type="molecule type" value="mRNA"/>
</dbReference>
<dbReference type="EMBL" id="AY030284">
    <property type="protein sequence ID" value="AAK40350.1"/>
    <property type="molecule type" value="Genomic_DNA"/>
</dbReference>
<dbReference type="EMBL" id="AB208860">
    <property type="protein sequence ID" value="BAD92097.1"/>
    <property type="molecule type" value="mRNA"/>
</dbReference>
<dbReference type="CCDS" id="CCDS75734.1">
    <molecule id="P78527-2"/>
</dbReference>
<dbReference type="CCDS" id="CCDS75735.1">
    <molecule id="P78527-1"/>
</dbReference>
<dbReference type="PIR" id="A57099">
    <property type="entry name" value="A57099"/>
</dbReference>
<dbReference type="PIR" id="G02083">
    <property type="entry name" value="G02083"/>
</dbReference>
<dbReference type="RefSeq" id="NP_001075109.1">
    <molecule id="P78527-2"/>
    <property type="nucleotide sequence ID" value="NM_001081640.2"/>
</dbReference>
<dbReference type="RefSeq" id="NP_008835.5">
    <molecule id="P78527-1"/>
    <property type="nucleotide sequence ID" value="NM_006904.6"/>
</dbReference>
<dbReference type="PDB" id="5LUQ">
    <property type="method" value="X-ray"/>
    <property type="resolution" value="4.30 A"/>
    <property type="chains" value="A/B=2-2575, A/B=2774-4127"/>
</dbReference>
<dbReference type="PDB" id="5W1R">
    <property type="method" value="EM"/>
    <property type="resolution" value="4.40 A"/>
    <property type="chains" value="A=1-4128"/>
</dbReference>
<dbReference type="PDB" id="5Y3R">
    <property type="method" value="EM"/>
    <property type="resolution" value="6.60 A"/>
    <property type="chains" value="C=10-4128"/>
</dbReference>
<dbReference type="PDB" id="6ZFP">
    <property type="method" value="EM"/>
    <property type="resolution" value="3.24 A"/>
    <property type="chains" value="A=1-4128"/>
</dbReference>
<dbReference type="PDB" id="6ZH2">
    <property type="method" value="EM"/>
    <property type="resolution" value="3.92 A"/>
    <property type="chains" value="A=1-4128"/>
</dbReference>
<dbReference type="PDB" id="6ZH4">
    <property type="method" value="EM"/>
    <property type="resolution" value="3.62 A"/>
    <property type="chains" value="A=1-4128"/>
</dbReference>
<dbReference type="PDB" id="6ZH6">
    <property type="method" value="EM"/>
    <property type="resolution" value="3.93 A"/>
    <property type="chains" value="A=1-4128"/>
</dbReference>
<dbReference type="PDB" id="6ZH8">
    <property type="method" value="EM"/>
    <property type="resolution" value="4.14 A"/>
    <property type="chains" value="A=1-4128"/>
</dbReference>
<dbReference type="PDB" id="6ZHA">
    <property type="method" value="EM"/>
    <property type="resolution" value="3.91 A"/>
    <property type="chains" value="A=1-4128"/>
</dbReference>
<dbReference type="PDB" id="6ZHE">
    <property type="method" value="EM"/>
    <property type="resolution" value="7.24 A"/>
    <property type="chains" value="A/F=1-4128"/>
</dbReference>
<dbReference type="PDB" id="7K0Y">
    <property type="method" value="EM"/>
    <property type="resolution" value="3.70 A"/>
    <property type="chains" value="A=1-4128"/>
</dbReference>
<dbReference type="PDB" id="7K10">
    <property type="method" value="EM"/>
    <property type="resolution" value="3.30 A"/>
    <property type="chains" value="A=1-4128"/>
</dbReference>
<dbReference type="PDB" id="7K11">
    <property type="method" value="EM"/>
    <property type="resolution" value="3.21 A"/>
    <property type="chains" value="A=1-4128"/>
</dbReference>
<dbReference type="PDB" id="7K19">
    <property type="method" value="EM"/>
    <property type="resolution" value="4.30 A"/>
    <property type="chains" value="A=1-4128"/>
</dbReference>
<dbReference type="PDB" id="7K1B">
    <property type="method" value="EM"/>
    <property type="resolution" value="4.30 A"/>
    <property type="chains" value="A=1-4128"/>
</dbReference>
<dbReference type="PDB" id="7K1J">
    <property type="method" value="EM"/>
    <property type="resolution" value="3.90 A"/>
    <property type="chains" value="A=1-4128"/>
</dbReference>
<dbReference type="PDB" id="7K1K">
    <property type="method" value="EM"/>
    <property type="resolution" value="4.10 A"/>
    <property type="chains" value="A=1-4128"/>
</dbReference>
<dbReference type="PDB" id="7K1N">
    <property type="method" value="EM"/>
    <property type="resolution" value="3.90 A"/>
    <property type="chains" value="A=1-4128"/>
</dbReference>
<dbReference type="PDB" id="7LT3">
    <property type="method" value="EM"/>
    <property type="resolution" value="4.60 A"/>
    <property type="chains" value="C/L=1-4128"/>
</dbReference>
<dbReference type="PDB" id="7NFC">
    <property type="method" value="EM"/>
    <property type="resolution" value="4.14 A"/>
    <property type="chains" value="A/F=1-4128"/>
</dbReference>
<dbReference type="PDB" id="7NFE">
    <property type="method" value="EM"/>
    <property type="resolution" value="4.29 A"/>
    <property type="chains" value="A=1-4128"/>
</dbReference>
<dbReference type="PDB" id="7OTM">
    <property type="method" value="EM"/>
    <property type="resolution" value="3.33 A"/>
    <property type="chains" value="A=1-4128"/>
</dbReference>
<dbReference type="PDB" id="7OTP">
    <property type="method" value="EM"/>
    <property type="resolution" value="3.40 A"/>
    <property type="chains" value="A=1-4128"/>
</dbReference>
<dbReference type="PDB" id="7OTV">
    <property type="method" value="EM"/>
    <property type="resolution" value="3.24 A"/>
    <property type="chains" value="A=1-4128"/>
</dbReference>
<dbReference type="PDB" id="7OTW">
    <property type="method" value="EM"/>
    <property type="resolution" value="2.99 A"/>
    <property type="chains" value="A=1-4128"/>
</dbReference>
<dbReference type="PDB" id="7OTY">
    <property type="method" value="EM"/>
    <property type="resolution" value="2.96 A"/>
    <property type="chains" value="A=1-4128"/>
</dbReference>
<dbReference type="PDB" id="7SGL">
    <property type="method" value="EM"/>
    <property type="resolution" value="3.00 A"/>
    <property type="chains" value="A=1-4128"/>
</dbReference>
<dbReference type="PDB" id="7SU3">
    <property type="method" value="EM"/>
    <property type="resolution" value="3.30 A"/>
    <property type="chains" value="A=1-4128"/>
</dbReference>
<dbReference type="PDB" id="7SUD">
    <property type="method" value="EM"/>
    <property type="resolution" value="3.60 A"/>
    <property type="chains" value="A=1-4128"/>
</dbReference>
<dbReference type="PDB" id="7TYR">
    <property type="method" value="EM"/>
    <property type="resolution" value="3.33 A"/>
    <property type="chains" value="A=1-4128"/>
</dbReference>
<dbReference type="PDB" id="7Z87">
    <property type="method" value="EM"/>
    <property type="resolution" value="2.91 A"/>
    <property type="chains" value="A=1-4128"/>
</dbReference>
<dbReference type="PDB" id="7Z88">
    <property type="method" value="EM"/>
    <property type="resolution" value="3.33 A"/>
    <property type="chains" value="A=1-4128"/>
</dbReference>
<dbReference type="PDB" id="8BH3">
    <property type="method" value="EM"/>
    <property type="resolution" value="4.55 A"/>
    <property type="chains" value="A/S=1-4128"/>
</dbReference>
<dbReference type="PDB" id="8BHV">
    <property type="method" value="EM"/>
    <property type="resolution" value="4.51 A"/>
    <property type="chains" value="A/F=1-4128"/>
</dbReference>
<dbReference type="PDB" id="8BHY">
    <property type="method" value="EM"/>
    <property type="resolution" value="5.33 A"/>
    <property type="chains" value="A/S=1-4128"/>
</dbReference>
<dbReference type="PDB" id="8BOT">
    <property type="method" value="EM"/>
    <property type="resolution" value="7.76 A"/>
    <property type="chains" value="A/F/S=1-4128"/>
</dbReference>
<dbReference type="PDB" id="8EZ9">
    <property type="method" value="EM"/>
    <property type="resolution" value="5.67 A"/>
    <property type="chains" value="C/L=1-4128"/>
</dbReference>
<dbReference type="PDB" id="8EZA">
    <property type="method" value="EM"/>
    <property type="resolution" value="4.39 A"/>
    <property type="chains" value="C/L=1-4128"/>
</dbReference>
<dbReference type="PDB" id="8EZB">
    <property type="method" value="EM"/>
    <property type="resolution" value="8.90 A"/>
    <property type="chains" value="C/L=1-4128"/>
</dbReference>
<dbReference type="PDB" id="8RD4">
    <property type="method" value="EM"/>
    <property type="resolution" value="3.58 A"/>
    <property type="chains" value="A=1-4128"/>
</dbReference>
<dbReference type="PDBsum" id="5LUQ"/>
<dbReference type="PDBsum" id="5W1R"/>
<dbReference type="PDBsum" id="5Y3R"/>
<dbReference type="PDBsum" id="6ZFP"/>
<dbReference type="PDBsum" id="6ZH2"/>
<dbReference type="PDBsum" id="6ZH4"/>
<dbReference type="PDBsum" id="6ZH6"/>
<dbReference type="PDBsum" id="6ZH8"/>
<dbReference type="PDBsum" id="6ZHA"/>
<dbReference type="PDBsum" id="6ZHE"/>
<dbReference type="PDBsum" id="7K0Y"/>
<dbReference type="PDBsum" id="7K10"/>
<dbReference type="PDBsum" id="7K11"/>
<dbReference type="PDBsum" id="7K19"/>
<dbReference type="PDBsum" id="7K1B"/>
<dbReference type="PDBsum" id="7K1J"/>
<dbReference type="PDBsum" id="7K1K"/>
<dbReference type="PDBsum" id="7K1N"/>
<dbReference type="PDBsum" id="7LT3"/>
<dbReference type="PDBsum" id="7NFC"/>
<dbReference type="PDBsum" id="7NFE"/>
<dbReference type="PDBsum" id="7OTM"/>
<dbReference type="PDBsum" id="7OTP"/>
<dbReference type="PDBsum" id="7OTV"/>
<dbReference type="PDBsum" id="7OTW"/>
<dbReference type="PDBsum" id="7OTY"/>
<dbReference type="PDBsum" id="7SGL"/>
<dbReference type="PDBsum" id="7SU3"/>
<dbReference type="PDBsum" id="7SUD"/>
<dbReference type="PDBsum" id="7TYR"/>
<dbReference type="PDBsum" id="7Z87"/>
<dbReference type="PDBsum" id="7Z88"/>
<dbReference type="PDBsum" id="8BH3"/>
<dbReference type="PDBsum" id="8BHV"/>
<dbReference type="PDBsum" id="8BHY"/>
<dbReference type="PDBsum" id="8BOT"/>
<dbReference type="PDBsum" id="8EZ9"/>
<dbReference type="PDBsum" id="8EZA"/>
<dbReference type="PDBsum" id="8EZB"/>
<dbReference type="PDBsum" id="8RD4"/>
<dbReference type="EMDB" id="EMD-11185"/>
<dbReference type="EMDB" id="EMD-11211"/>
<dbReference type="EMDB" id="EMD-11213"/>
<dbReference type="EMDB" id="EMD-11215"/>
<dbReference type="EMDB" id="EMD-11216"/>
<dbReference type="EMDB" id="EMD-11217"/>
<dbReference type="EMDB" id="EMD-11219"/>
<dbReference type="EMDB" id="EMD-12299"/>
<dbReference type="EMDB" id="EMD-12301"/>
<dbReference type="EMDB" id="EMD-13062"/>
<dbReference type="EMDB" id="EMD-13064"/>
<dbReference type="EMDB" id="EMD-13067"/>
<dbReference type="EMDB" id="EMD-13068"/>
<dbReference type="EMDB" id="EMD-13069"/>
<dbReference type="EMDB" id="EMD-14545"/>
<dbReference type="EMDB" id="EMD-14546"/>
<dbReference type="EMDB" id="EMD-16044"/>
<dbReference type="EMDB" id="EMD-16070"/>
<dbReference type="EMDB" id="EMD-16074"/>
<dbReference type="EMDB" id="EMD-16145"/>
<dbReference type="EMDB" id="EMD-19065"/>
<dbReference type="EMDB" id="EMD-22618"/>
<dbReference type="EMDB" id="EMD-22619"/>
<dbReference type="EMDB" id="EMD-22620"/>
<dbReference type="EMDB" id="EMD-22622"/>
<dbReference type="EMDB" id="EMD-22623"/>
<dbReference type="EMDB" id="EMD-22624"/>
<dbReference type="EMDB" id="EMD-22625"/>
<dbReference type="EMDB" id="EMD-22626"/>
<dbReference type="EMDB" id="EMD-23510"/>
<dbReference type="EMDB" id="EMD-23511"/>
<dbReference type="EMDB" id="EMD-25113"/>
<dbReference type="EMDB" id="EMD-25114"/>
<dbReference type="EMDB" id="EMD-25115"/>
<dbReference type="EMDB" id="EMD-25439"/>
<dbReference type="EMDB" id="EMD-25440"/>
<dbReference type="EMDB" id="EMD-26192"/>
<dbReference type="EMDB" id="EMD-26198"/>
<dbReference type="EMDB" id="EMD-28731"/>
<dbReference type="EMDB" id="EMD-28732"/>
<dbReference type="EMDB" id="EMD-28733"/>
<dbReference type="EMDB" id="EMD-28734"/>
<dbReference type="EMDB" id="EMD-28735"/>
<dbReference type="EMDB" id="EMD-28737"/>
<dbReference type="EMDB" id="EMD-28738"/>
<dbReference type="EMDB" id="EMD-5831"/>
<dbReference type="EMDB" id="EMD-5832"/>
<dbReference type="EMDB" id="EMD-5833"/>
<dbReference type="EMDB" id="EMD-6803"/>
<dbReference type="EMDB" id="EMD-8751"/>
<dbReference type="EMDB" id="EMD-8752"/>
<dbReference type="SASBDB" id="P78527"/>
<dbReference type="SMR" id="P78527"/>
<dbReference type="BioGRID" id="111577">
    <property type="interactions" value="754"/>
</dbReference>
<dbReference type="ComplexPortal" id="CPX-3403">
    <property type="entry name" value="DNA-dependent protein kinase complex"/>
</dbReference>
<dbReference type="CORUM" id="P78527"/>
<dbReference type="DIP" id="DIP-24186N"/>
<dbReference type="ELM" id="P78527"/>
<dbReference type="FunCoup" id="P78527">
    <property type="interactions" value="3427"/>
</dbReference>
<dbReference type="IntAct" id="P78527">
    <property type="interactions" value="284"/>
</dbReference>
<dbReference type="MINT" id="P78527"/>
<dbReference type="STRING" id="9606.ENSP00000313420"/>
<dbReference type="BindingDB" id="P78527"/>
<dbReference type="ChEMBL" id="CHEMBL3142"/>
<dbReference type="DrugBank" id="DB07453">
    <property type="generic name" value="alpha-Naphthoflavone"/>
</dbReference>
<dbReference type="DrugBank" id="DB16834">
    <property type="generic name" value="AZD-7648"/>
</dbReference>
<dbReference type="DrugBank" id="DB00201">
    <property type="generic name" value="Caffeine"/>
</dbReference>
<dbReference type="DrugBank" id="DB16252">
    <property type="generic name" value="Nedisertib"/>
</dbReference>
<dbReference type="DrugBank" id="DB17047">
    <property type="generic name" value="PIK-75"/>
</dbReference>
<dbReference type="DrugBank" id="DB08052">
    <property type="generic name" value="PP-121"/>
</dbReference>
<dbReference type="DrugBank" id="DB05210">
    <property type="generic name" value="SF1126"/>
</dbReference>
<dbReference type="DrugCentral" id="P78527"/>
<dbReference type="GuidetoPHARMACOLOGY" id="2800"/>
<dbReference type="CarbonylDB" id="P78527"/>
<dbReference type="GlyConnect" id="1183">
    <property type="glycosylation" value="1 N-Linked glycan (1 site)"/>
</dbReference>
<dbReference type="GlyCosmos" id="P78527">
    <property type="glycosylation" value="9 sites, 3 glycans"/>
</dbReference>
<dbReference type="GlyGen" id="P78527">
    <property type="glycosylation" value="18 sites, 5 N-linked glycans (8 sites), 2 O-linked glycans (9 sites)"/>
</dbReference>
<dbReference type="iPTMnet" id="P78527"/>
<dbReference type="MetOSite" id="P78527"/>
<dbReference type="PhosphoSitePlus" id="P78527"/>
<dbReference type="SwissPalm" id="P78527"/>
<dbReference type="BioMuta" id="PRKDC"/>
<dbReference type="DMDM" id="38258929"/>
<dbReference type="CPTAC" id="CPTAC-2931"/>
<dbReference type="jPOST" id="P78527"/>
<dbReference type="MassIVE" id="P78527"/>
<dbReference type="PaxDb" id="9606-ENSP00000313420"/>
<dbReference type="PeptideAtlas" id="P78527"/>
<dbReference type="ProteomicsDB" id="57634">
    <molecule id="P78527-1"/>
</dbReference>
<dbReference type="ProteomicsDB" id="57635">
    <molecule id="P78527-2"/>
</dbReference>
<dbReference type="Pumba" id="P78527"/>
<dbReference type="Antibodypedia" id="52433">
    <property type="antibodies" value="1571 antibodies from 44 providers"/>
</dbReference>
<dbReference type="DNASU" id="5591"/>
<dbReference type="Ensembl" id="ENST00000314191.7">
    <molecule id="P78527-1"/>
    <property type="protein sequence ID" value="ENSP00000313420.3"/>
    <property type="gene ID" value="ENSG00000253729.9"/>
</dbReference>
<dbReference type="Ensembl" id="ENST00000338368.7">
    <molecule id="P78527-2"/>
    <property type="protein sequence ID" value="ENSP00000345182.4"/>
    <property type="gene ID" value="ENSG00000253729.9"/>
</dbReference>
<dbReference type="GeneID" id="5591"/>
<dbReference type="KEGG" id="hsa:5591"/>
<dbReference type="MANE-Select" id="ENST00000314191.7">
    <property type="protein sequence ID" value="ENSP00000313420.3"/>
    <property type="RefSeq nucleotide sequence ID" value="NM_006904.7"/>
    <property type="RefSeq protein sequence ID" value="NP_008835.5"/>
</dbReference>
<dbReference type="UCSC" id="uc033bkh.1">
    <molecule id="P78527-1"/>
    <property type="organism name" value="human"/>
</dbReference>
<dbReference type="AGR" id="HGNC:9413"/>
<dbReference type="CTD" id="5591"/>
<dbReference type="DisGeNET" id="5591"/>
<dbReference type="GeneCards" id="PRKDC"/>
<dbReference type="HGNC" id="HGNC:9413">
    <property type="gene designation" value="PRKDC"/>
</dbReference>
<dbReference type="HPA" id="ENSG00000253729">
    <property type="expression patterns" value="Low tissue specificity"/>
</dbReference>
<dbReference type="MalaCards" id="PRKDC"/>
<dbReference type="MIM" id="600899">
    <property type="type" value="gene"/>
</dbReference>
<dbReference type="MIM" id="615966">
    <property type="type" value="phenotype"/>
</dbReference>
<dbReference type="neXtProt" id="NX_P78527"/>
<dbReference type="OpenTargets" id="ENSG00000253729"/>
<dbReference type="Orphanet" id="317425">
    <property type="disease" value="Severe combined immunodeficiency due to DNA-PKcs deficiency"/>
</dbReference>
<dbReference type="PharmGKB" id="PA33776"/>
<dbReference type="VEuPathDB" id="HostDB:ENSG00000253729"/>
<dbReference type="eggNOG" id="KOG0891">
    <property type="taxonomic scope" value="Eukaryota"/>
</dbReference>
<dbReference type="GeneTree" id="ENSGT00940000155633"/>
<dbReference type="HOGENOM" id="CLU_224534_0_0_1"/>
<dbReference type="InParanoid" id="P78527"/>
<dbReference type="OMA" id="PSPMCRE"/>
<dbReference type="OrthoDB" id="431717at2759"/>
<dbReference type="PAN-GO" id="P78527">
    <property type="GO annotations" value="7 GO annotations based on evolutionary models"/>
</dbReference>
<dbReference type="PhylomeDB" id="P78527"/>
<dbReference type="TreeFam" id="TF324494"/>
<dbReference type="BRENDA" id="2.7.11.1">
    <property type="organism ID" value="2681"/>
</dbReference>
<dbReference type="PathwayCommons" id="P78527"/>
<dbReference type="Reactome" id="R-HSA-1834949">
    <property type="pathway name" value="Cytosolic sensors of pathogen-associated DNA"/>
</dbReference>
<dbReference type="Reactome" id="R-HSA-3270619">
    <property type="pathway name" value="IRF3-mediated induction of type I IFN"/>
</dbReference>
<dbReference type="Reactome" id="R-HSA-5693571">
    <property type="pathway name" value="Nonhomologous End-Joining (NHEJ)"/>
</dbReference>
<dbReference type="Reactome" id="R-HSA-8866654">
    <property type="pathway name" value="E3 ubiquitin ligases ubiquitinate target proteins"/>
</dbReference>
<dbReference type="SignaLink" id="P78527"/>
<dbReference type="SIGNOR" id="P78527"/>
<dbReference type="BioGRID-ORCS" id="5591">
    <property type="hits" value="69 hits in 380 CRISPR screens"/>
</dbReference>
<dbReference type="CD-CODE" id="8C2F96ED">
    <property type="entry name" value="Centrosome"/>
</dbReference>
<dbReference type="CD-CODE" id="91857CE7">
    <property type="entry name" value="Nucleolus"/>
</dbReference>
<dbReference type="CD-CODE" id="A0DCDA94">
    <property type="entry name" value="DNA damage foci"/>
</dbReference>
<dbReference type="CD-CODE" id="DEE660B4">
    <property type="entry name" value="Stress granule"/>
</dbReference>
<dbReference type="ChiTaRS" id="PRKDC">
    <property type="organism name" value="human"/>
</dbReference>
<dbReference type="GeneWiki" id="DNA-PKcs"/>
<dbReference type="GenomeRNAi" id="5591"/>
<dbReference type="Pharos" id="P78527">
    <property type="development level" value="Tchem"/>
</dbReference>
<dbReference type="PRO" id="PR:P78527"/>
<dbReference type="Proteomes" id="UP000005640">
    <property type="component" value="Chromosome 8"/>
</dbReference>
<dbReference type="RNAct" id="P78527">
    <property type="molecule type" value="protein"/>
</dbReference>
<dbReference type="Bgee" id="ENSG00000253729">
    <property type="expression patterns" value="Expressed in ventricular zone and 206 other cell types or tissues"/>
</dbReference>
<dbReference type="ExpressionAtlas" id="P78527">
    <property type="expression patterns" value="baseline and differential"/>
</dbReference>
<dbReference type="GO" id="GO:0000785">
    <property type="term" value="C:chromatin"/>
    <property type="evidence" value="ECO:0000314"/>
    <property type="project" value="UniProt"/>
</dbReference>
<dbReference type="GO" id="GO:0000781">
    <property type="term" value="C:chromosome, telomeric region"/>
    <property type="evidence" value="ECO:0007005"/>
    <property type="project" value="BHF-UCL"/>
</dbReference>
<dbReference type="GO" id="GO:0005829">
    <property type="term" value="C:cytosol"/>
    <property type="evidence" value="ECO:0000304"/>
    <property type="project" value="Reactome"/>
</dbReference>
<dbReference type="GO" id="GO:0070418">
    <property type="term" value="C:DNA-dependent protein kinase complex"/>
    <property type="evidence" value="ECO:0000353"/>
    <property type="project" value="ComplexPortal"/>
</dbReference>
<dbReference type="GO" id="GO:0005958">
    <property type="term" value="C:DNA-dependent protein kinase-DNA ligase 4 complex"/>
    <property type="evidence" value="ECO:0000314"/>
    <property type="project" value="UniProtKB"/>
</dbReference>
<dbReference type="GO" id="GO:0016020">
    <property type="term" value="C:membrane"/>
    <property type="evidence" value="ECO:0007005"/>
    <property type="project" value="UniProtKB"/>
</dbReference>
<dbReference type="GO" id="GO:0070419">
    <property type="term" value="C:nonhomologous end joining complex"/>
    <property type="evidence" value="ECO:0000314"/>
    <property type="project" value="UniProtKB"/>
</dbReference>
<dbReference type="GO" id="GO:0005730">
    <property type="term" value="C:nucleolus"/>
    <property type="evidence" value="ECO:0000314"/>
    <property type="project" value="UniProtKB"/>
</dbReference>
<dbReference type="GO" id="GO:0005654">
    <property type="term" value="C:nucleoplasm"/>
    <property type="evidence" value="ECO:0000314"/>
    <property type="project" value="HPA"/>
</dbReference>
<dbReference type="GO" id="GO:0005634">
    <property type="term" value="C:nucleus"/>
    <property type="evidence" value="ECO:0000314"/>
    <property type="project" value="UniProtKB"/>
</dbReference>
<dbReference type="GO" id="GO:0032991">
    <property type="term" value="C:protein-containing complex"/>
    <property type="evidence" value="ECO:0000315"/>
    <property type="project" value="CAFA"/>
</dbReference>
<dbReference type="GO" id="GO:0032993">
    <property type="term" value="C:protein-DNA complex"/>
    <property type="evidence" value="ECO:0000314"/>
    <property type="project" value="CAFA"/>
</dbReference>
<dbReference type="GO" id="GO:0032040">
    <property type="term" value="C:small-subunit processome"/>
    <property type="evidence" value="ECO:0000314"/>
    <property type="project" value="UniProtKB"/>
</dbReference>
<dbReference type="GO" id="GO:0005667">
    <property type="term" value="C:transcription regulator complex"/>
    <property type="evidence" value="ECO:0000314"/>
    <property type="project" value="BHF-UCL"/>
</dbReference>
<dbReference type="GO" id="GO:0005524">
    <property type="term" value="F:ATP binding"/>
    <property type="evidence" value="ECO:0007669"/>
    <property type="project" value="UniProtKB-KW"/>
</dbReference>
<dbReference type="GO" id="GO:0004677">
    <property type="term" value="F:DNA-dependent protein kinase activity"/>
    <property type="evidence" value="ECO:0000314"/>
    <property type="project" value="MGI"/>
</dbReference>
<dbReference type="GO" id="GO:0003690">
    <property type="term" value="F:double-stranded DNA binding"/>
    <property type="evidence" value="ECO:0000314"/>
    <property type="project" value="CAFA"/>
</dbReference>
<dbReference type="GO" id="GO:0019899">
    <property type="term" value="F:enzyme binding"/>
    <property type="evidence" value="ECO:0007669"/>
    <property type="project" value="Ensembl"/>
</dbReference>
<dbReference type="GO" id="GO:0035979">
    <property type="term" value="F:histone H2AXS139 kinase activity"/>
    <property type="evidence" value="ECO:0000314"/>
    <property type="project" value="UniProtKB"/>
</dbReference>
<dbReference type="GO" id="GO:0019904">
    <property type="term" value="F:protein domain specific binding"/>
    <property type="evidence" value="ECO:0000353"/>
    <property type="project" value="CAFA"/>
</dbReference>
<dbReference type="GO" id="GO:0004672">
    <property type="term" value="F:protein kinase activity"/>
    <property type="evidence" value="ECO:0000314"/>
    <property type="project" value="CACAO"/>
</dbReference>
<dbReference type="GO" id="GO:0106310">
    <property type="term" value="F:protein serine kinase activity"/>
    <property type="evidence" value="ECO:0007669"/>
    <property type="project" value="RHEA"/>
</dbReference>
<dbReference type="GO" id="GO:0004674">
    <property type="term" value="F:protein serine/threonine kinase activity"/>
    <property type="evidence" value="ECO:0000314"/>
    <property type="project" value="UniProtKB"/>
</dbReference>
<dbReference type="GO" id="GO:0003723">
    <property type="term" value="F:RNA binding"/>
    <property type="evidence" value="ECO:0007005"/>
    <property type="project" value="UniProtKB"/>
</dbReference>
<dbReference type="GO" id="GO:0061629">
    <property type="term" value="F:RNA polymerase II-specific DNA-binding transcription factor binding"/>
    <property type="evidence" value="ECO:0000353"/>
    <property type="project" value="BHF-UCL"/>
</dbReference>
<dbReference type="GO" id="GO:0034511">
    <property type="term" value="F:U3 snoRNA binding"/>
    <property type="evidence" value="ECO:0000314"/>
    <property type="project" value="UniProtKB"/>
</dbReference>
<dbReference type="GO" id="GO:0002218">
    <property type="term" value="P:activation of innate immune response"/>
    <property type="evidence" value="ECO:0000314"/>
    <property type="project" value="UniProtKB"/>
</dbReference>
<dbReference type="GO" id="GO:0002326">
    <property type="term" value="P:B cell lineage commitment"/>
    <property type="evidence" value="ECO:0007669"/>
    <property type="project" value="Ensembl"/>
</dbReference>
<dbReference type="GO" id="GO:0007420">
    <property type="term" value="P:brain development"/>
    <property type="evidence" value="ECO:0007669"/>
    <property type="project" value="Ensembl"/>
</dbReference>
<dbReference type="GO" id="GO:0032869">
    <property type="term" value="P:cellular response to insulin stimulus"/>
    <property type="evidence" value="ECO:0000315"/>
    <property type="project" value="BHF-UCL"/>
</dbReference>
<dbReference type="GO" id="GO:0006974">
    <property type="term" value="P:DNA damage response"/>
    <property type="evidence" value="ECO:0000314"/>
    <property type="project" value="UniProtKB"/>
</dbReference>
<dbReference type="GO" id="GO:0006302">
    <property type="term" value="P:double-strand break repair"/>
    <property type="evidence" value="ECO:0000315"/>
    <property type="project" value="BHF-UCL"/>
</dbReference>
<dbReference type="GO" id="GO:0097681">
    <property type="term" value="P:double-strand break repair via alternative nonhomologous end joining"/>
    <property type="evidence" value="ECO:0000304"/>
    <property type="project" value="BHF-UCL"/>
</dbReference>
<dbReference type="GO" id="GO:0006303">
    <property type="term" value="P:double-strand break repair via nonhomologous end joining"/>
    <property type="evidence" value="ECO:0000304"/>
    <property type="project" value="Reactome"/>
</dbReference>
<dbReference type="GO" id="GO:0035234">
    <property type="term" value="P:ectopic germ cell programmed cell death"/>
    <property type="evidence" value="ECO:0007669"/>
    <property type="project" value="Ensembl"/>
</dbReference>
<dbReference type="GO" id="GO:0007507">
    <property type="term" value="P:heart development"/>
    <property type="evidence" value="ECO:0007669"/>
    <property type="project" value="Ensembl"/>
</dbReference>
<dbReference type="GO" id="GO:0002327">
    <property type="term" value="P:immature B cell differentiation"/>
    <property type="evidence" value="ECO:0007669"/>
    <property type="project" value="Ensembl"/>
</dbReference>
<dbReference type="GO" id="GO:0033152">
    <property type="term" value="P:immunoglobulin V(D)J recombination"/>
    <property type="evidence" value="ECO:0000318"/>
    <property type="project" value="GO_Central"/>
</dbReference>
<dbReference type="GO" id="GO:0045087">
    <property type="term" value="P:innate immune response"/>
    <property type="evidence" value="ECO:0007669"/>
    <property type="project" value="UniProtKB-KW"/>
</dbReference>
<dbReference type="GO" id="GO:0008630">
    <property type="term" value="P:intrinsic apoptotic signaling pathway in response to DNA damage"/>
    <property type="evidence" value="ECO:0000318"/>
    <property type="project" value="GO_Central"/>
</dbReference>
<dbReference type="GO" id="GO:0000460">
    <property type="term" value="P:maturation of 5.8S rRNA"/>
    <property type="evidence" value="ECO:0000314"/>
    <property type="project" value="UniProtKB"/>
</dbReference>
<dbReference type="GO" id="GO:0031571">
    <property type="term" value="P:mitotic G1 DNA damage checkpoint signaling"/>
    <property type="evidence" value="ECO:0000315"/>
    <property type="project" value="UniProtKB"/>
</dbReference>
<dbReference type="GO" id="GO:0043066">
    <property type="term" value="P:negative regulation of apoptotic process"/>
    <property type="evidence" value="ECO:0000315"/>
    <property type="project" value="CACAO"/>
</dbReference>
<dbReference type="GO" id="GO:0160049">
    <property type="term" value="P:negative regulation of cGAS/STING signaling pathway"/>
    <property type="evidence" value="ECO:0000314"/>
    <property type="project" value="UniProt"/>
</dbReference>
<dbReference type="GO" id="GO:0001933">
    <property type="term" value="P:negative regulation of protein phosphorylation"/>
    <property type="evidence" value="ECO:0000250"/>
    <property type="project" value="UniProtKB"/>
</dbReference>
<dbReference type="GO" id="GO:0018105">
    <property type="term" value="P:peptidyl-serine phosphorylation"/>
    <property type="evidence" value="ECO:0000314"/>
    <property type="project" value="UniProtKB"/>
</dbReference>
<dbReference type="GO" id="GO:0018107">
    <property type="term" value="P:peptidyl-threonine phosphorylation"/>
    <property type="evidence" value="ECO:0000314"/>
    <property type="project" value="UniProtKB"/>
</dbReference>
<dbReference type="GO" id="GO:0043065">
    <property type="term" value="P:positive regulation of apoptotic process"/>
    <property type="evidence" value="ECO:0007669"/>
    <property type="project" value="Ensembl"/>
</dbReference>
<dbReference type="GO" id="GO:2001034">
    <property type="term" value="P:positive regulation of double-strand break repair via nonhomologous end joining"/>
    <property type="evidence" value="ECO:0000314"/>
    <property type="project" value="UniProtKB"/>
</dbReference>
<dbReference type="GO" id="GO:0045648">
    <property type="term" value="P:positive regulation of erythrocyte differentiation"/>
    <property type="evidence" value="ECO:0000250"/>
    <property type="project" value="UniProtKB"/>
</dbReference>
<dbReference type="GO" id="GO:0045621">
    <property type="term" value="P:positive regulation of lymphocyte differentiation"/>
    <property type="evidence" value="ECO:0000250"/>
    <property type="project" value="UniProtKB"/>
</dbReference>
<dbReference type="GO" id="GO:1905221">
    <property type="term" value="P:positive regulation of platelet formation"/>
    <property type="evidence" value="ECO:0000250"/>
    <property type="project" value="UniProtKB"/>
</dbReference>
<dbReference type="GO" id="GO:0045944">
    <property type="term" value="P:positive regulation of transcription by RNA polymerase II"/>
    <property type="evidence" value="ECO:0000315"/>
    <property type="project" value="BHF-UCL"/>
</dbReference>
<dbReference type="GO" id="GO:0045727">
    <property type="term" value="P:positive regulation of translation"/>
    <property type="evidence" value="ECO:0000250"/>
    <property type="project" value="UniProtKB"/>
</dbReference>
<dbReference type="GO" id="GO:0002328">
    <property type="term" value="P:pro-B cell differentiation"/>
    <property type="evidence" value="ECO:0007669"/>
    <property type="project" value="Ensembl"/>
</dbReference>
<dbReference type="GO" id="GO:0031648">
    <property type="term" value="P:protein destabilization"/>
    <property type="evidence" value="ECO:0007669"/>
    <property type="project" value="Ensembl"/>
</dbReference>
<dbReference type="GO" id="GO:0036211">
    <property type="term" value="P:protein modification process"/>
    <property type="evidence" value="ECO:0000304"/>
    <property type="project" value="ProtInc"/>
</dbReference>
<dbReference type="GO" id="GO:0006468">
    <property type="term" value="P:protein phosphorylation"/>
    <property type="evidence" value="ECO:0000314"/>
    <property type="project" value="UniProtKB"/>
</dbReference>
<dbReference type="GO" id="GO:0042752">
    <property type="term" value="P:regulation of circadian rhythm"/>
    <property type="evidence" value="ECO:0000250"/>
    <property type="project" value="UniProtKB"/>
</dbReference>
<dbReference type="GO" id="GO:0050678">
    <property type="term" value="P:regulation of epithelial cell proliferation"/>
    <property type="evidence" value="ECO:0000315"/>
    <property type="project" value="BHF-UCL"/>
</dbReference>
<dbReference type="GO" id="GO:1902036">
    <property type="term" value="P:regulation of hematopoietic stem cell differentiation"/>
    <property type="evidence" value="ECO:0000250"/>
    <property type="project" value="UniProtKB"/>
</dbReference>
<dbReference type="GO" id="GO:0048660">
    <property type="term" value="P:regulation of smooth muscle cell proliferation"/>
    <property type="evidence" value="ECO:0000315"/>
    <property type="project" value="UniProtKB"/>
</dbReference>
<dbReference type="GO" id="GO:0010332">
    <property type="term" value="P:response to gamma radiation"/>
    <property type="evidence" value="ECO:0007669"/>
    <property type="project" value="Ensembl"/>
</dbReference>
<dbReference type="GO" id="GO:0048511">
    <property type="term" value="P:rhythmic process"/>
    <property type="evidence" value="ECO:0007669"/>
    <property type="project" value="UniProtKB-KW"/>
</dbReference>
<dbReference type="GO" id="GO:0034462">
    <property type="term" value="P:small-subunit processome assembly"/>
    <property type="evidence" value="ECO:0000314"/>
    <property type="project" value="UniProtKB"/>
</dbReference>
<dbReference type="GO" id="GO:0001756">
    <property type="term" value="P:somitogenesis"/>
    <property type="evidence" value="ECO:0007669"/>
    <property type="project" value="Ensembl"/>
</dbReference>
<dbReference type="GO" id="GO:0033077">
    <property type="term" value="P:T cell differentiation in thymus"/>
    <property type="evidence" value="ECO:0007669"/>
    <property type="project" value="Ensembl"/>
</dbReference>
<dbReference type="GO" id="GO:0002360">
    <property type="term" value="P:T cell lineage commitment"/>
    <property type="evidence" value="ECO:0007669"/>
    <property type="project" value="Ensembl"/>
</dbReference>
<dbReference type="GO" id="GO:0033153">
    <property type="term" value="P:T cell receptor V(D)J recombination"/>
    <property type="evidence" value="ECO:0007669"/>
    <property type="project" value="Ensembl"/>
</dbReference>
<dbReference type="GO" id="GO:0016233">
    <property type="term" value="P:telomere capping"/>
    <property type="evidence" value="ECO:0000315"/>
    <property type="project" value="BHF-UCL"/>
</dbReference>
<dbReference type="GO" id="GO:0000723">
    <property type="term" value="P:telomere maintenance"/>
    <property type="evidence" value="ECO:0000318"/>
    <property type="project" value="GO_Central"/>
</dbReference>
<dbReference type="CDD" id="cd05172">
    <property type="entry name" value="PIKKc_DNA-PK"/>
    <property type="match status" value="1"/>
</dbReference>
<dbReference type="FunFam" id="1.10.1070.11:FF:000018">
    <property type="entry name" value="DNA-dependent protein kinase catalytic subunit"/>
    <property type="match status" value="1"/>
</dbReference>
<dbReference type="FunFam" id="1.25.10.10:FF:000380">
    <property type="entry name" value="DNA-dependent protein kinase catalytic subunit"/>
    <property type="match status" value="1"/>
</dbReference>
<dbReference type="FunFam" id="3.30.1010.10:FF:000013">
    <property type="entry name" value="Protein kinase, DNA-activated, catalytic subunit"/>
    <property type="match status" value="1"/>
</dbReference>
<dbReference type="Gene3D" id="1.25.10.10">
    <property type="entry name" value="Leucine-rich Repeat Variant"/>
    <property type="match status" value="1"/>
</dbReference>
<dbReference type="Gene3D" id="1.10.1070.11">
    <property type="entry name" value="Phosphatidylinositol 3-/4-kinase, catalytic domain"/>
    <property type="match status" value="1"/>
</dbReference>
<dbReference type="Gene3D" id="3.30.1010.10">
    <property type="entry name" value="Phosphatidylinositol 3-kinase Catalytic Subunit, Chain A, domain 4"/>
    <property type="match status" value="1"/>
</dbReference>
<dbReference type="InterPro" id="IPR011989">
    <property type="entry name" value="ARM-like"/>
</dbReference>
<dbReference type="InterPro" id="IPR016024">
    <property type="entry name" value="ARM-type_fold"/>
</dbReference>
<dbReference type="InterPro" id="IPR050517">
    <property type="entry name" value="DDR_Repair_Kinase"/>
</dbReference>
<dbReference type="InterPro" id="IPR037706">
    <property type="entry name" value="DNA-PK_dom"/>
</dbReference>
<dbReference type="InterPro" id="IPR046804">
    <property type="entry name" value="DNA-PKcs_N"/>
</dbReference>
<dbReference type="InterPro" id="IPR046803">
    <property type="entry name" value="DNAPKcs_CC1-2"/>
</dbReference>
<dbReference type="InterPro" id="IPR012582">
    <property type="entry name" value="DNAPKcs_CC3"/>
</dbReference>
<dbReference type="InterPro" id="IPR045581">
    <property type="entry name" value="DNAPKcs_CC5"/>
</dbReference>
<dbReference type="InterPro" id="IPR003152">
    <property type="entry name" value="FATC_dom"/>
</dbReference>
<dbReference type="InterPro" id="IPR011009">
    <property type="entry name" value="Kinase-like_dom_sf"/>
</dbReference>
<dbReference type="InterPro" id="IPR000403">
    <property type="entry name" value="PI3/4_kinase_cat_dom"/>
</dbReference>
<dbReference type="InterPro" id="IPR036940">
    <property type="entry name" value="PI3/4_kinase_cat_sf"/>
</dbReference>
<dbReference type="InterPro" id="IPR018936">
    <property type="entry name" value="PI3/4_kinase_CS"/>
</dbReference>
<dbReference type="InterPro" id="IPR003151">
    <property type="entry name" value="PIK-rel_kinase_FAT"/>
</dbReference>
<dbReference type="InterPro" id="IPR014009">
    <property type="entry name" value="PIK_FAT"/>
</dbReference>
<dbReference type="PANTHER" id="PTHR11139">
    <property type="entry name" value="ATAXIA TELANGIECTASIA MUTATED ATM -RELATED"/>
    <property type="match status" value="1"/>
</dbReference>
<dbReference type="PANTHER" id="PTHR11139:SF68">
    <property type="entry name" value="DNA-DEPENDENT PROTEIN KINASE CATALYTIC SUBUNIT"/>
    <property type="match status" value="1"/>
</dbReference>
<dbReference type="Pfam" id="PF20500">
    <property type="entry name" value="DNA-PKcs_N"/>
    <property type="match status" value="1"/>
</dbReference>
<dbReference type="Pfam" id="PF20502">
    <property type="entry name" value="DNAPKcs_CC1-2"/>
    <property type="match status" value="1"/>
</dbReference>
<dbReference type="Pfam" id="PF08163">
    <property type="entry name" value="DNAPKcs_CC3"/>
    <property type="match status" value="1"/>
</dbReference>
<dbReference type="Pfam" id="PF19704">
    <property type="entry name" value="DNAPKcs_CC5"/>
    <property type="match status" value="1"/>
</dbReference>
<dbReference type="Pfam" id="PF02259">
    <property type="entry name" value="FAT"/>
    <property type="match status" value="1"/>
</dbReference>
<dbReference type="Pfam" id="PF02260">
    <property type="entry name" value="FATC"/>
    <property type="match status" value="1"/>
</dbReference>
<dbReference type="Pfam" id="PF00454">
    <property type="entry name" value="PI3_PI4_kinase"/>
    <property type="match status" value="1"/>
</dbReference>
<dbReference type="SMART" id="SM01343">
    <property type="entry name" value="FATC"/>
    <property type="match status" value="1"/>
</dbReference>
<dbReference type="SMART" id="SM01344">
    <property type="entry name" value="NUC194"/>
    <property type="match status" value="1"/>
</dbReference>
<dbReference type="SMART" id="SM00146">
    <property type="entry name" value="PI3Kc"/>
    <property type="match status" value="1"/>
</dbReference>
<dbReference type="SUPFAM" id="SSF48371">
    <property type="entry name" value="ARM repeat"/>
    <property type="match status" value="3"/>
</dbReference>
<dbReference type="SUPFAM" id="SSF56112">
    <property type="entry name" value="Protein kinase-like (PK-like)"/>
    <property type="match status" value="1"/>
</dbReference>
<dbReference type="PROSITE" id="PS51189">
    <property type="entry name" value="FAT"/>
    <property type="match status" value="1"/>
</dbReference>
<dbReference type="PROSITE" id="PS51190">
    <property type="entry name" value="FATC"/>
    <property type="match status" value="1"/>
</dbReference>
<dbReference type="PROSITE" id="PS00915">
    <property type="entry name" value="PI3_4_KINASE_1"/>
    <property type="match status" value="1"/>
</dbReference>
<dbReference type="PROSITE" id="PS00916">
    <property type="entry name" value="PI3_4_KINASE_2"/>
    <property type="match status" value="1"/>
</dbReference>
<dbReference type="PROSITE" id="PS50290">
    <property type="entry name" value="PI3_4_KINASE_3"/>
    <property type="match status" value="1"/>
</dbReference>
<accession>P78527</accession>
<accession>P78528</accession>
<accession>Q13327</accession>
<accession>Q13337</accession>
<accession>Q14175</accession>
<accession>Q59H99</accession>
<accession>Q7Z611</accession>
<accession>Q96SE6</accession>
<accession>Q9UME3</accession>
<feature type="chain" id="PRO_0000225598" description="DNA-dependent protein kinase catalytic subunit">
    <location>
        <begin position="1"/>
        <end position="4128"/>
    </location>
</feature>
<feature type="repeat" description="HEAT 1">
    <location>
        <begin position="288"/>
        <end position="323"/>
    </location>
</feature>
<feature type="repeat" description="HEAT 2">
    <location>
        <begin position="1004"/>
        <end position="1040"/>
    </location>
</feature>
<feature type="repeat" description="TPR 1">
    <location>
        <begin position="1723"/>
        <end position="1756"/>
    </location>
</feature>
<feature type="domain" description="FAT" evidence="3">
    <location>
        <begin position="2906"/>
        <end position="3539"/>
    </location>
</feature>
<feature type="repeat" description="TPR 2">
    <location>
        <begin position="2920"/>
        <end position="2948"/>
    </location>
</feature>
<feature type="repeat" description="TPR 3">
    <location>
        <begin position="2949"/>
        <end position="2982"/>
    </location>
</feature>
<feature type="domain" description="PI3K/PI4K catalytic" evidence="2">
    <location>
        <begin position="3722"/>
        <end position="4053"/>
    </location>
</feature>
<feature type="domain" description="FATC" evidence="3 4">
    <location>
        <begin position="4096"/>
        <end position="4128"/>
    </location>
</feature>
<feature type="region of interest" description="Interaction with C1D" evidence="67">
    <location>
        <begin position="1503"/>
        <end position="1538"/>
    </location>
</feature>
<feature type="region of interest" description="Leucine-zipper">
    <location>
        <begin position="1503"/>
        <end position="1538"/>
    </location>
</feature>
<feature type="region of interest" description="Disordered" evidence="5">
    <location>
        <begin position="2050"/>
        <end position="2073"/>
    </location>
</feature>
<feature type="region of interest" description="KIP-binding" evidence="65">
    <location>
        <begin position="2436"/>
        <end position="3212"/>
    </location>
</feature>
<feature type="region of interest" description="May split the end of the DNA molecule, with the two strands separating around the region" evidence="57">
    <location>
        <begin position="2737"/>
        <end position="2765"/>
    </location>
</feature>
<feature type="region of interest" description="Disordered" evidence="5">
    <location>
        <begin position="3200"/>
        <end position="3222"/>
    </location>
</feature>
<feature type="region of interest" description="G-loop" evidence="2">
    <location>
        <begin position="3728"/>
        <end position="3734"/>
    </location>
</feature>
<feature type="region of interest" description="Catalytic loop" evidence="2">
    <location>
        <begin position="3919"/>
        <end position="3927"/>
    </location>
</feature>
<feature type="region of interest" description="Activation loop" evidence="2">
    <location>
        <begin position="3939"/>
        <end position="3964"/>
    </location>
</feature>
<feature type="site" description="Cleavage; by caspase-3" evidence="61">
    <location>
        <begin position="2020"/>
        <end position="2021"/>
    </location>
</feature>
<feature type="modified residue" description="N6-acetyllysine" evidence="80">
    <location>
        <position position="117"/>
    </location>
</feature>
<feature type="modified residue" description="Phosphoserine" evidence="84">
    <location>
        <position position="511"/>
    </location>
</feature>
<feature type="modified residue" description="Phosphoserine" evidence="84">
    <location>
        <position position="687"/>
    </location>
</feature>
<feature type="modified residue" description="N6-acetyllysine" evidence="80">
    <location>
        <position position="828"/>
    </location>
</feature>
<feature type="modified residue" description="Phosphoserine" evidence="84">
    <location>
        <position position="841"/>
    </location>
</feature>
<feature type="modified residue" description="Phosphoserine" evidence="79">
    <location>
        <position position="893"/>
    </location>
</feature>
<feature type="modified residue" description="Phosphoserine" evidence="84">
    <location>
        <position position="1065"/>
    </location>
</feature>
<feature type="modified residue" description="N6-acetyllysine" evidence="80">
    <location>
        <position position="1209"/>
    </location>
</feature>
<feature type="modified residue" description="N6-acetyllysine" evidence="80">
    <location>
        <position position="1970"/>
    </location>
</feature>
<feature type="modified residue" description="Phosphoserine; by autocatalysis" evidence="18 39 57">
    <location>
        <position position="2056"/>
    </location>
</feature>
<feature type="modified residue" description="N6-acetyllysine" evidence="80">
    <location>
        <position position="2259"/>
    </location>
</feature>
<feature type="modified residue" description="Phosphothreonine" evidence="84">
    <location>
        <position position="2535"/>
    </location>
</feature>
<feature type="modified residue" description="Phosphothreonine; by autocatalysis" evidence="10 11 18 53 57">
    <location>
        <position position="2609"/>
    </location>
</feature>
<feature type="modified residue" description="Phosphoserine; by autocatalysis" evidence="10 79 83 84 85">
    <location>
        <position position="2612"/>
    </location>
</feature>
<feature type="modified residue" description="Phosphothreonine; by autocatalysis" evidence="10 84">
    <location>
        <position position="2638"/>
    </location>
</feature>
<feature type="modified residue" description="Phosphothreonine; by autocatalysis" evidence="10 84">
    <location>
        <position position="2647"/>
    </location>
</feature>
<feature type="modified residue" description="Phosphoserine" evidence="84">
    <location>
        <position position="2789"/>
    </location>
</feature>
<feature type="modified residue" description="Phosphoserine" evidence="76 77 78 79 81 82 83 84">
    <location>
        <position position="3205"/>
    </location>
</feature>
<feature type="modified residue" description="N6-acetyllysine" evidence="80">
    <location>
        <position position="3241"/>
    </location>
</feature>
<feature type="modified residue" description="N6-acetyllysine" evidence="80">
    <location>
        <position position="3260"/>
    </location>
</feature>
<feature type="modified residue" description="N6-acetyllysine" evidence="80">
    <location>
        <position position="3621"/>
    </location>
</feature>
<feature type="modified residue" description="N6-acetyllysine" evidence="80">
    <location>
        <position position="3638"/>
    </location>
</feature>
<feature type="modified residue" description="N6-acetyllysine" evidence="80">
    <location>
        <position position="3642"/>
    </location>
</feature>
<feature type="modified residue" description="Phosphoserine" evidence="84">
    <location>
        <position position="3731"/>
    </location>
</feature>
<feature type="modified residue" description="Phosphoserine" evidence="84">
    <location>
        <position position="3821"/>
    </location>
</feature>
<feature type="modified residue" description="Phosphoserine" evidence="78 79 82 84">
    <location>
        <position position="4026"/>
    </location>
</feature>
<feature type="splice variant" id="VSP_004708" description="In isoform 2." evidence="71">
    <location>
        <begin position="3799"/>
        <end position="3829"/>
    </location>
</feature>
<feature type="sequence variant" id="VAR_019179" description="In dbSNP:rs8177999." evidence="31 69">
    <original>A</original>
    <variation>S</variation>
    <location>
        <position position="6"/>
    </location>
</feature>
<feature type="sequence variant" id="VAR_041602" description="In a lung adenocarcinoma sample; somatic mutation; dbSNP:rs758032015." evidence="31">
    <original>K</original>
    <variation>N</variation>
    <location>
        <position position="263"/>
    </location>
</feature>
<feature type="sequence variant" id="VAR_019180" description="In dbSNP:rs8178017." evidence="31 69">
    <original>M</original>
    <variation>I</variation>
    <location>
        <position position="333"/>
    </location>
</feature>
<feature type="sequence variant" id="VAR_041603" description="In dbSNP:rs55925466." evidence="31">
    <original>V</original>
    <variation>I</variation>
    <location>
        <position position="420"/>
    </location>
</feature>
<feature type="sequence variant" id="VAR_041604" description="In a metastatic melanoma sample; somatic mutation." evidence="31">
    <original>G</original>
    <variation>S</variation>
    <location>
        <position position="500"/>
    </location>
</feature>
<feature type="sequence variant" id="VAR_019181" description="In dbSNP:rs8178033." evidence="31 69">
    <original>T</original>
    <variation>S</variation>
    <location>
        <position position="605"/>
    </location>
</feature>
<feature type="sequence variant" id="VAR_041605" description="In dbSNP:rs55811715." evidence="31">
    <original>F</original>
    <variation>L</variation>
    <location>
        <position position="649"/>
    </location>
</feature>
<feature type="sequence variant" id="VAR_019182" description="In dbSNP:rs8178040." evidence="69">
    <original>I</original>
    <variation>M</variation>
    <location>
        <position position="680"/>
    </location>
</feature>
<feature type="sequence variant" id="VAR_019183" description="In dbSNP:rs8178046." evidence="31 69">
    <original>P</original>
    <variation>S</variation>
    <location>
        <position position="695"/>
    </location>
</feature>
<feature type="sequence variant" id="VAR_019184" description="In dbSNP:rs8178070." evidence="69">
    <original>N</original>
    <variation>S</variation>
    <location>
        <position position="1071"/>
    </location>
</feature>
<feature type="sequence variant" id="VAR_041606" description="In a colorectal adenocarcinoma sample; somatic mutation; dbSNP:rs781401034." evidence="31">
    <original>R</original>
    <variation>H</variation>
    <location>
        <position position="1136"/>
    </location>
</feature>
<feature type="sequence variant" id="VAR_041607" description="In dbSNP:rs34598508." evidence="31">
    <original>L</original>
    <variation>V</variation>
    <location>
        <position position="1190"/>
    </location>
</feature>
<feature type="sequence variant" id="VAR_041608" description="In dbSNP:rs191531119." evidence="31">
    <original>A</original>
    <variation>T</variation>
    <location>
        <position position="1237"/>
    </location>
</feature>
<feature type="sequence variant" id="VAR_041609" evidence="31">
    <original>L</original>
    <variation>F</variation>
    <location>
        <position position="1279"/>
    </location>
</feature>
<feature type="sequence variant" id="VAR_019185" description="In dbSNP:rs8178090." evidence="69">
    <original>G</original>
    <variation>V</variation>
    <location>
        <position position="1314"/>
    </location>
</feature>
<feature type="sequence variant" id="VAR_041610" description="In a lung squamous cell carcinoma sample; somatic mutation." evidence="31">
    <original>R</original>
    <variation>M</variation>
    <location>
        <position position="1447"/>
    </location>
</feature>
<feature type="sequence variant" id="VAR_019186" description="In dbSNP:rs8178104." evidence="69">
    <original>D</original>
    <variation>V</variation>
    <location>
        <position position="1588"/>
    </location>
</feature>
<feature type="sequence variant" id="VAR_019187" description="In dbSNP:rs8178106." evidence="69">
    <original>Q</original>
    <variation>H</variation>
    <location>
        <position position="1603"/>
    </location>
</feature>
<feature type="sequence variant" id="VAR_041611" description="In dbSNP:rs56182356." evidence="31">
    <original>A</original>
    <variation>G</variation>
    <location>
        <position position="1619"/>
    </location>
</feature>
<feature type="sequence variant" id="VAR_041612" description="In a metastatic melanoma sample; somatic mutation; dbSNP:rs55735910." evidence="31">
    <original>A</original>
    <variation>V</variation>
    <location>
        <position position="1680"/>
    </location>
</feature>
<feature type="sequence variant" id="VAR_041613" description="In dbSNP:rs56042895." evidence="31">
    <original>S</original>
    <variation>P</variation>
    <location>
        <position position="2023"/>
    </location>
</feature>
<feature type="sequence variant" id="VAR_019188" description="In dbSNP:rs8178147." evidence="69">
    <original>A</original>
    <variation>V</variation>
    <location>
        <position position="2095"/>
    </location>
</feature>
<feature type="sequence variant" id="VAR_041614" description="In dbSNP:rs55923149." evidence="31">
    <original>R</original>
    <variation>Q</variation>
    <location>
        <position position="2598"/>
    </location>
</feature>
<feature type="sequence variant" id="VAR_019189" description="In dbSNP:rs8178178." evidence="69">
    <original>K</original>
    <variation>E</variation>
    <location>
        <position position="2702"/>
    </location>
</feature>
<feature type="sequence variant" id="VAR_041615" description="In a metastatic melanoma sample; somatic mutation." evidence="31">
    <original>S</original>
    <variation>N</variation>
    <location>
        <position position="2810"/>
    </location>
</feature>
<feature type="sequence variant" id="VAR_019190" description="In dbSNP:rs4278157." evidence="31 69">
    <original>R</original>
    <variation>C</variation>
    <location>
        <position position="2899"/>
    </location>
</feature>
<feature type="sequence variant" id="VAR_041616" description="In a lung neuroendocrine carcinoma sample; somatic mutation." evidence="31">
    <original>G</original>
    <variation>A</variation>
    <location>
        <position position="2941"/>
    </location>
</feature>
<feature type="sequence variant" id="VAR_072569" description="In IMD26; shows increased long palindromic (P)-nucleotide stretches in the immunoglobulin coding joints indicating a defect in hairpin opening and insufficient DCLRE1C activation; dbSNP:rs587777685." evidence="33">
    <original>L</original>
    <variation>R</variation>
    <location>
        <position position="3062"/>
    </location>
</feature>
<feature type="sequence variant" id="VAR_041617" description="In dbSNP:rs56135402." evidence="31">
    <original>E</original>
    <variation>D</variation>
    <location>
        <position position="3085"/>
    </location>
</feature>
<feature type="sequence variant" id="VAR_019191" description="In dbSNP:rs8178208." evidence="31 69">
    <original>G</original>
    <variation>D</variation>
    <location>
        <position position="3149"/>
    </location>
</feature>
<feature type="sequence variant" id="VAR_041618" description="In dbSNP:rs55793951." evidence="31">
    <original>T</original>
    <variation>S</variation>
    <location>
        <position position="3198"/>
    </location>
</feature>
<feature type="sequence variant" id="VAR_019192" description="In dbSNP:rs8178216." evidence="31 69">
    <original>P</original>
    <variation>S</variation>
    <location>
        <position position="3201"/>
    </location>
</feature>
<feature type="sequence variant" id="VAR_019193" description="In dbSNP:rs8178225." evidence="31 69">
    <original>G</original>
    <variation>E</variation>
    <location>
        <position position="3404"/>
    </location>
</feature>
<feature type="sequence variant" id="VAR_019194" description="In dbSNP:rs7830743." evidence="31 69">
    <original>I</original>
    <variation>T</variation>
    <location>
        <position position="3434"/>
    </location>
</feature>
<feature type="sequence variant" id="VAR_019195" description="In dbSNP:rs8178228." evidence="69">
    <original>N</original>
    <variation>S</variation>
    <location>
        <position position="3459"/>
    </location>
</feature>
<feature type="sequence variant" id="VAR_019196" description="In dbSNP:rs8178232." evidence="31 69">
    <original>L</original>
    <variation>M</variation>
    <location>
        <position position="3562"/>
    </location>
</feature>
<feature type="sequence variant" id="VAR_072570" description="In IMD26; shows impaired function in response to irradiation and a less severe defect in V(D)J end-joining suggesting that the missense mutation retained some functional capacity; consistent with a loss of function mutation; dbSNP:rs587777686." evidence="41">
    <original>A</original>
    <variation>V</variation>
    <location>
        <position position="3574"/>
    </location>
</feature>
<feature type="sequence variant" id="VAR_041619" description="In dbSNP:rs55866966." evidence="31">
    <original>L</original>
    <variation>F</variation>
    <location>
        <position position="3584"/>
    </location>
</feature>
<feature type="sequence variant" id="VAR_050534" description="In dbSNP:rs8178236.">
    <original>P</original>
    <variation>L</variation>
    <location>
        <position position="3702"/>
    </location>
</feature>
<feature type="sequence variant" id="VAR_041620" description="In dbSNP:rs56216442." evidence="31">
    <original>L</original>
    <variation>I</variation>
    <location>
        <position position="3800"/>
    </location>
</feature>
<feature type="sequence variant" id="VAR_019197" description="In dbSNP:rs8178245." evidence="31 69">
    <original>P</original>
    <variation>L</variation>
    <location>
        <position position="3836"/>
    </location>
</feature>
<feature type="sequence variant" id="VAR_019198" description="In dbSNP:rs8178248." evidence="69">
    <original>M</original>
    <variation>V</variation>
    <location>
        <position position="3932"/>
    </location>
</feature>
<feature type="sequence variant" id="VAR_041621" description="In dbSNP:rs55670423." evidence="31">
    <original>G</original>
    <variation>S</variation>
    <location>
        <position position="3936"/>
    </location>
</feature>
<feature type="sequence variant" id="VAR_041622" description="In dbSNP:rs56090750." evidence="31">
    <original>V</original>
    <variation>M</variation>
    <location>
        <position position="3937"/>
    </location>
</feature>
<feature type="mutagenesis site" description="Loss of interaction with C1D." evidence="67">
    <original>L</original>
    <variation>P</variation>
    <location>
        <position position="1510"/>
    </location>
</feature>
<feature type="mutagenesis site" description="Loss of interaction with C1D." evidence="67">
    <original>EL</original>
    <variation>PD</variation>
    <location>
        <begin position="1516"/>
        <end position="1517"/>
    </location>
</feature>
<feature type="mutagenesis site" description="Leads to radiation sensitivity and impaired DSB joining. Gives rise to reduced phosphorylation; when associated with A-2612." evidence="11">
    <original>T</original>
    <variation>A</variation>
    <location>
        <position position="2609"/>
    </location>
</feature>
<feature type="mutagenesis site" description="Reduced phosphorylation; when associated with A-2609.">
    <original>S</original>
    <variation>A</variation>
    <location>
        <position position="2612"/>
    </location>
</feature>
<feature type="mutagenesis site" description="Alleviates phosphorylation, leaves a fully active enzyme with compromised cellular resistance to ionizing radiation without affecting DNA end joining; when associated with A-2647." evidence="13">
    <original>T</original>
    <variation>A</variation>
    <location>
        <position position="2638"/>
    </location>
</feature>
<feature type="mutagenesis site" description="Alleviates phosphorylation, leaves a fully active enzyme with compromised cellular resistance to ionizing radiation without affecting DNA end joining; when associated with A-2638." evidence="13">
    <original>T</original>
    <variation>A</variation>
    <location>
        <position position="2647"/>
    </location>
</feature>
<feature type="sequence conflict" description="In Ref. 2; AAC50210." evidence="72" ref="2">
    <original>D</original>
    <variation>Y</variation>
    <location>
        <position position="405"/>
    </location>
</feature>
<feature type="sequence conflict" description="In Ref. 2; AAC50210." evidence="72" ref="2">
    <original>A</original>
    <variation>S</variation>
    <location>
        <position position="1008"/>
    </location>
</feature>
<feature type="sequence conflict" description="In Ref. 8; AAA79184." evidence="72" ref="8">
    <original>N</original>
    <variation>T</variation>
    <location>
        <position position="3660"/>
    </location>
</feature>
<feature type="sequence conflict" description="In Ref. 8; AAA79184." evidence="72" ref="8">
    <original>L</original>
    <variation>W</variation>
    <location>
        <position position="3817"/>
    </location>
</feature>
<feature type="sequence conflict" description="In Ref. 8; AAA79184." evidence="72" ref="8">
    <original>A</original>
    <variation>P</variation>
    <location>
        <position position="3862"/>
    </location>
</feature>
<feature type="sequence conflict" description="In Ref. 9; AAK40350." evidence="72" ref="9">
    <original>I</original>
    <variation>V</variation>
    <location>
        <position position="4031"/>
    </location>
</feature>
<feature type="turn" evidence="94">
    <location>
        <begin position="8"/>
        <end position="10"/>
    </location>
</feature>
<feature type="helix" evidence="94">
    <location>
        <begin position="11"/>
        <end position="20"/>
    </location>
</feature>
<feature type="strand" evidence="94">
    <location>
        <begin position="21"/>
        <end position="23"/>
    </location>
</feature>
<feature type="turn" evidence="94">
    <location>
        <begin position="24"/>
        <end position="26"/>
    </location>
</feature>
<feature type="helix" evidence="94">
    <location>
        <begin position="27"/>
        <end position="44"/>
    </location>
</feature>
<feature type="helix" evidence="94">
    <location>
        <begin position="48"/>
        <end position="58"/>
    </location>
</feature>
<feature type="strand" evidence="94">
    <location>
        <begin position="61"/>
        <end position="64"/>
    </location>
</feature>
<feature type="helix" evidence="94">
    <location>
        <begin position="65"/>
        <end position="71"/>
    </location>
</feature>
<feature type="helix" evidence="93">
    <location>
        <begin position="72"/>
        <end position="74"/>
    </location>
</feature>
<feature type="helix" evidence="94">
    <location>
        <begin position="76"/>
        <end position="78"/>
    </location>
</feature>
<feature type="helix" evidence="94">
    <location>
        <begin position="79"/>
        <end position="95"/>
    </location>
</feature>
<feature type="helix" evidence="94">
    <location>
        <begin position="98"/>
        <end position="103"/>
    </location>
</feature>
<feature type="helix" evidence="94">
    <location>
        <begin position="104"/>
        <end position="117"/>
    </location>
</feature>
<feature type="helix" evidence="94">
    <location>
        <begin position="121"/>
        <end position="137"/>
    </location>
</feature>
<feature type="strand" evidence="94">
    <location>
        <begin position="139"/>
        <end position="141"/>
    </location>
</feature>
<feature type="helix" evidence="94">
    <location>
        <begin position="143"/>
        <end position="146"/>
    </location>
</feature>
<feature type="helix" evidence="94">
    <location>
        <begin position="149"/>
        <end position="159"/>
    </location>
</feature>
<feature type="turn" evidence="89">
    <location>
        <begin position="162"/>
        <end position="164"/>
    </location>
</feature>
<feature type="strand" evidence="89">
    <location>
        <begin position="165"/>
        <end position="167"/>
    </location>
</feature>
<feature type="strand" evidence="94">
    <location>
        <begin position="168"/>
        <end position="170"/>
    </location>
</feature>
<feature type="helix" evidence="94">
    <location>
        <begin position="171"/>
        <end position="183"/>
    </location>
</feature>
<feature type="helix" evidence="94">
    <location>
        <begin position="186"/>
        <end position="188"/>
    </location>
</feature>
<feature type="turn" evidence="94">
    <location>
        <begin position="189"/>
        <end position="192"/>
    </location>
</feature>
<feature type="helix" evidence="94">
    <location>
        <begin position="193"/>
        <end position="209"/>
    </location>
</feature>
<feature type="strand" evidence="94">
    <location>
        <begin position="211"/>
        <end position="213"/>
    </location>
</feature>
<feature type="helix" evidence="94">
    <location>
        <begin position="217"/>
        <end position="230"/>
    </location>
</feature>
<feature type="strand" evidence="94">
    <location>
        <begin position="232"/>
        <end position="234"/>
    </location>
</feature>
<feature type="turn" evidence="94">
    <location>
        <begin position="238"/>
        <end position="240"/>
    </location>
</feature>
<feature type="helix" evidence="94">
    <location>
        <begin position="244"/>
        <end position="256"/>
    </location>
</feature>
<feature type="turn" evidence="90">
    <location>
        <begin position="258"/>
        <end position="260"/>
    </location>
</feature>
<feature type="helix" evidence="94">
    <location>
        <begin position="267"/>
        <end position="278"/>
    </location>
</feature>
<feature type="turn" evidence="94">
    <location>
        <begin position="279"/>
        <end position="281"/>
    </location>
</feature>
<feature type="helix" evidence="94">
    <location>
        <begin position="284"/>
        <end position="287"/>
    </location>
</feature>
<feature type="helix" evidence="94">
    <location>
        <begin position="290"/>
        <end position="301"/>
    </location>
</feature>
<feature type="strand" evidence="93">
    <location>
        <begin position="302"/>
        <end position="304"/>
    </location>
</feature>
<feature type="helix" evidence="94">
    <location>
        <begin position="308"/>
        <end position="329"/>
    </location>
</feature>
<feature type="turn" evidence="94">
    <location>
        <begin position="330"/>
        <end position="332"/>
    </location>
</feature>
<feature type="helix" evidence="94">
    <location>
        <begin position="335"/>
        <end position="350"/>
    </location>
</feature>
<feature type="helix" evidence="94">
    <location>
        <begin position="356"/>
        <end position="376"/>
    </location>
</feature>
<feature type="strand" evidence="86">
    <location>
        <begin position="377"/>
        <end position="379"/>
    </location>
</feature>
<feature type="helix" evidence="94">
    <location>
        <begin position="380"/>
        <end position="383"/>
    </location>
</feature>
<feature type="turn" evidence="94">
    <location>
        <begin position="384"/>
        <end position="386"/>
    </location>
</feature>
<feature type="helix" evidence="94">
    <location>
        <begin position="387"/>
        <end position="396"/>
    </location>
</feature>
<feature type="strand" evidence="94">
    <location>
        <begin position="397"/>
        <end position="399"/>
    </location>
</feature>
<feature type="strand" evidence="94">
    <location>
        <begin position="401"/>
        <end position="403"/>
    </location>
</feature>
<feature type="turn" evidence="94">
    <location>
        <begin position="406"/>
        <end position="409"/>
    </location>
</feature>
<feature type="helix" evidence="94">
    <location>
        <begin position="410"/>
        <end position="421"/>
    </location>
</feature>
<feature type="strand" evidence="94">
    <location>
        <begin position="429"/>
        <end position="431"/>
    </location>
</feature>
<feature type="helix" evidence="94">
    <location>
        <begin position="432"/>
        <end position="444"/>
    </location>
</feature>
<feature type="helix" evidence="91">
    <location>
        <begin position="446"/>
        <end position="448"/>
    </location>
</feature>
<feature type="turn" evidence="90">
    <location>
        <begin position="451"/>
        <end position="453"/>
    </location>
</feature>
<feature type="helix" evidence="94">
    <location>
        <begin position="454"/>
        <end position="468"/>
    </location>
</feature>
<feature type="turn" evidence="91">
    <location>
        <begin position="469"/>
        <end position="471"/>
    </location>
</feature>
<feature type="helix" evidence="94">
    <location>
        <begin position="473"/>
        <end position="491"/>
    </location>
</feature>
<feature type="strand" evidence="91">
    <location>
        <begin position="505"/>
        <end position="507"/>
    </location>
</feature>
<feature type="strand" evidence="91">
    <location>
        <begin position="513"/>
        <end position="518"/>
    </location>
</feature>
<feature type="helix" evidence="94">
    <location>
        <begin position="525"/>
        <end position="527"/>
    </location>
</feature>
<feature type="helix" evidence="94">
    <location>
        <begin position="528"/>
        <end position="534"/>
    </location>
</feature>
<feature type="turn" evidence="94">
    <location>
        <begin position="539"/>
        <end position="541"/>
    </location>
</feature>
<feature type="strand" evidence="94">
    <location>
        <begin position="542"/>
        <end position="544"/>
    </location>
</feature>
<feature type="helix" evidence="89">
    <location>
        <begin position="545"/>
        <end position="547"/>
    </location>
</feature>
<feature type="strand" evidence="89">
    <location>
        <begin position="552"/>
        <end position="554"/>
    </location>
</feature>
<feature type="helix" evidence="93">
    <location>
        <begin position="555"/>
        <end position="558"/>
    </location>
</feature>
<feature type="helix" evidence="94">
    <location>
        <begin position="560"/>
        <end position="577"/>
    </location>
</feature>
<feature type="strand" evidence="90">
    <location>
        <begin position="583"/>
        <end position="585"/>
    </location>
</feature>
<feature type="helix" evidence="93">
    <location>
        <begin position="597"/>
        <end position="600"/>
    </location>
</feature>
<feature type="strand" evidence="94">
    <location>
        <begin position="609"/>
        <end position="611"/>
    </location>
</feature>
<feature type="strand" evidence="90">
    <location>
        <begin position="612"/>
        <end position="616"/>
    </location>
</feature>
<feature type="helix" evidence="94">
    <location>
        <begin position="617"/>
        <end position="633"/>
    </location>
</feature>
<feature type="turn" evidence="90">
    <location>
        <begin position="634"/>
        <end position="636"/>
    </location>
</feature>
<feature type="helix" evidence="90">
    <location>
        <begin position="639"/>
        <end position="642"/>
    </location>
</feature>
<feature type="helix" evidence="94">
    <location>
        <begin position="643"/>
        <end position="645"/>
    </location>
</feature>
<feature type="helix" evidence="94">
    <location>
        <begin position="646"/>
        <end position="658"/>
    </location>
</feature>
<feature type="helix" evidence="94">
    <location>
        <begin position="666"/>
        <end position="679"/>
    </location>
</feature>
<feature type="turn" evidence="86">
    <location>
        <begin position="680"/>
        <end position="685"/>
    </location>
</feature>
<feature type="helix" evidence="93">
    <location>
        <begin position="689"/>
        <end position="691"/>
    </location>
</feature>
<feature type="helix" evidence="94">
    <location>
        <begin position="700"/>
        <end position="717"/>
    </location>
</feature>
<feature type="helix" evidence="94">
    <location>
        <begin position="718"/>
        <end position="720"/>
    </location>
</feature>
<feature type="helix" evidence="94">
    <location>
        <begin position="723"/>
        <end position="735"/>
    </location>
</feature>
<feature type="helix" evidence="89">
    <location>
        <begin position="738"/>
        <end position="743"/>
    </location>
</feature>
<feature type="helix" evidence="94">
    <location>
        <begin position="745"/>
        <end position="747"/>
    </location>
</feature>
<feature type="helix" evidence="94">
    <location>
        <begin position="749"/>
        <end position="758"/>
    </location>
</feature>
<feature type="turn" evidence="94">
    <location>
        <begin position="759"/>
        <end position="761"/>
    </location>
</feature>
<feature type="helix" evidence="94">
    <location>
        <begin position="763"/>
        <end position="779"/>
    </location>
</feature>
<feature type="turn" evidence="94">
    <location>
        <begin position="782"/>
        <end position="784"/>
    </location>
</feature>
<feature type="helix" evidence="94">
    <location>
        <begin position="786"/>
        <end position="788"/>
    </location>
</feature>
<feature type="helix" evidence="94">
    <location>
        <begin position="789"/>
        <end position="792"/>
    </location>
</feature>
<feature type="helix" evidence="94">
    <location>
        <begin position="793"/>
        <end position="795"/>
    </location>
</feature>
<feature type="helix" evidence="94">
    <location>
        <begin position="797"/>
        <end position="799"/>
    </location>
</feature>
<feature type="turn" evidence="90">
    <location>
        <begin position="800"/>
        <end position="804"/>
    </location>
</feature>
<feature type="helix" evidence="94">
    <location>
        <begin position="817"/>
        <end position="822"/>
    </location>
</feature>
<feature type="helix" evidence="94">
    <location>
        <begin position="828"/>
        <end position="838"/>
    </location>
</feature>
<feature type="helix" evidence="94">
    <location>
        <begin position="848"/>
        <end position="861"/>
    </location>
</feature>
<feature type="helix" evidence="94">
    <location>
        <begin position="866"/>
        <end position="869"/>
    </location>
</feature>
<feature type="strand" evidence="94">
    <location>
        <begin position="874"/>
        <end position="876"/>
    </location>
</feature>
<feature type="helix" evidence="94">
    <location>
        <begin position="877"/>
        <end position="881"/>
    </location>
</feature>
<feature type="strand" evidence="90">
    <location>
        <begin position="886"/>
        <end position="889"/>
    </location>
</feature>
<feature type="strand" evidence="94">
    <location>
        <begin position="893"/>
        <end position="895"/>
    </location>
</feature>
<feature type="strand" evidence="94">
    <location>
        <begin position="904"/>
        <end position="906"/>
    </location>
</feature>
<feature type="helix" evidence="94">
    <location>
        <begin position="907"/>
        <end position="909"/>
    </location>
</feature>
<feature type="helix" evidence="94">
    <location>
        <begin position="911"/>
        <end position="919"/>
    </location>
</feature>
<feature type="helix" evidence="94">
    <location>
        <begin position="924"/>
        <end position="945"/>
    </location>
</feature>
<feature type="strand" evidence="94">
    <location>
        <begin position="946"/>
        <end position="948"/>
    </location>
</feature>
<feature type="turn" evidence="94">
    <location>
        <begin position="951"/>
        <end position="954"/>
    </location>
</feature>
<feature type="helix" evidence="94">
    <location>
        <begin position="959"/>
        <end position="973"/>
    </location>
</feature>
<feature type="helix" evidence="94">
    <location>
        <begin position="978"/>
        <end position="995"/>
    </location>
</feature>
<feature type="turn" evidence="94">
    <location>
        <begin position="998"/>
        <end position="1002"/>
    </location>
</feature>
<feature type="helix" evidence="94">
    <location>
        <begin position="1004"/>
        <end position="1017"/>
    </location>
</feature>
<feature type="strand" evidence="86">
    <location>
        <begin position="1019"/>
        <end position="1021"/>
    </location>
</feature>
<feature type="helix" evidence="94">
    <location>
        <begin position="1023"/>
        <end position="1042"/>
    </location>
</feature>
<feature type="turn" evidence="94">
    <location>
        <begin position="1046"/>
        <end position="1050"/>
    </location>
</feature>
<feature type="strand" evidence="93">
    <location>
        <begin position="1053"/>
        <end position="1055"/>
    </location>
</feature>
<feature type="helix" evidence="94">
    <location>
        <begin position="1056"/>
        <end position="1067"/>
    </location>
</feature>
<feature type="strand" evidence="94">
    <location>
        <begin position="1068"/>
        <end position="1070"/>
    </location>
</feature>
<feature type="helix" evidence="94">
    <location>
        <begin position="1072"/>
        <end position="1085"/>
    </location>
</feature>
<feature type="turn" evidence="94">
    <location>
        <begin position="1086"/>
        <end position="1090"/>
    </location>
</feature>
<feature type="helix" evidence="94">
    <location>
        <begin position="1096"/>
        <end position="1115"/>
    </location>
</feature>
<feature type="turn" evidence="91">
    <location>
        <begin position="1119"/>
        <end position="1121"/>
    </location>
</feature>
<feature type="helix" evidence="94">
    <location>
        <begin position="1123"/>
        <end position="1138"/>
    </location>
</feature>
<feature type="turn" evidence="94">
    <location>
        <begin position="1139"/>
        <end position="1141"/>
    </location>
</feature>
<feature type="strand" evidence="94">
    <location>
        <begin position="1142"/>
        <end position="1144"/>
    </location>
</feature>
<feature type="helix" evidence="94">
    <location>
        <begin position="1166"/>
        <end position="1175"/>
    </location>
</feature>
<feature type="helix" evidence="94">
    <location>
        <begin position="1181"/>
        <end position="1194"/>
    </location>
</feature>
<feature type="strand" evidence="94">
    <location>
        <begin position="1195"/>
        <end position="1198"/>
    </location>
</feature>
<feature type="helix" evidence="94">
    <location>
        <begin position="1204"/>
        <end position="1215"/>
    </location>
</feature>
<feature type="helix" evidence="94">
    <location>
        <begin position="1219"/>
        <end position="1222"/>
    </location>
</feature>
<feature type="turn" evidence="94">
    <location>
        <begin position="1223"/>
        <end position="1227"/>
    </location>
</feature>
<feature type="strand" evidence="89">
    <location>
        <begin position="1228"/>
        <end position="1232"/>
    </location>
</feature>
<feature type="turn" evidence="90">
    <location>
        <begin position="1235"/>
        <end position="1237"/>
    </location>
</feature>
<feature type="strand" evidence="86">
    <location>
        <begin position="1239"/>
        <end position="1242"/>
    </location>
</feature>
<feature type="helix" evidence="94">
    <location>
        <begin position="1243"/>
        <end position="1245"/>
    </location>
</feature>
<feature type="strand" evidence="89">
    <location>
        <begin position="1248"/>
        <end position="1250"/>
    </location>
</feature>
<feature type="helix" evidence="94">
    <location>
        <begin position="1251"/>
        <end position="1266"/>
    </location>
</feature>
<feature type="helix" evidence="94">
    <location>
        <begin position="1268"/>
        <end position="1272"/>
    </location>
</feature>
<feature type="strand" evidence="90">
    <location>
        <begin position="1274"/>
        <end position="1276"/>
    </location>
</feature>
<feature type="helix" evidence="94">
    <location>
        <begin position="1278"/>
        <end position="1282"/>
    </location>
</feature>
<feature type="strand" evidence="91">
    <location>
        <begin position="1283"/>
        <end position="1286"/>
    </location>
</feature>
<feature type="helix" evidence="94">
    <location>
        <begin position="1290"/>
        <end position="1300"/>
    </location>
</feature>
<feature type="turn" evidence="91">
    <location>
        <begin position="1301"/>
        <end position="1303"/>
    </location>
</feature>
<feature type="turn" evidence="90">
    <location>
        <begin position="1309"/>
        <end position="1311"/>
    </location>
</feature>
<feature type="strand" evidence="89">
    <location>
        <begin position="1317"/>
        <end position="1319"/>
    </location>
</feature>
<feature type="helix" evidence="94">
    <location>
        <begin position="1324"/>
        <end position="1349"/>
    </location>
</feature>
<feature type="strand" evidence="94">
    <location>
        <begin position="1351"/>
        <end position="1353"/>
    </location>
</feature>
<feature type="helix" evidence="94">
    <location>
        <begin position="1357"/>
        <end position="1359"/>
    </location>
</feature>
<feature type="turn" evidence="94">
    <location>
        <begin position="1360"/>
        <end position="1363"/>
    </location>
</feature>
<feature type="helix" evidence="94">
    <location>
        <begin position="1366"/>
        <end position="1376"/>
    </location>
</feature>
<feature type="turn" evidence="94">
    <location>
        <begin position="1380"/>
        <end position="1383"/>
    </location>
</feature>
<feature type="helix" evidence="94">
    <location>
        <begin position="1391"/>
        <end position="1406"/>
    </location>
</feature>
<feature type="turn" evidence="89">
    <location>
        <begin position="1409"/>
        <end position="1411"/>
    </location>
</feature>
<feature type="helix" evidence="94">
    <location>
        <begin position="1413"/>
        <end position="1422"/>
    </location>
</feature>
<feature type="helix" evidence="94">
    <location>
        <begin position="1425"/>
        <end position="1431"/>
    </location>
</feature>
<feature type="strand" evidence="93">
    <location>
        <begin position="1432"/>
        <end position="1435"/>
    </location>
</feature>
<feature type="strand" evidence="94">
    <location>
        <begin position="1437"/>
        <end position="1439"/>
    </location>
</feature>
<feature type="turn" evidence="94">
    <location>
        <begin position="1441"/>
        <end position="1446"/>
    </location>
</feature>
<feature type="helix" evidence="94">
    <location>
        <begin position="1447"/>
        <end position="1461"/>
    </location>
</feature>
<feature type="helix" evidence="94">
    <location>
        <begin position="1464"/>
        <end position="1467"/>
    </location>
</feature>
<feature type="strand" evidence="94">
    <location>
        <begin position="1472"/>
        <end position="1476"/>
    </location>
</feature>
<feature type="helix" evidence="94">
    <location>
        <begin position="1478"/>
        <end position="1489"/>
    </location>
</feature>
<feature type="strand" evidence="90">
    <location>
        <begin position="1494"/>
        <end position="1496"/>
    </location>
</feature>
<feature type="helix" evidence="94">
    <location>
        <begin position="1505"/>
        <end position="1521"/>
    </location>
</feature>
<feature type="helix" evidence="94">
    <location>
        <begin position="1525"/>
        <end position="1532"/>
    </location>
</feature>
<feature type="strand" evidence="93">
    <location>
        <begin position="1543"/>
        <end position="1551"/>
    </location>
</feature>
<feature type="helix" evidence="94">
    <location>
        <begin position="1557"/>
        <end position="1562"/>
    </location>
</feature>
<feature type="helix" evidence="94">
    <location>
        <begin position="1566"/>
        <end position="1573"/>
    </location>
</feature>
<feature type="helix" evidence="94">
    <location>
        <begin position="1575"/>
        <end position="1583"/>
    </location>
</feature>
<feature type="turn" evidence="94">
    <location>
        <begin position="1584"/>
        <end position="1588"/>
    </location>
</feature>
<feature type="helix" evidence="94">
    <location>
        <begin position="1590"/>
        <end position="1606"/>
    </location>
</feature>
<feature type="turn" evidence="94">
    <location>
        <begin position="1607"/>
        <end position="1610"/>
    </location>
</feature>
<feature type="helix" evidence="94">
    <location>
        <begin position="1613"/>
        <end position="1624"/>
    </location>
</feature>
<feature type="helix" evidence="94">
    <location>
        <begin position="1625"/>
        <end position="1628"/>
    </location>
</feature>
<feature type="turn" evidence="94">
    <location>
        <begin position="1631"/>
        <end position="1633"/>
    </location>
</feature>
<feature type="strand" evidence="89">
    <location>
        <begin position="1634"/>
        <end position="1637"/>
    </location>
</feature>
<feature type="helix" evidence="94">
    <location>
        <begin position="1639"/>
        <end position="1655"/>
    </location>
</feature>
<feature type="strand" evidence="90">
    <location>
        <begin position="1658"/>
        <end position="1660"/>
    </location>
</feature>
<feature type="strand" evidence="94">
    <location>
        <begin position="1665"/>
        <end position="1667"/>
    </location>
</feature>
<feature type="helix" evidence="94">
    <location>
        <begin position="1668"/>
        <end position="1680"/>
    </location>
</feature>
<feature type="strand" evidence="94">
    <location>
        <begin position="1682"/>
        <end position="1684"/>
    </location>
</feature>
<feature type="helix" evidence="94">
    <location>
        <begin position="1686"/>
        <end position="1693"/>
    </location>
</feature>
<feature type="helix" evidence="94">
    <location>
        <begin position="1694"/>
        <end position="1698"/>
    </location>
</feature>
<feature type="turn" evidence="94">
    <location>
        <begin position="1699"/>
        <end position="1701"/>
    </location>
</feature>
<feature type="turn" evidence="94">
    <location>
        <begin position="1704"/>
        <end position="1706"/>
    </location>
</feature>
<feature type="helix" evidence="94">
    <location>
        <begin position="1707"/>
        <end position="1718"/>
    </location>
</feature>
<feature type="turn" evidence="94">
    <location>
        <begin position="1719"/>
        <end position="1721"/>
    </location>
</feature>
<feature type="strand" evidence="94">
    <location>
        <begin position="1724"/>
        <end position="1726"/>
    </location>
</feature>
<feature type="helix" evidence="94">
    <location>
        <begin position="1734"/>
        <end position="1752"/>
    </location>
</feature>
<feature type="helix" evidence="94">
    <location>
        <begin position="1756"/>
        <end position="1766"/>
    </location>
</feature>
<feature type="strand" evidence="94">
    <location>
        <begin position="1769"/>
        <end position="1771"/>
    </location>
</feature>
<feature type="helix" evidence="94">
    <location>
        <begin position="1775"/>
        <end position="1786"/>
    </location>
</feature>
<feature type="strand" evidence="92">
    <location>
        <begin position="1787"/>
        <end position="1789"/>
    </location>
</feature>
<feature type="helix" evidence="94">
    <location>
        <begin position="1791"/>
        <end position="1806"/>
    </location>
</feature>
<feature type="helix" evidence="94">
    <location>
        <begin position="1813"/>
        <end position="1830"/>
    </location>
</feature>
<feature type="turn" evidence="90">
    <location>
        <begin position="1832"/>
        <end position="1834"/>
    </location>
</feature>
<feature type="helix" evidence="94">
    <location>
        <begin position="1837"/>
        <end position="1851"/>
    </location>
</feature>
<feature type="strand" evidence="92">
    <location>
        <begin position="1857"/>
        <end position="1859"/>
    </location>
</feature>
<feature type="helix" evidence="94">
    <location>
        <begin position="1860"/>
        <end position="1882"/>
    </location>
</feature>
<feature type="helix" evidence="94">
    <location>
        <begin position="1887"/>
        <end position="1890"/>
    </location>
</feature>
<feature type="strand" evidence="94">
    <location>
        <begin position="1891"/>
        <end position="1893"/>
    </location>
</feature>
<feature type="helix" evidence="94">
    <location>
        <begin position="1896"/>
        <end position="1899"/>
    </location>
</feature>
<feature type="strand" evidence="91">
    <location>
        <begin position="1900"/>
        <end position="1902"/>
    </location>
</feature>
<feature type="strand" evidence="91">
    <location>
        <begin position="1906"/>
        <end position="1908"/>
    </location>
</feature>
<feature type="helix" evidence="94">
    <location>
        <begin position="1909"/>
        <end position="1923"/>
    </location>
</feature>
<feature type="strand" evidence="90">
    <location>
        <begin position="1931"/>
        <end position="1933"/>
    </location>
</feature>
<feature type="helix" evidence="94">
    <location>
        <begin position="1934"/>
        <end position="1952"/>
    </location>
</feature>
<feature type="strand" evidence="94">
    <location>
        <begin position="1959"/>
        <end position="1961"/>
    </location>
</feature>
<feature type="helix" evidence="94">
    <location>
        <begin position="1962"/>
        <end position="1965"/>
    </location>
</feature>
<feature type="strand" evidence="90">
    <location>
        <begin position="1967"/>
        <end position="1969"/>
    </location>
</feature>
<feature type="helix" evidence="94">
    <location>
        <begin position="1971"/>
        <end position="1973"/>
    </location>
</feature>
<feature type="strand" evidence="90">
    <location>
        <begin position="1974"/>
        <end position="1976"/>
    </location>
</feature>
<feature type="helix" evidence="94">
    <location>
        <begin position="1978"/>
        <end position="1981"/>
    </location>
</feature>
<feature type="strand" evidence="91">
    <location>
        <begin position="1984"/>
        <end position="1986"/>
    </location>
</feature>
<feature type="strand" evidence="92">
    <location>
        <begin position="1992"/>
        <end position="1996"/>
    </location>
</feature>
<feature type="helix" evidence="91">
    <location>
        <begin position="1999"/>
        <end position="2013"/>
    </location>
</feature>
<feature type="helix" evidence="91">
    <location>
        <begin position="2026"/>
        <end position="2028"/>
    </location>
</feature>
<feature type="turn" evidence="93">
    <location>
        <begin position="2031"/>
        <end position="2033"/>
    </location>
</feature>
<feature type="helix" evidence="94">
    <location>
        <begin position="2035"/>
        <end position="2047"/>
    </location>
</feature>
<feature type="turn" evidence="93">
    <location>
        <begin position="2065"/>
        <end position="2067"/>
    </location>
</feature>
<feature type="strand" evidence="94">
    <location>
        <begin position="2086"/>
        <end position="2089"/>
    </location>
</feature>
<feature type="strand" evidence="94">
    <location>
        <begin position="2091"/>
        <end position="2093"/>
    </location>
</feature>
<feature type="helix" evidence="94">
    <location>
        <begin position="2094"/>
        <end position="2105"/>
    </location>
</feature>
<feature type="strand" evidence="93">
    <location>
        <begin position="2106"/>
        <end position="2110"/>
    </location>
</feature>
<feature type="helix" evidence="94">
    <location>
        <begin position="2125"/>
        <end position="2133"/>
    </location>
</feature>
<feature type="strand" evidence="93">
    <location>
        <begin position="2136"/>
        <end position="2138"/>
    </location>
</feature>
<feature type="helix" evidence="94">
    <location>
        <begin position="2140"/>
        <end position="2152"/>
    </location>
</feature>
<feature type="helix" evidence="94">
    <location>
        <begin position="2154"/>
        <end position="2157"/>
    </location>
</feature>
<feature type="helix" evidence="94">
    <location>
        <begin position="2158"/>
        <end position="2163"/>
    </location>
</feature>
<feature type="helix" evidence="94">
    <location>
        <begin position="2166"/>
        <end position="2173"/>
    </location>
</feature>
<feature type="turn" evidence="94">
    <location>
        <begin position="2179"/>
        <end position="2181"/>
    </location>
</feature>
<feature type="helix" evidence="94">
    <location>
        <begin position="2185"/>
        <end position="2195"/>
    </location>
</feature>
<feature type="turn" evidence="90">
    <location>
        <begin position="2196"/>
        <end position="2199"/>
    </location>
</feature>
<feature type="helix" evidence="94">
    <location>
        <begin position="2206"/>
        <end position="2221"/>
    </location>
</feature>
<feature type="helix" evidence="94">
    <location>
        <begin position="2228"/>
        <end position="2244"/>
    </location>
</feature>
<feature type="turn" evidence="90">
    <location>
        <begin position="2245"/>
        <end position="2248"/>
    </location>
</feature>
<feature type="helix" evidence="94">
    <location>
        <begin position="2256"/>
        <end position="2260"/>
    </location>
</feature>
<feature type="strand" evidence="93">
    <location>
        <begin position="2264"/>
        <end position="2266"/>
    </location>
</feature>
<feature type="turn" evidence="94">
    <location>
        <begin position="2268"/>
        <end position="2270"/>
    </location>
</feature>
<feature type="helix" evidence="94">
    <location>
        <begin position="2271"/>
        <end position="2282"/>
    </location>
</feature>
<feature type="strand" evidence="91">
    <location>
        <begin position="2292"/>
        <end position="2294"/>
    </location>
</feature>
<feature type="helix" evidence="94">
    <location>
        <begin position="2296"/>
        <end position="2305"/>
    </location>
</feature>
<feature type="helix" evidence="94">
    <location>
        <begin position="2306"/>
        <end position="2308"/>
    </location>
</feature>
<feature type="helix" evidence="94">
    <location>
        <begin position="2313"/>
        <end position="2332"/>
    </location>
</feature>
<feature type="strand" evidence="89">
    <location>
        <begin position="2335"/>
        <end position="2337"/>
    </location>
</feature>
<feature type="helix" evidence="94">
    <location>
        <begin position="2338"/>
        <end position="2353"/>
    </location>
</feature>
<feature type="turn" evidence="91">
    <location>
        <begin position="2354"/>
        <end position="2356"/>
    </location>
</feature>
<feature type="helix" evidence="94">
    <location>
        <begin position="2357"/>
        <end position="2370"/>
    </location>
</feature>
<feature type="helix" evidence="94">
    <location>
        <begin position="2372"/>
        <end position="2374"/>
    </location>
</feature>
<feature type="helix" evidence="94">
    <location>
        <begin position="2375"/>
        <end position="2385"/>
    </location>
</feature>
<feature type="helix" evidence="94">
    <location>
        <begin position="2386"/>
        <end position="2388"/>
    </location>
</feature>
<feature type="helix" evidence="94">
    <location>
        <begin position="2392"/>
        <end position="2403"/>
    </location>
</feature>
<feature type="strand" evidence="90">
    <location>
        <begin position="2404"/>
        <end position="2407"/>
    </location>
</feature>
<feature type="helix" evidence="94">
    <location>
        <begin position="2412"/>
        <end position="2417"/>
    </location>
</feature>
<feature type="helix" evidence="94">
    <location>
        <begin position="2420"/>
        <end position="2425"/>
    </location>
</feature>
<feature type="helix" evidence="94">
    <location>
        <begin position="2429"/>
        <end position="2442"/>
    </location>
</feature>
<feature type="helix" evidence="94">
    <location>
        <begin position="2443"/>
        <end position="2445"/>
    </location>
</feature>
<feature type="helix" evidence="94">
    <location>
        <begin position="2448"/>
        <end position="2459"/>
    </location>
</feature>
<feature type="turn" evidence="94">
    <location>
        <begin position="2460"/>
        <end position="2463"/>
    </location>
</feature>
<feature type="helix" evidence="94">
    <location>
        <begin position="2467"/>
        <end position="2481"/>
    </location>
</feature>
<feature type="strand" evidence="89">
    <location>
        <begin position="2487"/>
        <end position="2490"/>
    </location>
</feature>
<feature type="strand" evidence="91">
    <location>
        <begin position="2492"/>
        <end position="2494"/>
    </location>
</feature>
<feature type="helix" evidence="94">
    <location>
        <begin position="2495"/>
        <end position="2508"/>
    </location>
</feature>
<feature type="helix" evidence="94">
    <location>
        <begin position="2509"/>
        <end position="2511"/>
    </location>
</feature>
<feature type="helix" evidence="94">
    <location>
        <begin position="2517"/>
        <end position="2526"/>
    </location>
</feature>
<feature type="turn" evidence="94">
    <location>
        <begin position="2528"/>
        <end position="2530"/>
    </location>
</feature>
<feature type="helix" evidence="94">
    <location>
        <begin position="2535"/>
        <end position="2543"/>
    </location>
</feature>
<feature type="helix" evidence="94">
    <location>
        <begin position="2548"/>
        <end position="2550"/>
    </location>
</feature>
<feature type="helix" evidence="94">
    <location>
        <begin position="2551"/>
        <end position="2563"/>
    </location>
</feature>
<feature type="strand" evidence="94">
    <location>
        <begin position="2566"/>
        <end position="2570"/>
    </location>
</feature>
<feature type="strand" evidence="91">
    <location>
        <begin position="2572"/>
        <end position="2576"/>
    </location>
</feature>
<feature type="helix" evidence="91">
    <location>
        <begin position="2581"/>
        <end position="2583"/>
    </location>
</feature>
<feature type="helix" evidence="91">
    <location>
        <begin position="2594"/>
        <end position="2602"/>
    </location>
</feature>
<feature type="strand" evidence="91">
    <location>
        <begin position="2634"/>
        <end position="2636"/>
    </location>
</feature>
<feature type="strand" evidence="92">
    <location>
        <begin position="2658"/>
        <end position="2660"/>
    </location>
</feature>
<feature type="strand" evidence="92">
    <location>
        <begin position="2721"/>
        <end position="2723"/>
    </location>
</feature>
<feature type="helix" evidence="94">
    <location>
        <begin position="2736"/>
        <end position="2766"/>
    </location>
</feature>
<feature type="strand" evidence="91">
    <location>
        <begin position="2772"/>
        <end position="2774"/>
    </location>
</feature>
<feature type="turn" evidence="91">
    <location>
        <begin position="2777"/>
        <end position="2779"/>
    </location>
</feature>
<feature type="helix" evidence="94">
    <location>
        <begin position="2788"/>
        <end position="2798"/>
    </location>
</feature>
<feature type="helix" evidence="94">
    <location>
        <begin position="2802"/>
        <end position="2819"/>
    </location>
</feature>
<feature type="strand" evidence="94">
    <location>
        <begin position="2822"/>
        <end position="2824"/>
    </location>
</feature>
<feature type="helix" evidence="94">
    <location>
        <begin position="2826"/>
        <end position="2846"/>
    </location>
</feature>
<feature type="helix" evidence="94">
    <location>
        <begin position="2852"/>
        <end position="2863"/>
    </location>
</feature>
<feature type="helix" evidence="94">
    <location>
        <begin position="2866"/>
        <end position="2868"/>
    </location>
</feature>
<feature type="helix" evidence="94">
    <location>
        <begin position="2873"/>
        <end position="2882"/>
    </location>
</feature>
<feature type="helix" evidence="94">
    <location>
        <begin position="2886"/>
        <end position="2897"/>
    </location>
</feature>
<feature type="helix" evidence="94">
    <location>
        <begin position="2920"/>
        <end position="2933"/>
    </location>
</feature>
<feature type="turn" evidence="94">
    <location>
        <begin position="2936"/>
        <end position="2940"/>
    </location>
</feature>
<feature type="strand" evidence="94">
    <location>
        <begin position="2941"/>
        <end position="2943"/>
    </location>
</feature>
<feature type="helix" evidence="94">
    <location>
        <begin position="2945"/>
        <end position="2947"/>
    </location>
</feature>
<feature type="helix" evidence="94">
    <location>
        <begin position="2951"/>
        <end position="2961"/>
    </location>
</feature>
<feature type="helix" evidence="94">
    <location>
        <begin position="2965"/>
        <end position="2976"/>
    </location>
</feature>
<feature type="strand" evidence="90">
    <location>
        <begin position="2982"/>
        <end position="2984"/>
    </location>
</feature>
<feature type="helix" evidence="94">
    <location>
        <begin position="2988"/>
        <end position="3004"/>
    </location>
</feature>
<feature type="helix" evidence="94">
    <location>
        <begin position="3008"/>
        <end position="3016"/>
    </location>
</feature>
<feature type="turn" evidence="94">
    <location>
        <begin position="3017"/>
        <end position="3019"/>
    </location>
</feature>
<feature type="strand" evidence="89">
    <location>
        <begin position="3022"/>
        <end position="3024"/>
    </location>
</feature>
<feature type="turn" evidence="94">
    <location>
        <begin position="3026"/>
        <end position="3031"/>
    </location>
</feature>
<feature type="helix" evidence="94">
    <location>
        <begin position="3034"/>
        <end position="3036"/>
    </location>
</feature>
<feature type="turn" evidence="94">
    <location>
        <begin position="3037"/>
        <end position="3040"/>
    </location>
</feature>
<feature type="helix" evidence="94">
    <location>
        <begin position="3041"/>
        <end position="3053"/>
    </location>
</feature>
<feature type="helix" evidence="94">
    <location>
        <begin position="3061"/>
        <end position="3068"/>
    </location>
</feature>
<feature type="strand" evidence="94">
    <location>
        <begin position="3069"/>
        <end position="3072"/>
    </location>
</feature>
<feature type="helix" evidence="94">
    <location>
        <begin position="3073"/>
        <end position="3081"/>
    </location>
</feature>
<feature type="helix" evidence="94">
    <location>
        <begin position="3085"/>
        <end position="3092"/>
    </location>
</feature>
<feature type="helix" evidence="94">
    <location>
        <begin position="3096"/>
        <end position="3115"/>
    </location>
</feature>
<feature type="turn" evidence="94">
    <location>
        <begin position="3122"/>
        <end position="3124"/>
    </location>
</feature>
<feature type="helix" evidence="94">
    <location>
        <begin position="3125"/>
        <end position="3129"/>
    </location>
</feature>
<feature type="helix" evidence="94">
    <location>
        <begin position="3132"/>
        <end position="3146"/>
    </location>
</feature>
<feature type="turn" evidence="94">
    <location>
        <begin position="3148"/>
        <end position="3152"/>
    </location>
</feature>
<feature type="helix" evidence="94">
    <location>
        <begin position="3155"/>
        <end position="3165"/>
    </location>
</feature>
<feature type="turn" evidence="94">
    <location>
        <begin position="3171"/>
        <end position="3173"/>
    </location>
</feature>
<feature type="helix" evidence="94">
    <location>
        <begin position="3176"/>
        <end position="3195"/>
    </location>
</feature>
<feature type="strand" evidence="93">
    <location>
        <begin position="3200"/>
        <end position="3203"/>
    </location>
</feature>
<feature type="helix" evidence="93">
    <location>
        <begin position="3206"/>
        <end position="3210"/>
    </location>
</feature>
<feature type="helix" evidence="93">
    <location>
        <begin position="3213"/>
        <end position="3220"/>
    </location>
</feature>
<feature type="helix" evidence="94">
    <location>
        <begin position="3227"/>
        <end position="3248"/>
    </location>
</feature>
<feature type="helix" evidence="94">
    <location>
        <begin position="3252"/>
        <end position="3260"/>
    </location>
</feature>
<feature type="turn" evidence="94">
    <location>
        <begin position="3261"/>
        <end position="3265"/>
    </location>
</feature>
<feature type="helix" evidence="94">
    <location>
        <begin position="3270"/>
        <end position="3288"/>
    </location>
</feature>
<feature type="strand" evidence="95">
    <location>
        <begin position="3289"/>
        <end position="3291"/>
    </location>
</feature>
<feature type="strand" evidence="94">
    <location>
        <begin position="3293"/>
        <end position="3295"/>
    </location>
</feature>
<feature type="helix" evidence="94">
    <location>
        <begin position="3296"/>
        <end position="3307"/>
    </location>
</feature>
<feature type="strand" evidence="92">
    <location>
        <begin position="3308"/>
        <end position="3310"/>
    </location>
</feature>
<feature type="turn" evidence="94">
    <location>
        <begin position="3312"/>
        <end position="3318"/>
    </location>
</feature>
<feature type="helix" evidence="94">
    <location>
        <begin position="3320"/>
        <end position="3343"/>
    </location>
</feature>
<feature type="helix" evidence="94">
    <location>
        <begin position="3347"/>
        <end position="3350"/>
    </location>
</feature>
<feature type="strand" evidence="94">
    <location>
        <begin position="3353"/>
        <end position="3355"/>
    </location>
</feature>
<feature type="helix" evidence="94">
    <location>
        <begin position="3356"/>
        <end position="3360"/>
    </location>
</feature>
<feature type="strand" evidence="90">
    <location>
        <begin position="3364"/>
        <end position="3366"/>
    </location>
</feature>
<feature type="turn" evidence="94">
    <location>
        <begin position="3369"/>
        <end position="3371"/>
    </location>
</feature>
<feature type="helix" evidence="94">
    <location>
        <begin position="3372"/>
        <end position="3393"/>
    </location>
</feature>
<feature type="turn" evidence="91">
    <location>
        <begin position="3403"/>
        <end position="3405"/>
    </location>
</feature>
<feature type="helix" evidence="94">
    <location>
        <begin position="3410"/>
        <end position="3428"/>
    </location>
</feature>
<feature type="helix" evidence="94">
    <location>
        <begin position="3434"/>
        <end position="3439"/>
    </location>
</feature>
<feature type="helix" evidence="94">
    <location>
        <begin position="3442"/>
        <end position="3455"/>
    </location>
</feature>
<feature type="helix" evidence="94">
    <location>
        <begin position="3459"/>
        <end position="3462"/>
    </location>
</feature>
<feature type="helix" evidence="94">
    <location>
        <begin position="3463"/>
        <end position="3466"/>
    </location>
</feature>
<feature type="helix" evidence="94">
    <location>
        <begin position="3467"/>
        <end position="3473"/>
    </location>
</feature>
<feature type="strand" evidence="94">
    <location>
        <begin position="3477"/>
        <end position="3479"/>
    </location>
</feature>
<feature type="helix" evidence="94">
    <location>
        <begin position="3481"/>
        <end position="3488"/>
    </location>
</feature>
<feature type="helix" evidence="94">
    <location>
        <begin position="3492"/>
        <end position="3498"/>
    </location>
</feature>
<feature type="helix" evidence="94">
    <location>
        <begin position="3499"/>
        <end position="3502"/>
    </location>
</feature>
<feature type="turn" evidence="94">
    <location>
        <begin position="3503"/>
        <end position="3507"/>
    </location>
</feature>
<feature type="helix" evidence="91">
    <location>
        <begin position="3509"/>
        <end position="3511"/>
    </location>
</feature>
<feature type="turn" evidence="94">
    <location>
        <begin position="3512"/>
        <end position="3514"/>
    </location>
</feature>
<feature type="helix" evidence="94">
    <location>
        <begin position="3515"/>
        <end position="3524"/>
    </location>
</feature>
<feature type="helix" evidence="91">
    <location>
        <begin position="3526"/>
        <end position="3528"/>
    </location>
</feature>
<feature type="helix" evidence="94">
    <location>
        <begin position="3530"/>
        <end position="3538"/>
    </location>
</feature>
<feature type="strand" evidence="94">
    <location>
        <begin position="3545"/>
        <end position="3547"/>
    </location>
</feature>
<feature type="helix" evidence="94">
    <location>
        <begin position="3548"/>
        <end position="3561"/>
    </location>
</feature>
<feature type="turn" evidence="94">
    <location>
        <begin position="3563"/>
        <end position="3566"/>
    </location>
</feature>
<feature type="helix" evidence="94">
    <location>
        <begin position="3567"/>
        <end position="3576"/>
    </location>
</feature>
<feature type="helix" evidence="94">
    <location>
        <begin position="3581"/>
        <end position="3593"/>
    </location>
</feature>
<feature type="turn" evidence="94">
    <location>
        <begin position="3594"/>
        <end position="3598"/>
    </location>
</feature>
<feature type="strand" evidence="87">
    <location>
        <begin position="3602"/>
        <end position="3604"/>
    </location>
</feature>
<feature type="helix" evidence="94">
    <location>
        <begin position="3605"/>
        <end position="3615"/>
    </location>
</feature>
<feature type="turn" evidence="94">
    <location>
        <begin position="3616"/>
        <end position="3618"/>
    </location>
</feature>
<feature type="helix" evidence="94">
    <location>
        <begin position="3621"/>
        <end position="3626"/>
    </location>
</feature>
<feature type="helix" evidence="94">
    <location>
        <begin position="3633"/>
        <end position="3639"/>
    </location>
</feature>
<feature type="helix" evidence="94">
    <location>
        <begin position="3642"/>
        <end position="3649"/>
    </location>
</feature>
<feature type="helix" evidence="94">
    <location>
        <begin position="3651"/>
        <end position="3653"/>
    </location>
</feature>
<feature type="helix" evidence="93">
    <location>
        <begin position="3657"/>
        <end position="3660"/>
    </location>
</feature>
<feature type="helix" evidence="94">
    <location>
        <begin position="3661"/>
        <end position="3672"/>
    </location>
</feature>
<feature type="helix" evidence="94">
    <location>
        <begin position="3681"/>
        <end position="3683"/>
    </location>
</feature>
<feature type="turn" evidence="94">
    <location>
        <begin position="3685"/>
        <end position="3689"/>
    </location>
</feature>
<feature type="strand" evidence="89">
    <location>
        <begin position="3694"/>
        <end position="3696"/>
    </location>
</feature>
<feature type="strand" evidence="94">
    <location>
        <begin position="3707"/>
        <end position="3709"/>
    </location>
</feature>
<feature type="turn" evidence="94">
    <location>
        <begin position="3713"/>
        <end position="3715"/>
    </location>
</feature>
<feature type="strand" evidence="94">
    <location>
        <begin position="3719"/>
        <end position="3722"/>
    </location>
</feature>
<feature type="strand" evidence="94">
    <location>
        <begin position="3730"/>
        <end position="3733"/>
    </location>
</feature>
<feature type="strand" evidence="95">
    <location>
        <begin position="3736"/>
        <end position="3738"/>
    </location>
</feature>
<feature type="strand" evidence="94">
    <location>
        <begin position="3739"/>
        <end position="3742"/>
    </location>
</feature>
<feature type="turn" evidence="90">
    <location>
        <begin position="3743"/>
        <end position="3745"/>
    </location>
</feature>
<feature type="strand" evidence="94">
    <location>
        <begin position="3747"/>
        <end position="3753"/>
    </location>
</feature>
<feature type="helix" evidence="94">
    <location>
        <begin position="3759"/>
        <end position="3774"/>
    </location>
</feature>
<feature type="turn" evidence="94">
    <location>
        <begin position="3775"/>
        <end position="3777"/>
    </location>
</feature>
<feature type="helix" evidence="94">
    <location>
        <begin position="3779"/>
        <end position="3783"/>
    </location>
</feature>
<feature type="strand" evidence="94">
    <location>
        <begin position="3793"/>
        <end position="3797"/>
    </location>
</feature>
<feature type="strand" evidence="94">
    <location>
        <begin position="3800"/>
        <end position="3804"/>
    </location>
</feature>
<feature type="strand" evidence="94">
    <location>
        <begin position="3809"/>
        <end position="3811"/>
    </location>
</feature>
<feature type="helix" evidence="94">
    <location>
        <begin position="3812"/>
        <end position="3819"/>
    </location>
</feature>
<feature type="helix" evidence="94">
    <location>
        <begin position="3822"/>
        <end position="3829"/>
    </location>
</feature>
<feature type="helix" evidence="94">
    <location>
        <begin position="3835"/>
        <end position="3847"/>
    </location>
</feature>
<feature type="strand" evidence="95">
    <location>
        <begin position="3848"/>
        <end position="3851"/>
    </location>
</feature>
<feature type="helix" evidence="94">
    <location>
        <begin position="3854"/>
        <end position="3860"/>
    </location>
</feature>
<feature type="helix" evidence="94">
    <location>
        <begin position="3864"/>
        <end position="3875"/>
    </location>
</feature>
<feature type="strand" evidence="88">
    <location>
        <begin position="3876"/>
        <end position="3878"/>
    </location>
</feature>
<feature type="helix" evidence="94">
    <location>
        <begin position="3882"/>
        <end position="3889"/>
    </location>
</feature>
<feature type="strand" evidence="91">
    <location>
        <begin position="3890"/>
        <end position="3893"/>
    </location>
</feature>
<feature type="helix" evidence="94">
    <location>
        <begin position="3894"/>
        <end position="3917"/>
    </location>
</feature>
<feature type="strand" evidence="94">
    <location>
        <begin position="3927"/>
        <end position="3931"/>
    </location>
</feature>
<feature type="turn" evidence="94">
    <location>
        <begin position="3932"/>
        <end position="3934"/>
    </location>
</feature>
<feature type="strand" evidence="94">
    <location>
        <begin position="3937"/>
        <end position="3939"/>
    </location>
</feature>
<feature type="turn" evidence="92">
    <location>
        <begin position="3945"/>
        <end position="3947"/>
    </location>
</feature>
<feature type="turn" evidence="94">
    <location>
        <begin position="3949"/>
        <end position="3951"/>
    </location>
</feature>
<feature type="strand" evidence="94">
    <location>
        <begin position="3952"/>
        <end position="3955"/>
    </location>
</feature>
<feature type="strand" evidence="86">
    <location>
        <begin position="3959"/>
        <end position="3961"/>
    </location>
</feature>
<feature type="helix" evidence="94">
    <location>
        <begin position="3965"/>
        <end position="3970"/>
    </location>
</feature>
<feature type="turn" evidence="94">
    <location>
        <begin position="3971"/>
        <end position="3973"/>
    </location>
</feature>
<feature type="turn" evidence="90">
    <location>
        <begin position="3976"/>
        <end position="3978"/>
    </location>
</feature>
<feature type="helix" evidence="94">
    <location>
        <begin position="3979"/>
        <end position="3992"/>
    </location>
</feature>
<feature type="helix" evidence="94">
    <location>
        <begin position="3996"/>
        <end position="4001"/>
    </location>
</feature>
<feature type="helix" evidence="94">
    <location>
        <begin position="4004"/>
        <end position="4007"/>
    </location>
</feature>
<feature type="helix" evidence="90">
    <location>
        <begin position="4009"/>
        <end position="4011"/>
    </location>
</feature>
<feature type="helix" evidence="90">
    <location>
        <begin position="4013"/>
        <end position="4021"/>
    </location>
</feature>
<feature type="helix" evidence="92">
    <location>
        <begin position="4027"/>
        <end position="4029"/>
    </location>
</feature>
<feature type="strand" evidence="91">
    <location>
        <begin position="4030"/>
        <end position="4032"/>
    </location>
</feature>
<feature type="helix" evidence="88">
    <location>
        <begin position="4034"/>
        <end position="4036"/>
    </location>
</feature>
<feature type="helix" evidence="94">
    <location>
        <begin position="4039"/>
        <end position="4049"/>
    </location>
</feature>
<feature type="strand" evidence="94">
    <location>
        <begin position="4052"/>
        <end position="4054"/>
    </location>
</feature>
<feature type="helix" evidence="94">
    <location>
        <begin position="4056"/>
        <end position="4068"/>
    </location>
</feature>
<feature type="strand" evidence="91">
    <location>
        <begin position="4069"/>
        <end position="4071"/>
    </location>
</feature>
<feature type="helix" evidence="94">
    <location>
        <begin position="4074"/>
        <end position="4082"/>
    </location>
</feature>
<feature type="strand" evidence="94">
    <location>
        <begin position="4085"/>
        <end position="4087"/>
    </location>
</feature>
<feature type="helix" evidence="94">
    <location>
        <begin position="4089"/>
        <end position="4092"/>
    </location>
</feature>
<feature type="strand" evidence="94">
    <location>
        <begin position="4095"/>
        <end position="4097"/>
    </location>
</feature>
<feature type="helix" evidence="94">
    <location>
        <begin position="4100"/>
        <end position="4111"/>
    </location>
</feature>
<feature type="helix" evidence="94">
    <location>
        <begin position="4114"/>
        <end position="4117"/>
    </location>
</feature>
<feature type="helix" evidence="94">
    <location>
        <begin position="4122"/>
        <end position="4124"/>
    </location>
</feature>
<gene>
    <name type="primary">PRKDC</name>
    <name type="synonym">HYRC</name>
    <name type="synonym">HYRC1</name>
</gene>
<name>PRKDC_HUMAN</name>
<keyword id="KW-0002">3D-structure</keyword>
<keyword id="KW-0007">Acetylation</keyword>
<keyword id="KW-0025">Alternative splicing</keyword>
<keyword id="KW-0067">ATP-binding</keyword>
<keyword id="KW-0090">Biological rhythms</keyword>
<keyword id="KW-0963">Cytoplasm</keyword>
<keyword id="KW-0225">Disease variant</keyword>
<keyword id="KW-0227">DNA damage</keyword>
<keyword id="KW-0233">DNA recombination</keyword>
<keyword id="KW-0234">DNA repair</keyword>
<keyword id="KW-0238">DNA-binding</keyword>
<keyword id="KW-0391">Immunity</keyword>
<keyword id="KW-0399">Innate immunity</keyword>
<keyword id="KW-0418">Kinase</keyword>
<keyword id="KW-0547">Nucleotide-binding</keyword>
<keyword id="KW-0539">Nucleus</keyword>
<keyword id="KW-0597">Phosphoprotein</keyword>
<keyword id="KW-1267">Proteomics identification</keyword>
<keyword id="KW-1185">Reference proteome</keyword>
<keyword id="KW-0677">Repeat</keyword>
<keyword id="KW-0690">Ribosome biogenesis</keyword>
<keyword id="KW-0705">SCID</keyword>
<keyword id="KW-0723">Serine/threonine-protein kinase</keyword>
<keyword id="KW-0802">TPR repeat</keyword>
<keyword id="KW-0808">Transferase</keyword>
<keyword id="KW-0832">Ubl conjugation</keyword>
<protein>
    <recommendedName>
        <fullName>DNA-dependent protein kinase catalytic subunit</fullName>
        <shortName>DNA-PK catalytic subunit</shortName>
        <shortName>DNA-PKcs</shortName>
        <ecNumber evidence="22 48 53 58">2.7.11.1</ecNumber>
    </recommendedName>
    <alternativeName>
        <fullName>DNPK1</fullName>
    </alternativeName>
    <alternativeName>
        <fullName evidence="70">Ser-473 kinase</fullName>
        <shortName evidence="70">S473K</shortName>
    </alternativeName>
    <alternativeName>
        <fullName>p460</fullName>
    </alternativeName>
</protein>
<proteinExistence type="evidence at protein level"/>
<comment type="function">
    <text evidence="1 6 7 8 9 12 13 14 15 16 17 18 21 22 24 28 29 30 32 38 43 48 49 50 51 52 53 55 56 57 58 59 60 62 63 64 67">Serine/threonine-protein kinase that acts as a molecular sensor for DNA damage (PubMed:11955432, PubMed:12649176, PubMed:14734805, PubMed:33854234). Involved in DNA non-homologous end joining (NHEJ) required for double-strand break (DSB) repair and V(D)J recombination (PubMed:11955432, PubMed:12649176, PubMed:14734805, PubMed:33854234, PubMed:34352203). Must be bound to DNA to express its catalytic properties (PubMed:11955432). Promotes processing of hairpin DNA structures in V(D)J recombination by activation of the hairpin endonuclease artemis (DCLRE1C) (PubMed:11955432). Recruited by XRCC5 and XRCC6 to DNA ends and is required to (1) protect and align broken ends of DNA, thereby preventing their degradation, (2) and sequester the DSB for repair by NHEJ (PubMed:11955432, PubMed:12649176, PubMed:14734805, PubMed:15574326, PubMed:33854234). Acts as a scaffold protein to aid the localization of DNA repair proteins to the site of damage (PubMed:11955432, PubMed:12649176, PubMed:14734805, PubMed:15574326). The assembly of the DNA-PK complex at DNA ends is also required for the NHEJ ligation step (PubMed:11955432, PubMed:12649176, PubMed:14734805, PubMed:15574326). Found at the ends of chromosomes, suggesting a further role in the maintenance of telomeric stability and the prevention of chromosomal end fusion (By similarity). Also involved in modulation of transcription (PubMed:11955432, PubMed:12649176, PubMed:14734805, PubMed:15574326). As part of the DNA-PK complex, involved in the early steps of ribosome assembly by promoting the processing of precursor rRNA into mature 18S rRNA in the small-subunit processome (PubMed:32103174). Binding to U3 small nucleolar RNA, recruits PRKDC and XRCC5/Ku86 to the small-subunit processome (PubMed:32103174). Recognizes the substrate consensus sequence [ST]-Q (PubMed:11955432, PubMed:12649176, PubMed:14734805, PubMed:15574326). Phosphorylates 'Ser-139' of histone variant H2AX, thereby regulating DNA damage response mechanism (PubMed:14627815, PubMed:16046194). Phosphorylates ASF1A, DCLRE1C, c-Abl/ABL1, histone H1, HSPCA, c-jun/JUN, p53/TP53, PARP1, POU2F1, DHX9, FH, SRF, NHEJ1/XLF, XRCC1, XRCC4, XRCC5, XRCC6, WRN, MYC and RFA2 (PubMed:10026262, PubMed:10467406, PubMed:11889123, PubMed:12509254, PubMed:14599745, PubMed:14612514, PubMed:14704337, PubMed:15177042, PubMed:1597196, PubMed:16397295, PubMed:18644470, PubMed:2247066, PubMed:2507541, PubMed:26237645, PubMed:26666690, PubMed:28712728, PubMed:29478807, PubMed:30247612, PubMed:8407951, PubMed:8464713, PubMed:9139719, PubMed:9362500). Can phosphorylate C1D not only in the presence of linear DNA but also in the presence of supercoiled DNA (PubMed:9679063). Ability to phosphorylate p53/TP53 in the presence of supercoiled DNA is dependent on C1D (PubMed:9363941). Acts as a regulator of the phosphatidylinositol 3-kinase/protein kinase B signal transduction by mediating phosphorylation of 'Ser-473' of protein kinase B (PKB/AKT1, PKB/AKT2, PKB/AKT3), promoting their activation (PubMed:15262962). Contributes to the determination of the circadian period length by antagonizing phosphorylation of CRY1 'Ser-588' and increasing CRY1 protein stability, most likely through an indirect mechanism (By similarity). Plays a role in the regulation of DNA virus-mediated innate immune response by assembling into the HDP-RNP complex, a complex that serves as a platform for IRF3 phosphorylation and subsequent innate immune response activation through the cGAS-STING pathway (PubMed:28712728). Also regulates the cGAS-STING pathway by catalyzing phosphorylation of CGAS, thereby impairing CGAS oligomerization and activation (PubMed:33273464). Also regulates the cGAS-STING pathway by mediating phosphorylation of PARP1 (PubMed:35460603).</text>
</comment>
<comment type="catalytic activity">
    <reaction evidence="22 51 53">
        <text>L-seryl-[protein] + ATP = O-phospho-L-seryl-[protein] + ADP + H(+)</text>
        <dbReference type="Rhea" id="RHEA:17989"/>
        <dbReference type="Rhea" id="RHEA-COMP:9863"/>
        <dbReference type="Rhea" id="RHEA-COMP:11604"/>
        <dbReference type="ChEBI" id="CHEBI:15378"/>
        <dbReference type="ChEBI" id="CHEBI:29999"/>
        <dbReference type="ChEBI" id="CHEBI:30616"/>
        <dbReference type="ChEBI" id="CHEBI:83421"/>
        <dbReference type="ChEBI" id="CHEBI:456216"/>
        <dbReference type="EC" id="2.7.11.1"/>
    </reaction>
    <physiologicalReaction direction="left-to-right" evidence="22 51 53">
        <dbReference type="Rhea" id="RHEA:17990"/>
    </physiologicalReaction>
</comment>
<comment type="catalytic activity">
    <reaction evidence="48 53 58">
        <text>L-threonyl-[protein] + ATP = O-phospho-L-threonyl-[protein] + ADP + H(+)</text>
        <dbReference type="Rhea" id="RHEA:46608"/>
        <dbReference type="Rhea" id="RHEA-COMP:11060"/>
        <dbReference type="Rhea" id="RHEA-COMP:11605"/>
        <dbReference type="ChEBI" id="CHEBI:15378"/>
        <dbReference type="ChEBI" id="CHEBI:30013"/>
        <dbReference type="ChEBI" id="CHEBI:30616"/>
        <dbReference type="ChEBI" id="CHEBI:61977"/>
        <dbReference type="ChEBI" id="CHEBI:456216"/>
        <dbReference type="EC" id="2.7.11.1"/>
    </reaction>
    <physiologicalReaction direction="left-to-right" evidence="48 53 58">
        <dbReference type="Rhea" id="RHEA:46609"/>
    </physiologicalReaction>
</comment>
<comment type="activity regulation">
    <text evidence="53 68">Activity seems to be attenuated by autophosphorylation. Binding to the SL1 region of U3 small nucleolar RNA promotes auto-phosphorylation activity (PubMed:32103174). Inhibited by wortmannin (PubMed:9766667).</text>
</comment>
<comment type="subunit">
    <text evidence="9 19 20 23 24 25 26 27 34 35 36 39 40 44 45 46 47 50 54 56 57 65 66 67">DNA-PK is a heterotrimer of PRKDC and the Ku dimer (composed of XRCC6/Ku70 and XRCC5/Ku86) (PubMed:15758953, PubMed:25670504). Formation of this complex may be promoted by interaction with ILF3 (PubMed:9442054). Component of the core long-range non-homologous end joining (NHEJ) complex (also named DNA-PK complex) composed of PRKDC, LIG4, XRCC4, XRCC6/Ku70, XRCC5/Ku86 and NHEJ1/XLF (PubMed:15758953, PubMed:25670504, PubMed:33854234, PubMed:34352203). Additional component of the NHEJ complex includes PAXX (PubMed:25574025, PubMed:25941166). Following autophosphorylation, PRKDC dissociates from DNA (PubMed:33854234). Interacts with DNA-PKcs-interacting protein (KIP) with the region upstream the kinase domain (PubMed:9372844). PRKDC alone also interacts with and phosphorylates DCLRE1C, thereby activating the latent endonuclease activity of this protein (PubMed:11955432, PubMed:14744996, PubMed:15071507, PubMed:15456891, PubMed:15574326, PubMed:15811628, PubMed:15936993). Interacts with C1D (PubMed:9679063). Interacts with TTI1 and TELO2 (PubMed:20427287, PubMed:20801936, PubMed:20810650). Interacts with CIB1 (PubMed:9372844). Interacts with SETX (PubMed:23149945). Interacts with NR4A3; the DNA-dependent protein kinase complex DNA-PK phosphorylates and activates NR4A3 and prevents NR4A3 ubiquitination and degradation (PubMed:25852083). Interacts with BRAT1 (PubMed:22977523). Part of the HDP-RNP complex composed of at least HEXIM1, PRKDC, XRCC5, XRCC6, paraspeckle proteins (SFPQ, NONO, PSPC1, RBM14, and MATR3) and NEAT1 RNA (PubMed:28712728). Interacts with KAT5 (PubMed:32832608).</text>
</comment>
<comment type="interaction">
    <interactant intactId="EBI-352053">
        <id>P78527</id>
    </interactant>
    <interactant intactId="EBI-1753081">
        <id>O43918</id>
        <label>AIRE</label>
    </interactant>
    <organismsDiffer>false</organismsDiffer>
    <experiments>2</experiments>
</comment>
<comment type="interaction">
    <interactant intactId="EBI-352053">
        <id>P78527</id>
    </interactant>
    <interactant intactId="EBI-608057">
        <id>P10275</id>
        <label>AR</label>
    </interactant>
    <organismsDiffer>false</organismsDiffer>
    <experiments>3</experiments>
</comment>
<comment type="interaction">
    <interactant intactId="EBI-352053">
        <id>P78527</id>
    </interactant>
    <interactant intactId="EBI-11694104">
        <id>Q96SD1</id>
        <label>DCLRE1C</label>
    </interactant>
    <organismsDiffer>false</organismsDiffer>
    <experiments>5</experiments>
</comment>
<comment type="interaction">
    <interactant intactId="EBI-352053">
        <id>P78527</id>
    </interactant>
    <interactant intactId="EBI-913209">
        <id>P14921</id>
        <label>ETS1</label>
    </interactant>
    <organismsDiffer>false</organismsDiffer>
    <experiments>2</experiments>
</comment>
<comment type="interaction">
    <interactant intactId="EBI-352053">
        <id>P78527</id>
    </interactant>
    <interactant intactId="EBI-3905068">
        <id>P50549</id>
        <label>ETV1</label>
    </interactant>
    <organismsDiffer>false</organismsDiffer>
    <experiments>2</experiments>
</comment>
<comment type="interaction">
    <interactant intactId="EBI-352053">
        <id>P78527</id>
    </interactant>
    <interactant intactId="EBI-1248457">
        <id>P09629</id>
        <label>HOXB7</label>
    </interactant>
    <organismsDiffer>false</organismsDiffer>
    <experiments>2</experiments>
</comment>
<comment type="interaction">
    <interactant intactId="EBI-352053">
        <id>P78527</id>
    </interactant>
    <interactant intactId="EBI-749938">
        <id>Q9BPZ7</id>
        <label>MAPKAP1</label>
    </interactant>
    <organismsDiffer>false</organismsDiffer>
    <experiments>2</experiments>
</comment>
<comment type="interaction">
    <interactant intactId="EBI-352053">
        <id>P78527</id>
    </interactant>
    <interactant intactId="EBI-9640524">
        <id>Q96RI1-2</id>
        <label>NR1H4</label>
    </interactant>
    <organismsDiffer>false</organismsDiffer>
    <experiments>4</experiments>
</comment>
<comment type="interaction">
    <interactant intactId="EBI-352053">
        <id>P78527</id>
    </interactant>
    <interactant intactId="EBI-413374">
        <id>P10276</id>
        <label>RARA</label>
    </interactant>
    <organismsDiffer>false</organismsDiffer>
    <experiments>3</experiments>
</comment>
<comment type="interaction">
    <interactant intactId="EBI-352053">
        <id>P78527</id>
    </interactant>
    <interactant intactId="EBI-2293548">
        <id>P17947</id>
        <label>SPI1</label>
    </interactant>
    <organismsDiffer>false</organismsDiffer>
    <experiments>2</experiments>
</comment>
<comment type="interaction">
    <interactant intactId="EBI-352053">
        <id>P78527</id>
    </interactant>
    <interactant intactId="EBI-357997">
        <id>P13010</id>
        <label>XRCC5</label>
    </interactant>
    <organismsDiffer>false</organismsDiffer>
    <experiments>9</experiments>
</comment>
<comment type="interaction">
    <interactant intactId="EBI-352053">
        <id>P78527</id>
    </interactant>
    <interactant intactId="EBI-353208">
        <id>P12956</id>
        <label>XRCC6</label>
    </interactant>
    <organismsDiffer>false</organismsDiffer>
    <experiments>8</experiments>
</comment>
<comment type="interaction">
    <interactant intactId="EBI-352053">
        <id>P78527</id>
    </interactant>
    <interactant intactId="EBI-765538">
        <id>P25490</id>
        <label>YY1</label>
    </interactant>
    <organismsDiffer>false</organismsDiffer>
    <experiments>2</experiments>
</comment>
<comment type="subcellular location">
    <subcellularLocation>
        <location evidence="11 18 22 37">Nucleus</location>
    </subcellularLocation>
    <subcellularLocation>
        <location evidence="37 53">Nucleus</location>
        <location evidence="37 53">Nucleolus</location>
    </subcellularLocation>
    <subcellularLocation>
        <location evidence="22">Cytoplasm</location>
        <location evidence="22">Cytosol</location>
    </subcellularLocation>
</comment>
<comment type="alternative products">
    <event type="alternative splicing"/>
    <isoform>
        <id>P78527-1</id>
        <name>1</name>
        <sequence type="displayed"/>
    </isoform>
    <isoform>
        <id>P78527-2</id>
        <name>2</name>
        <sequence type="described" ref="VSP_004708"/>
    </isoform>
</comment>
<comment type="PTM">
    <text evidence="1 10 11 18 56">Autophosphorylated at two clusters, the T2609 cluster and the S2056 cluster (PubMed:33854234). Autophosphorylated on Ser-2056, Thr-2609, Thr-2638 and Thr-2647 (PubMed:12186630, PubMed:12231622, PubMed:14734805, PubMed:33854234). Ser-2056 and Thr-2609 are DNA damage-inducible phosphorylation sites (inducible with ionizing radiation, IR) dephosphorylated by PPP5C (PubMed:12186630, PubMed:12231622, PubMed:14734805). Autophosphorylation induces a conformational change that leads to remodeling of the DNA-PK complex, requisite for efficient end processing and DNA repair (PubMed:12186630, PubMed:12231622, PubMed:14734805). Autophosphorylation in trans within DNA-PK complexes loaded on DNA ends leads to the dissociation of PRKDC from DNA and the transition into the short-range NHEJ complex (PubMed:33854234). Autophosphorylation of the T2609 cluster is required for hematopoietic development and protein synthesis in erythrocytes precursors (By similarity).</text>
</comment>
<comment type="PTM">
    <text evidence="1">S-nitrosylated by GAPDH.</text>
</comment>
<comment type="PTM">
    <text evidence="42">Polyubiquitinated by RNF144A, leading to proteasomal degradation.</text>
</comment>
<comment type="disease" evidence="33 41">
    <disease id="DI-04200">
        <name>Immunodeficiency 26 with or without neurologic abnormalities</name>
        <acronym>IMD26</acronym>
        <description>A form of severe combined immunodeficiency characterized by reduced or absent T and B cells, recurrent candidiasis, and lower respiratory tract infections. Some patients show dysmorphic features, severe growth failure, microcephaly, seizures, and impaired neurological functions.</description>
        <dbReference type="MIM" id="615966"/>
    </disease>
    <text>The disease is caused by variants affecting the gene represented in this entry.</text>
</comment>
<comment type="similarity">
    <text evidence="72">Belongs to the PI3/PI4-kinase family.</text>
</comment>
<organism>
    <name type="scientific">Homo sapiens</name>
    <name type="common">Human</name>
    <dbReference type="NCBI Taxonomy" id="9606"/>
    <lineage>
        <taxon>Eukaryota</taxon>
        <taxon>Metazoa</taxon>
        <taxon>Chordata</taxon>
        <taxon>Craniata</taxon>
        <taxon>Vertebrata</taxon>
        <taxon>Euteleostomi</taxon>
        <taxon>Mammalia</taxon>
        <taxon>Eutheria</taxon>
        <taxon>Euarchontoglires</taxon>
        <taxon>Primates</taxon>
        <taxon>Haplorrhini</taxon>
        <taxon>Catarrhini</taxon>
        <taxon>Hominidae</taxon>
        <taxon>Homo</taxon>
    </lineage>
</organism>
<evidence type="ECO:0000250" key="1">
    <source>
        <dbReference type="UniProtKB" id="P97313"/>
    </source>
</evidence>
<evidence type="ECO:0000255" key="2">
    <source>
        <dbReference type="PROSITE-ProRule" id="PRU00269"/>
    </source>
</evidence>
<evidence type="ECO:0000255" key="3">
    <source>
        <dbReference type="PROSITE-ProRule" id="PRU00534"/>
    </source>
</evidence>
<evidence type="ECO:0000255" key="4">
    <source>
        <dbReference type="PROSITE-ProRule" id="PRU00535"/>
    </source>
</evidence>
<evidence type="ECO:0000256" key="5">
    <source>
        <dbReference type="SAM" id="MobiDB-lite"/>
    </source>
</evidence>
<evidence type="ECO:0000269" key="6">
    <source>
    </source>
</evidence>
<evidence type="ECO:0000269" key="7">
    <source>
    </source>
</evidence>
<evidence type="ECO:0000269" key="8">
    <source>
    </source>
</evidence>
<evidence type="ECO:0000269" key="9">
    <source>
    </source>
</evidence>
<evidence type="ECO:0000269" key="10">
    <source>
    </source>
</evidence>
<evidence type="ECO:0000269" key="11">
    <source>
    </source>
</evidence>
<evidence type="ECO:0000269" key="12">
    <source>
    </source>
</evidence>
<evidence type="ECO:0000269" key="13">
    <source>
    </source>
</evidence>
<evidence type="ECO:0000269" key="14">
    <source>
    </source>
</evidence>
<evidence type="ECO:0000269" key="15">
    <source>
    </source>
</evidence>
<evidence type="ECO:0000269" key="16">
    <source>
    </source>
</evidence>
<evidence type="ECO:0000269" key="17">
    <source>
    </source>
</evidence>
<evidence type="ECO:0000269" key="18">
    <source>
    </source>
</evidence>
<evidence type="ECO:0000269" key="19">
    <source>
    </source>
</evidence>
<evidence type="ECO:0000269" key="20">
    <source>
    </source>
</evidence>
<evidence type="ECO:0000269" key="21">
    <source>
    </source>
</evidence>
<evidence type="ECO:0000269" key="22">
    <source>
    </source>
</evidence>
<evidence type="ECO:0000269" key="23">
    <source>
    </source>
</evidence>
<evidence type="ECO:0000269" key="24">
    <source>
    </source>
</evidence>
<evidence type="ECO:0000269" key="25">
    <source>
    </source>
</evidence>
<evidence type="ECO:0000269" key="26">
    <source>
    </source>
</evidence>
<evidence type="ECO:0000269" key="27">
    <source>
    </source>
</evidence>
<evidence type="ECO:0000269" key="28">
    <source>
    </source>
</evidence>
<evidence type="ECO:0000269" key="29">
    <source>
    </source>
</evidence>
<evidence type="ECO:0000269" key="30">
    <source>
    </source>
</evidence>
<evidence type="ECO:0000269" key="31">
    <source>
    </source>
</evidence>
<evidence type="ECO:0000269" key="32">
    <source>
    </source>
</evidence>
<evidence type="ECO:0000269" key="33">
    <source>
    </source>
</evidence>
<evidence type="ECO:0000269" key="34">
    <source>
    </source>
</evidence>
<evidence type="ECO:0000269" key="35">
    <source>
    </source>
</evidence>
<evidence type="ECO:0000269" key="36">
    <source>
    </source>
</evidence>
<evidence type="ECO:0000269" key="37">
    <source>
    </source>
</evidence>
<evidence type="ECO:0000269" key="38">
    <source>
    </source>
</evidence>
<evidence type="ECO:0000269" key="39">
    <source>
    </source>
</evidence>
<evidence type="ECO:0000269" key="40">
    <source>
    </source>
</evidence>
<evidence type="ECO:0000269" key="41">
    <source>
    </source>
</evidence>
<evidence type="ECO:0000269" key="42">
    <source>
    </source>
</evidence>
<evidence type="ECO:0000269" key="43">
    <source>
    </source>
</evidence>
<evidence type="ECO:0000269" key="44">
    <source>
    </source>
</evidence>
<evidence type="ECO:0000269" key="45">
    <source>
    </source>
</evidence>
<evidence type="ECO:0000269" key="46">
    <source>
    </source>
</evidence>
<evidence type="ECO:0000269" key="47">
    <source>
    </source>
</evidence>
<evidence type="ECO:0000269" key="48">
    <source>
    </source>
</evidence>
<evidence type="ECO:0000269" key="49">
    <source>
    </source>
</evidence>
<evidence type="ECO:0000269" key="50">
    <source>
    </source>
</evidence>
<evidence type="ECO:0000269" key="51">
    <source>
    </source>
</evidence>
<evidence type="ECO:0000269" key="52">
    <source>
    </source>
</evidence>
<evidence type="ECO:0000269" key="53">
    <source>
    </source>
</evidence>
<evidence type="ECO:0000269" key="54">
    <source>
    </source>
</evidence>
<evidence type="ECO:0000269" key="55">
    <source>
    </source>
</evidence>
<evidence type="ECO:0000269" key="56">
    <source>
    </source>
</evidence>
<evidence type="ECO:0000269" key="57">
    <source>
    </source>
</evidence>
<evidence type="ECO:0000269" key="58">
    <source>
    </source>
</evidence>
<evidence type="ECO:0000269" key="59">
    <source>
    </source>
</evidence>
<evidence type="ECO:0000269" key="60">
    <source>
    </source>
</evidence>
<evidence type="ECO:0000269" key="61">
    <source>
    </source>
</evidence>
<evidence type="ECO:0000269" key="62">
    <source>
    </source>
</evidence>
<evidence type="ECO:0000269" key="63">
    <source>
    </source>
</evidence>
<evidence type="ECO:0000269" key="64">
    <source>
    </source>
</evidence>
<evidence type="ECO:0000269" key="65">
    <source>
    </source>
</evidence>
<evidence type="ECO:0000269" key="66">
    <source>
    </source>
</evidence>
<evidence type="ECO:0000269" key="67">
    <source>
    </source>
</evidence>
<evidence type="ECO:0000269" key="68">
    <source>
    </source>
</evidence>
<evidence type="ECO:0000269" key="69">
    <source ref="3"/>
</evidence>
<evidence type="ECO:0000303" key="70">
    <source>
    </source>
</evidence>
<evidence type="ECO:0000303" key="71">
    <source ref="10"/>
</evidence>
<evidence type="ECO:0000305" key="72"/>
<evidence type="ECO:0007744" key="73">
    <source>
        <dbReference type="PDB" id="7LT3"/>
    </source>
</evidence>
<evidence type="ECO:0007744" key="74">
    <source>
        <dbReference type="PDB" id="7NFC"/>
    </source>
</evidence>
<evidence type="ECO:0007744" key="75">
    <source>
        <dbReference type="PDB" id="7NFE"/>
    </source>
</evidence>
<evidence type="ECO:0007744" key="76">
    <source>
    </source>
</evidence>
<evidence type="ECO:0007744" key="77">
    <source>
    </source>
</evidence>
<evidence type="ECO:0007744" key="78">
    <source>
    </source>
</evidence>
<evidence type="ECO:0007744" key="79">
    <source>
    </source>
</evidence>
<evidence type="ECO:0007744" key="80">
    <source>
    </source>
</evidence>
<evidence type="ECO:0007744" key="81">
    <source>
    </source>
</evidence>
<evidence type="ECO:0007744" key="82">
    <source>
    </source>
</evidence>
<evidence type="ECO:0007744" key="83">
    <source>
    </source>
</evidence>
<evidence type="ECO:0007744" key="84">
    <source>
    </source>
</evidence>
<evidence type="ECO:0007744" key="85">
    <source>
    </source>
</evidence>
<evidence type="ECO:0007829" key="86">
    <source>
        <dbReference type="PDB" id="6ZFP"/>
    </source>
</evidence>
<evidence type="ECO:0007829" key="87">
    <source>
        <dbReference type="PDB" id="7K10"/>
    </source>
</evidence>
<evidence type="ECO:0007829" key="88">
    <source>
        <dbReference type="PDB" id="7K11"/>
    </source>
</evidence>
<evidence type="ECO:0007829" key="89">
    <source>
        <dbReference type="PDB" id="7OTW"/>
    </source>
</evidence>
<evidence type="ECO:0007829" key="90">
    <source>
        <dbReference type="PDB" id="7OTY"/>
    </source>
</evidence>
<evidence type="ECO:0007829" key="91">
    <source>
        <dbReference type="PDB" id="7SGL"/>
    </source>
</evidence>
<evidence type="ECO:0007829" key="92">
    <source>
        <dbReference type="PDB" id="7SU3"/>
    </source>
</evidence>
<evidence type="ECO:0007829" key="93">
    <source>
        <dbReference type="PDB" id="7TYR"/>
    </source>
</evidence>
<evidence type="ECO:0007829" key="94">
    <source>
        <dbReference type="PDB" id="7Z87"/>
    </source>
</evidence>
<evidence type="ECO:0007829" key="95">
    <source>
        <dbReference type="PDB" id="7Z88"/>
    </source>
</evidence>
<reference key="1">
    <citation type="journal article" date="1995" name="Cell">
        <title>DNA-dependent protein kinase catalytic subunit: a relative of phosphatidylinositol 3-kinase and the ataxia telangiectasia gene product.</title>
        <authorList>
            <person name="Hartley K.O."/>
            <person name="Gell D."/>
            <person name="Smith G.C.M."/>
            <person name="Zhang H."/>
            <person name="Divecha N."/>
            <person name="Connelly M.A."/>
            <person name="Admon A."/>
            <person name="Lees-Miller S.P."/>
            <person name="Anderson C.W."/>
            <person name="Jackson S.P."/>
        </authorList>
    </citation>
    <scope>NUCLEOTIDE SEQUENCE [MRNA]</scope>
    <source>
        <tissue>Cervix carcinoma</tissue>
    </source>
</reference>
<reference key="2">
    <citation type="submission" date="2001-04" db="EMBL/GenBank/DDBJ databases">
        <authorList>
            <person name="Gell D."/>
            <person name="Anderson C.W."/>
        </authorList>
    </citation>
    <scope>SEQUENCE REVISION</scope>
    <scope>ALTERNATIVE SPLICING</scope>
</reference>
<reference key="3">
    <citation type="submission" date="2003-06" db="EMBL/GenBank/DDBJ databases">
        <authorList>
            <consortium name="NIEHS SNPs program"/>
        </authorList>
    </citation>
    <scope>NUCLEOTIDE SEQUENCE [GENOMIC DNA]</scope>
    <scope>VARIANTS SER-6; ILE-333; SER-605; MET-680; SER-695; SER-1071; VAL-1314; VAL-1588; HIS-1603; VAL-2095; GLU-2702; CYS-2899; ASP-3149; SER-3201; GLU-3404; THR-3434; SER-3459; MET-3562; LEU-3836 AND VAL-3932</scope>
</reference>
<reference key="4">
    <citation type="journal article" date="2001" name="Radiat. Res.">
        <title>Frameshift mutation in PRKDC, the gene for DNA-PKcs, in the DNA repair-defective, human, glioma-derived cell line M059J.</title>
        <authorList>
            <person name="Anderson C.W."/>
            <person name="Dunn J.J."/>
            <person name="Freimuth P.I."/>
            <person name="Galloway A.M."/>
            <person name="Allalunis-Turner M.J."/>
        </authorList>
    </citation>
    <scope>NUCLEOTIDE SEQUENCE [GENOMIC DNA] OF 1-1689</scope>
</reference>
<reference key="5">
    <citation type="journal article" date="1997" name="Cytogenet. Cell Genet.">
        <title>MCM4 and PRKDC, human genes encoding proteins MCM4 and DNA-PKcs, are close neighbours located on chromosome 8q12--&gt;q13.</title>
        <authorList>
            <person name="Ladenburger E.M."/>
            <person name="Fackelmayer F.O."/>
            <person name="Hameister H."/>
            <person name="Knippers R."/>
        </authorList>
    </citation>
    <scope>NUCLEOTIDE SEQUENCE [GENOMIC DNA] OF 1-49</scope>
</reference>
<reference key="6">
    <citation type="journal article" date="1995" name="Proc. Natl. Acad. Sci. U.S.A.">
        <title>Gene for the catalytic subunit of the human DNA-activated protein kinase maps to the site of the XRCC7 gene on chromosome 8.</title>
        <authorList>
            <person name="Sipley J.D."/>
            <person name="Menninger J.C."/>
            <person name="Hartley K.O."/>
            <person name="Ward D.C."/>
            <person name="Jackson S.P."/>
            <person name="Anderson C.W."/>
        </authorList>
    </citation>
    <scope>NUCLEOTIDE SEQUENCE [GENOMIC DNA] OF 1789-2203</scope>
    <source>
        <tissue>Placenta</tissue>
    </source>
</reference>
<reference key="7">
    <citation type="submission" date="2000-12" db="EMBL/GenBank/DDBJ databases">
        <authorList>
            <person name="Abe M."/>
        </authorList>
    </citation>
    <scope>NUCLEOTIDE SEQUENCE [GENOMIC DNA] OF 2255-2335</scope>
    <source>
        <tissue>Placenta</tissue>
    </source>
</reference>
<reference key="8">
    <citation type="journal article" date="1995" name="J. Immunol.">
        <title>Human DNA-activated protein kinase (DNA-PK) is homologous to phosphatidylinositol kinases.</title>
        <authorList>
            <person name="Poltoratsky V.P."/>
            <person name="Shi X."/>
            <person name="York J.D."/>
            <person name="Lieber M.R."/>
            <person name="Carter T.H."/>
        </authorList>
    </citation>
    <scope>NUCLEOTIDE SEQUENCE [MRNA] OF 3199-4128 (ISOFORM 1)</scope>
    <source>
        <tissue>Fetal lung</tissue>
    </source>
</reference>
<reference key="9">
    <citation type="submission" date="2001-04" db="EMBL/GenBank/DDBJ databases">
        <title>Sequence of the 3' segment (exons 70-86) of PRKDC, the gene for human DNA-PKcs.</title>
        <authorList>
            <person name="Anderson C.W."/>
            <person name="Dunn J.J."/>
            <person name="Freimuth P.I."/>
        </authorList>
    </citation>
    <scope>NUCLEOTIDE SEQUENCE [GENOMIC DNA] OF 3250-4128 (ISOFORM 1)</scope>
</reference>
<reference key="10">
    <citation type="submission" date="2005-03" db="EMBL/GenBank/DDBJ databases">
        <authorList>
            <person name="Totoki Y."/>
            <person name="Toyoda A."/>
            <person name="Takeda T."/>
            <person name="Sakaki Y."/>
            <person name="Tanaka A."/>
            <person name="Yokoyama S."/>
            <person name="Ohara O."/>
            <person name="Nagase T."/>
            <person name="Kikuno F.R."/>
        </authorList>
    </citation>
    <scope>NUCLEOTIDE SEQUENCE [LARGE SCALE MRNA] OF 3372-4128 (ISOFORM 2)</scope>
    <source>
        <tissue>Brain</tissue>
    </source>
</reference>
<reference key="11">
    <citation type="journal article" date="1989" name="J. Biol. Chem.">
        <title>The human double-stranded DNA-activated protein kinase phosphorylates the 90-kDa heat-shock protein, hsp90 alpha at two NH2-terminal threonine residues.</title>
        <authorList>
            <person name="Lees-Miller S.P."/>
            <person name="Anderson C.W."/>
        </authorList>
    </citation>
    <scope>FUNCTION</scope>
    <scope>PHOSPHORYLATION OF HSPCA</scope>
</reference>
<reference key="12">
    <citation type="journal article" date="1990" name="Mol. Cell. Biol.">
        <title>A DNA-activated protein kinase from HeLa cell nuclei.</title>
        <authorList>
            <person name="Carter T."/>
            <person name="Vancurova I."/>
            <person name="Sun I."/>
            <person name="Lou W."/>
            <person name="DeLeon S."/>
        </authorList>
    </citation>
    <scope>FUNCTION</scope>
    <scope>PHOSPHORYLATION OF H1</scope>
</reference>
<reference key="13">
    <citation type="journal article" date="1992" name="Eur. J. Biochem.">
        <title>DNA-activated protein kinase in Raji Burkitt's lymphoma cells. Phosphorylation of c-Myc oncoprotein.</title>
        <authorList>
            <person name="Iijima S."/>
            <person name="Teraoka H."/>
            <person name="Date T."/>
            <person name="Tsukada K."/>
        </authorList>
    </citation>
    <scope>FUNCTION</scope>
    <scope>PHOSPHORYLATION OF MYC</scope>
</reference>
<reference key="14">
    <citation type="journal article" date="1993" name="J. Biol. Chem.">
        <title>The carboxyl-terminal transactivation domain of human serum response factor contains DNA-activated protein kinase phosphorylation sites.</title>
        <authorList>
            <person name="Liu S.-H."/>
            <person name="Ma J.-T."/>
            <person name="Yueh A.Y."/>
            <person name="Lees-Miller S.P."/>
            <person name="Anderson C.W."/>
            <person name="Ng S.-Y."/>
        </authorList>
    </citation>
    <scope>FUNCTION</scope>
    <scope>PHOSPHORYLATION OF SRF</scope>
</reference>
<reference key="15">
    <citation type="journal article" date="1993" name="Nucleic Acids Res.">
        <title>c-Jun is phosphorylated by the DNA-dependent protein kinase in vitro; definition of the minimal kinase recognition motif.</title>
        <authorList>
            <person name="Bannister A.J."/>
            <person name="Gottlieb T.M."/>
            <person name="Kouzarides T."/>
            <person name="Jackson S.P."/>
        </authorList>
    </citation>
    <scope>FUNCTION</scope>
    <scope>PHOSPHORYLATION OF JUN</scope>
</reference>
<reference key="16">
    <citation type="journal article" date="1996" name="FEBS Lett.">
        <title>CPP32/Yama/apopain cleaves the catalytic component of DNA-dependent protein kinase in the holoenzyme.</title>
        <authorList>
            <person name="Teraoka H."/>
            <person name="Yumoto Y."/>
            <person name="Watanabe F."/>
            <person name="Tsukada K."/>
            <person name="Suwa A."/>
            <person name="Enari M."/>
            <person name="Nagata S."/>
        </authorList>
    </citation>
    <scope>CLEAVAGE BY CASPASE-3</scope>
</reference>
<reference key="17">
    <citation type="journal article" date="1996" name="Gene">
        <title>Alternate splice-site utilization in the gene for the catalytic subunit of the DNA-activated protein kinase, DNA-PKcs.</title>
        <authorList>
            <person name="Connelly M.A."/>
            <person name="Zhang H."/>
            <person name="Kieleczawa J."/>
            <person name="Anderson C.W."/>
        </authorList>
    </citation>
    <scope>ALTERNATIVE SPLICING</scope>
</reference>
<reference key="18">
    <citation type="journal article" date="1997" name="Cell">
        <title>DNA damage-induced phosphorylation of p53 alleviates inhibition by MDM2.</title>
        <authorList>
            <person name="Shieh S.-Y."/>
            <person name="Ikeda M."/>
            <person name="Taya Y."/>
            <person name="Prives C."/>
        </authorList>
    </citation>
    <scope>FUNCTION</scope>
    <scope>PHOSPHORYLATION OF TP53</scope>
</reference>
<reference key="19">
    <citation type="journal article" date="1997" name="Mutat. Res.">
        <title>Interaction between DNA-dependent protein kinase and a novel protein, KIP.</title>
        <authorList>
            <person name="Wu X."/>
            <person name="Lieber M.R."/>
        </authorList>
    </citation>
    <scope>CHARACTERIZATION</scope>
    <scope>INTERACTION WITH CIB1</scope>
</reference>
<reference key="20">
    <citation type="journal article" date="1997" name="EMBO J.">
        <title>Double-strand break repair by Ku70 requires heterodimerization with Ku80 and DNA binding functions.</title>
        <authorList>
            <person name="Jin S."/>
            <person name="Weaver D.T."/>
        </authorList>
    </citation>
    <scope>FUNCTION</scope>
    <scope>PHOSPHORYLATION OF XRCC6</scope>
</reference>
<reference key="21">
    <citation type="journal article" date="1997" name="J. Biol. Chem.">
        <title>Mapping of amino acid residues in the p34 subunit of human single-stranded DNA-binding protein phosphorylated by DNA-dependent protein kinase and Cdc2 kinase in vitro.</title>
        <authorList>
            <person name="Niu H."/>
            <person name="Erdjument-Bromage H."/>
            <person name="Pan Z.-Q."/>
            <person name="Lee S.-H."/>
            <person name="Tempst P."/>
            <person name="Hurwitz J."/>
        </authorList>
    </citation>
    <scope>FUNCTION</scope>
    <scope>PHOSPHORYLATION OF RFA2</scope>
</reference>
<reference key="22">
    <citation type="journal article" date="1998" name="Cancer Res.">
        <title>Inhibition of phosphoinositide 3-kinase related kinases by the radiosensitizing agent wortmannin.</title>
        <authorList>
            <person name="Sarkaria J.N."/>
            <person name="Tibbetts R.S."/>
            <person name="Busby E.C."/>
            <person name="Kennedy A.P."/>
            <person name="Hill D.E."/>
            <person name="Abraham R.T."/>
        </authorList>
    </citation>
    <scope>ACTIVITY REGULATION</scope>
</reference>
<reference key="23">
    <citation type="journal article" date="1998" name="Genes Dev.">
        <title>DNA end-independent activation of DNA-PK mediated via association with the DNA-binding protein C1D.</title>
        <authorList>
            <person name="Yavuzer U."/>
            <person name="Smith G.C.M."/>
            <person name="Bliss T."/>
            <person name="Werner D."/>
            <person name="Jackson S.P."/>
        </authorList>
    </citation>
    <scope>FUNCTION</scope>
    <scope>INTERACTION WITH C1D</scope>
    <scope>MUTAGENESIS OF LEU-1510 AND 1516-GLU-LEU-1517</scope>
</reference>
<reference key="24">
    <citation type="journal article" date="1998" name="J. Biol. Chem.">
        <title>DNA-dependent protein kinase interacts with antigen receptor response element binding proteins NF90 and NF45.</title>
        <authorList>
            <person name="Ting N.S.Y."/>
            <person name="Kao P.N."/>
            <person name="Chan D.W."/>
            <person name="Lintott L.G."/>
            <person name="Lees-Miller S.P."/>
        </authorList>
    </citation>
    <scope>INTERACTION WITH ILF3</scope>
</reference>
<reference key="25">
    <citation type="journal article" date="1998" name="Proc. Natl. Acad. Sci. U.S.A.">
        <title>DNA-dependent protein kinase: DNA binding and activation in the absence of Ku.</title>
        <authorList>
            <person name="Hammarsten O."/>
            <person name="Chu G."/>
        </authorList>
    </citation>
    <scope>DNA-BINDING</scope>
</reference>
<reference key="26">
    <citation type="journal article" date="1999" name="Biochemistry">
        <title>DNA-dependent protein kinase phosphorylation sites in Ku 70/80 heterodimer.</title>
        <authorList>
            <person name="Chan D.W."/>
            <person name="Ye R."/>
            <person name="Veillette C.J."/>
            <person name="Lees-Miller S.P."/>
        </authorList>
    </citation>
    <scope>FUNCTION</scope>
    <scope>PHOSPHORYLATION OF XRCC5 AND XRCC6</scope>
</reference>
<reference key="27">
    <citation type="journal article" date="1999" name="Oncogene">
        <title>Suppression of the poly(ADP-ribose) polymerase activity by DNA-dependent protein kinase in vitro.</title>
        <authorList>
            <person name="Ariumi Y."/>
            <person name="Masutani M."/>
            <person name="Copeland T.D."/>
            <person name="Mimori T."/>
            <person name="Sugimura T."/>
            <person name="Shimotohno K."/>
            <person name="Ueda K."/>
            <person name="Hatanaka M."/>
            <person name="Noda M."/>
        </authorList>
    </citation>
    <scope>FUNCTION</scope>
    <scope>PHOSPHORYLATION OF PARP1</scope>
</reference>
<reference key="28">
    <citation type="journal article" date="2002" name="Biochem. J.">
        <title>Identification of in vitro and in vivo phosphorylation sites in the catalytic subunit of the DNA-dependent protein kinase.</title>
        <authorList>
            <person name="Douglas P."/>
            <person name="Sapkota G.P."/>
            <person name="Morrice N."/>
            <person name="Yu Y."/>
            <person name="Goodarzi A.A."/>
            <person name="Merkle D."/>
            <person name="Meek K."/>
            <person name="Alessi D.R."/>
            <person name="Lees-Miller S.P."/>
        </authorList>
    </citation>
    <scope>PHOSPHORYLATION AT THR-2609; SER-2612; THR-2638 AND THR-2647</scope>
</reference>
<reference key="29">
    <citation type="journal article" date="2002" name="Cell">
        <title>Hairpin opening and overhang processing by an Artemis/DNA-dependent protein kinase complex in nonhomologous end joining and V(D)J recombination.</title>
        <authorList>
            <person name="Ma Y."/>
            <person name="Pannicke U."/>
            <person name="Schwarz K."/>
            <person name="Lieber M.R."/>
        </authorList>
    </citation>
    <scope>FUNCTION</scope>
    <scope>INTERACTION WITH DCLRE1C</scope>
</reference>
<reference key="30">
    <citation type="journal article" date="2002" name="DNA Repair">
        <title>Defining interactions between DNA-PK and ligase IV/XRCC4.</title>
        <authorList>
            <person name="Hsu H.-L."/>
            <person name="Yannone S.M."/>
            <person name="Chen D.J."/>
        </authorList>
    </citation>
    <scope>FUNCTION</scope>
    <scope>PHOSPHORYLATION OF XRCC4</scope>
</reference>
<reference key="31">
    <citation type="journal article" date="2002" name="Genes Dev.">
        <title>Autophosphorylation of the DNA-dependent protein kinase catalytic subunit is required for rejoining of DNA double-strand breaks.</title>
        <authorList>
            <person name="Chan D.W."/>
            <person name="Chen B.P."/>
            <person name="Prithivirajsingh S."/>
            <person name="Kurimasa A."/>
            <person name="Story M.D."/>
            <person name="Qin J."/>
            <person name="Chen D.J."/>
        </authorList>
    </citation>
    <scope>PHOSPHORYLATION AT THR-2609</scope>
    <scope>MUTAGENESIS OF THR-2609</scope>
    <scope>SUBCELLULAR LOCATION</scope>
    <scope>IDENTIFICATION BY MASS SPECTROMETRY</scope>
</reference>
<reference key="32">
    <citation type="journal article" date="2002" name="J. Biol. Chem.">
        <title>Werner protein is a target of DNA-dependent protein kinase in vivo and in vitro, and its catalytic activities are regulated by phosphorylation.</title>
        <authorList>
            <person name="Karmakar P."/>
            <person name="Piotrowski J."/>
            <person name="Brosh R.M. Jr."/>
            <person name="Sommers J.A."/>
            <person name="Miller S.P."/>
            <person name="Cheng W.H."/>
            <person name="Snowden C.M."/>
            <person name="Ramsden D.A."/>
            <person name="Bohr V.A."/>
        </authorList>
    </citation>
    <scope>FUNCTION</scope>
    <scope>PHOSPHORYLATION OF WRN</scope>
</reference>
<reference key="33">
    <citation type="journal article" date="2003" name="Cancer Res.">
        <title>Threonines 2638/2647 in DNA-PK are essential for cellular resistance to ionizing radiation.</title>
        <authorList>
            <person name="Soubeyrand S."/>
            <person name="Pope L."/>
            <person name="Pakuts B."/>
            <person name="Hache R.J."/>
        </authorList>
    </citation>
    <scope>FUNCTION</scope>
    <scope>MUTAGENESIS OF THR-2638 AND THR-2647</scope>
</reference>
<reference key="34">
    <citation type="journal article" date="2003" name="Cancer Res.">
        <title>Down-regulation of histone H2B by DNA-dependent protein kinase in response to DNA damage through modulation of octamer transcription factor 1.</title>
        <authorList>
            <person name="Schild-Poulter C."/>
            <person name="Shih A."/>
            <person name="Yarymowich N.C."/>
            <person name="Hache R.J.G."/>
        </authorList>
    </citation>
    <scope>FUNCTION</scope>
    <scope>PHOSPHORYLATION OF POU2F1</scope>
</reference>
<reference key="35">
    <citation type="journal article" date="2003" name="DNA Repair">
        <title>DNA-PK phosphorylation sites in XRCC4 are not required for survival after radiation or for V(D)J recombination.</title>
        <authorList>
            <person name="Yu Y."/>
            <person name="Wang W."/>
            <person name="Ding Q."/>
            <person name="Ye R."/>
            <person name="Chen D."/>
            <person name="Merkle D."/>
            <person name="Schriemer D."/>
            <person name="Meek K."/>
            <person name="Lees-Miller S.P."/>
        </authorList>
    </citation>
    <scope>FUNCTION IN PHOSPHORYLATION OF XRCC4</scope>
</reference>
<reference key="36">
    <citation type="journal article" date="2003" name="Nucleic Acids Res.">
        <title>DNA-PK is activated by nucleosomes and phosphorylates H2AX within the nucleosomes in an acetylation-dependent manner.</title>
        <authorList>
            <person name="Park E.-J."/>
            <person name="Chan D.W."/>
            <person name="Park J.-H."/>
            <person name="Oettinger M.A."/>
            <person name="Kwon J."/>
        </authorList>
    </citation>
    <scope>FUNCTION</scope>
    <scope>PHOSPHORYLATION OF H2AX</scope>
</reference>
<reference key="37">
    <citation type="journal article" date="2004" name="DNA Repair">
        <title>Identification of DNA-PKcs phosphorylation sites in XRCC4 and effects of mutations at these sites on DNA end joining in a cell-free system.</title>
        <authorList>
            <person name="Lee K.J."/>
            <person name="Jovanovic M."/>
            <person name="Udayakumar D."/>
            <person name="Bladen C.L."/>
            <person name="Dynan W.S."/>
        </authorList>
    </citation>
    <scope>FUNCTION IN PHOSPHORYLATION OF XRCC4</scope>
</reference>
<reference key="38">
    <citation type="journal article" date="2004" name="J. Biol. Chem.">
        <title>Identification of a PKB/Akt hydrophobic motif Ser-473 kinase as DNA-dependent protein kinase.</title>
        <authorList>
            <person name="Feng J."/>
            <person name="Park J."/>
            <person name="Cron P."/>
            <person name="Hess D."/>
            <person name="Hemmings B.A."/>
        </authorList>
    </citation>
    <scope>FUNCTION</scope>
    <scope>CATALYTIC ACTIVITY</scope>
    <scope>SUBCELLULAR LOCATION</scope>
</reference>
<reference key="39">
    <citation type="journal article" date="2008" name="DNA Repair">
        <title>DNA-PK and ATM phosphorylation sites in XLF/Cernunnos are not required for repair of DNA double strand breaks.</title>
        <authorList>
            <person name="Yu Y."/>
            <person name="Mahaney B.L."/>
            <person name="Yano K."/>
            <person name="Ye R."/>
            <person name="Fang S."/>
            <person name="Douglas P."/>
            <person name="Chen D.J."/>
            <person name="Lees-Miller S.P."/>
        </authorList>
    </citation>
    <scope>FUNCTION IN PHOSPHORYLATION OF NHEJ1</scope>
</reference>
<reference key="40">
    <citation type="journal article" date="2016" name="J. Radiat. Res.">
        <title>In cellulo phosphorylation of XRCC4 Ser320 by DNA-PK induced by DNA damage.</title>
        <authorList>
            <person name="Sharma M.K."/>
            <person name="Imamichi S."/>
            <person name="Fukuchi M."/>
            <person name="Samarth R.M."/>
            <person name="Tomita M."/>
            <person name="Matsumoto Y."/>
        </authorList>
    </citation>
    <scope>FUNCTION IN PHOSPHORYLATION OF XRCC4</scope>
</reference>
<reference key="41">
    <citation type="journal article" date="2018" name="J. Radiat. Res.">
        <title>In cellulo phosphorylation of DNA double-strand break repair protein XRCC4 on Ser260 by DNA-PK.</title>
        <authorList>
            <person name="Amiri Moghani A.R."/>
            <person name="Sharma M.K."/>
            <person name="Matsumoto Y."/>
        </authorList>
    </citation>
    <scope>FUNCTION IN PHOSPHORYLATION OF XRCC4</scope>
</reference>
<reference key="42">
    <citation type="journal article" date="2004" name="EMBO J.">
        <title>Functional and biochemical dissection of the structure-specific nuclease ARTEMIS.</title>
        <authorList>
            <person name="Pannicke U."/>
            <person name="Ma Y."/>
            <person name="Hopfner K.-P."/>
            <person name="Niewolik D."/>
            <person name="Lieber M.R."/>
            <person name="Schwarz K."/>
        </authorList>
    </citation>
    <scope>INTERACTION WITH DCLRE1C</scope>
</reference>
<reference key="43">
    <citation type="journal article" date="2004" name="J. Exp. Med.">
        <title>The metallo-beta-lactamase/beta-CASP domain of Artemis constitutes the catalytic core for V(D)J recombination.</title>
        <authorList>
            <person name="Poinsignon C."/>
            <person name="Moshous D."/>
            <person name="Callebaut I."/>
            <person name="de Chasseval R."/>
            <person name="Villey I."/>
            <person name="de Villartay J.-P."/>
        </authorList>
    </citation>
    <scope>INTERACTION WITH DCLRE1C</scope>
</reference>
<reference key="44">
    <citation type="journal article" date="2004" name="Mol. Cell">
        <title>A biochemically defined system for mammalian nonhomologous DNA end joining.</title>
        <authorList>
            <person name="Ma Y."/>
            <person name="Lu H."/>
            <person name="Tippin B."/>
            <person name="Goodman M.F."/>
            <person name="Shimazaki N."/>
            <person name="Koiwai O."/>
            <person name="Hsieh C.-L."/>
            <person name="Schwarz K."/>
            <person name="Lieber M.R."/>
        </authorList>
    </citation>
    <scope>FUNCTION</scope>
    <scope>INTERACTION WITH DCLRE1C</scope>
</reference>
<reference key="45">
    <citation type="journal article" date="2004" name="Mol. Cell. Biol.">
        <title>Artemis is a phosphorylation target of ATM and ATR and is involved in the G2/M DNA damage checkpoint response.</title>
        <authorList>
            <person name="Zhang X."/>
            <person name="Succi J."/>
            <person name="Feng Z."/>
            <person name="Prithivirajsingh S."/>
            <person name="Story M.D."/>
            <person name="Legerski R.J."/>
        </authorList>
    </citation>
    <scope>INTERACTION WITH DCLRE1C</scope>
</reference>
<reference key="46">
    <citation type="journal article" date="2004" name="Nucleic Acids Res.">
        <title>DNA-dependent protein kinase (DNA-PK) phosphorylates nuclear DNA helicase II/RNA helicase A and hnRNP proteins in an RNA-dependent manner.</title>
        <authorList>
            <person name="Zhang S."/>
            <person name="Schlott B."/>
            <person name="Goerlach M."/>
            <person name="Grosse F."/>
        </authorList>
    </citation>
    <scope>FUNCTION</scope>
    <scope>PHOSPHORYLATION OF DHX9</scope>
</reference>
<reference key="47">
    <citation type="journal article" date="2004" name="Proc. Natl. Acad. Sci. U.S.A.">
        <title>DNA-PKcs function regulated specifically by protein phosphatase 5.</title>
        <authorList>
            <person name="Wechsler T."/>
            <person name="Chen B.P."/>
            <person name="Harper R."/>
            <person name="Morotomi-Yano K."/>
            <person name="Huang B.C."/>
            <person name="Meek K."/>
            <person name="Cleaver J.E."/>
            <person name="Chen D.J."/>
            <person name="Wabl M."/>
        </authorList>
    </citation>
    <scope>FUNCTION</scope>
    <scope>SUBCELLULAR LOCATION</scope>
    <scope>PHOSPHORYLATION AT SER-2056 AND THR-2609</scope>
    <scope>DEPHOSPHORYLATION AT SER-2056 AND THR-2609</scope>
</reference>
<reference key="48">
    <citation type="journal article" date="2005" name="DNA Repair">
        <title>DNA-PK is responsible for enhanced phosphorylation of histone H2AX under hypertonic conditions.</title>
        <authorList>
            <person name="Reitsema T."/>
            <person name="Klokov D."/>
            <person name="Banath J.P."/>
            <person name="Olive P.L."/>
        </authorList>
    </citation>
    <scope>FUNCTION</scope>
    <scope>PHOSPHORYLATION OF H2AX</scope>
</reference>
<reference key="49">
    <citation type="journal article" date="2005" name="DNA Repair">
        <title>Artemis deficiency confers a DNA double-strand break repair defect and Artemis phosphorylation status is altered by DNA damage and cell cycle progression.</title>
        <authorList>
            <person name="Wang J."/>
            <person name="Pluth J.M."/>
            <person name="Cooper P.K."/>
            <person name="Cowan M.J."/>
            <person name="Chen D.J."/>
            <person name="Yannone S.M."/>
        </authorList>
    </citation>
    <scope>INTERACTION WITH DCLRE1C</scope>
</reference>
<reference key="50">
    <citation type="journal article" date="2005" name="DNA Repair">
        <title>The Artemis:DNA-PKcs endonuclease cleaves DNA loops, flaps, and gaps.</title>
        <authorList>
            <person name="Ma Y."/>
            <person name="Schwarz K."/>
            <person name="Lieber M.R."/>
        </authorList>
    </citation>
    <scope>INTERACTION WITH DCLRE1C</scope>
</reference>
<reference key="51">
    <citation type="journal article" date="2005" name="Nature">
        <title>Conserved modes of recruitment of ATM, ATR and DNA-PKcs to sites of DNA damage.</title>
        <authorList>
            <person name="Falck J."/>
            <person name="Coates J."/>
            <person name="Jackson S.P."/>
        </authorList>
    </citation>
    <scope>INTERACTION WITH XRCC5</scope>
</reference>
<reference key="52">
    <citation type="journal article" date="2006" name="Cell">
        <title>Global, in vivo, and site-specific phosphorylation dynamics in signaling networks.</title>
        <authorList>
            <person name="Olsen J.V."/>
            <person name="Blagoev B."/>
            <person name="Gnad F."/>
            <person name="Macek B."/>
            <person name="Kumar C."/>
            <person name="Mortensen P."/>
            <person name="Mann M."/>
        </authorList>
    </citation>
    <scope>PHOSPHORYLATION [LARGE SCALE ANALYSIS] AT SER-3205</scope>
    <scope>IDENTIFICATION BY MASS SPECTROMETRY [LARGE SCALE ANALYSIS]</scope>
    <source>
        <tissue>Cervix carcinoma</tissue>
    </source>
</reference>
<reference key="53">
    <citation type="journal article" date="2006" name="Nucleic Acids Res.">
        <title>XRCC1 is phosphorylated by DNA-dependent protein kinase in response to DNA damage.</title>
        <authorList>
            <person name="Levy N."/>
            <person name="Martz A."/>
            <person name="Bresson A."/>
            <person name="Spenlehauer C."/>
            <person name="de Murcia G."/>
            <person name="Menissier-de Murcia J."/>
        </authorList>
    </citation>
    <scope>FUNCTION</scope>
    <scope>PHOSPHORYLATION OF XRCC1</scope>
</reference>
<reference key="54">
    <citation type="journal article" date="2005" name="Oncogene">
        <title>The life and death of DNA-PK.</title>
        <authorList>
            <person name="Collis S.J."/>
            <person name="DeWeese T.L."/>
            <person name="Jeggo P.A."/>
            <person name="Parker A.R."/>
        </authorList>
    </citation>
    <scope>REVIEW</scope>
</reference>
<reference key="55">
    <citation type="journal article" date="2007" name="Science">
        <title>ATM and ATR substrate analysis reveals extensive protein networks responsive to DNA damage.</title>
        <authorList>
            <person name="Matsuoka S."/>
            <person name="Ballif B.A."/>
            <person name="Smogorzewska A."/>
            <person name="McDonald E.R. III"/>
            <person name="Hurov K.E."/>
            <person name="Luo J."/>
            <person name="Bakalarski C.E."/>
            <person name="Zhao Z."/>
            <person name="Solimini N."/>
            <person name="Lerenthal Y."/>
            <person name="Shiloh Y."/>
            <person name="Gygi S.P."/>
            <person name="Elledge S.J."/>
        </authorList>
    </citation>
    <scope>IDENTIFICATION BY MASS SPECTROMETRY [LARGE SCALE ANALYSIS]</scope>
    <source>
        <tissue>Embryonic kidney</tissue>
    </source>
</reference>
<reference key="56">
    <citation type="journal article" date="2008" name="Mol. Cell">
        <title>Kinase-selective enrichment enables quantitative phosphoproteomics of the kinome across the cell cycle.</title>
        <authorList>
            <person name="Daub H."/>
            <person name="Olsen J.V."/>
            <person name="Bairlein M."/>
            <person name="Gnad F."/>
            <person name="Oppermann F.S."/>
            <person name="Korner R."/>
            <person name="Greff Z."/>
            <person name="Keri G."/>
            <person name="Stemmann O."/>
            <person name="Mann M."/>
        </authorList>
    </citation>
    <scope>PHOSPHORYLATION [LARGE SCALE ANALYSIS] AT SER-3205 AND SER-4026</scope>
    <scope>IDENTIFICATION BY MASS SPECTROMETRY [LARGE SCALE ANALYSIS]</scope>
    <source>
        <tissue>Cervix carcinoma</tissue>
    </source>
</reference>
<reference key="57">
    <citation type="journal article" date="2008" name="Proc. Natl. Acad. Sci. U.S.A.">
        <title>A quantitative atlas of mitotic phosphorylation.</title>
        <authorList>
            <person name="Dephoure N."/>
            <person name="Zhou C."/>
            <person name="Villen J."/>
            <person name="Beausoleil S.A."/>
            <person name="Bakalarski C.E."/>
            <person name="Elledge S.J."/>
            <person name="Gygi S.P."/>
        </authorList>
    </citation>
    <scope>PHOSPHORYLATION [LARGE SCALE ANALYSIS] AT SER-3205</scope>
    <scope>IDENTIFICATION BY MASS SPECTROMETRY [LARGE SCALE ANALYSIS]</scope>
    <source>
        <tissue>Cervix carcinoma</tissue>
    </source>
</reference>
<reference key="58">
    <citation type="journal article" date="2009" name="J. Clin. Invest.">
        <title>A DNA-PKcs mutation in a radiosensitive T-B- SCID patient inhibits Artemis activation and nonhomologous end-joining.</title>
        <authorList>
            <person name="van der Burg M."/>
            <person name="Ijspeert H."/>
            <person name="Verkaik N.S."/>
            <person name="Turul T."/>
            <person name="Wiegant W.W."/>
            <person name="Morotomi-Yano K."/>
            <person name="Mari P.O."/>
            <person name="Tezcan I."/>
            <person name="Chen D.J."/>
            <person name="Zdzienicka M.Z."/>
            <person name="van Dongen J.J."/>
            <person name="van Gent D.C."/>
        </authorList>
    </citation>
    <scope>INVOLVEMENT IN IMD26</scope>
    <scope>VARIANT IMD26 ARG-3062</scope>
</reference>
<reference key="59">
    <citation type="journal article" date="2009" name="Mol. Cell. Proteomics">
        <title>Large-scale proteomics analysis of the human kinome.</title>
        <authorList>
            <person name="Oppermann F.S."/>
            <person name="Gnad F."/>
            <person name="Olsen J.V."/>
            <person name="Hornberger R."/>
            <person name="Greff Z."/>
            <person name="Keri G."/>
            <person name="Mann M."/>
            <person name="Daub H."/>
        </authorList>
    </citation>
    <scope>PHOSPHORYLATION [LARGE SCALE ANALYSIS] AT SER-893; SER-2612; SER-3205 AND SER-4026</scope>
    <scope>IDENTIFICATION BY MASS SPECTROMETRY [LARGE SCALE ANALYSIS]</scope>
</reference>
<reference key="60">
    <citation type="journal article" date="2009" name="Sci. Signal.">
        <title>Quantitative phosphoproteomic analysis of T cell receptor signaling reveals system-wide modulation of protein-protein interactions.</title>
        <authorList>
            <person name="Mayya V."/>
            <person name="Lundgren D.H."/>
            <person name="Hwang S.-I."/>
            <person name="Rezaul K."/>
            <person name="Wu L."/>
            <person name="Eng J.K."/>
            <person name="Rodionov V."/>
            <person name="Han D.K."/>
        </authorList>
    </citation>
    <scope>PHOSPHORYLATION [LARGE SCALE ANALYSIS] AT SER-3205</scope>
    <scope>IDENTIFICATION BY MASS SPECTROMETRY [LARGE SCALE ANALYSIS]</scope>
    <source>
        <tissue>Leukemic T-cell</tissue>
    </source>
</reference>
<reference key="61">
    <citation type="journal article" date="2009" name="Science">
        <title>Lysine acetylation targets protein complexes and co-regulates major cellular functions.</title>
        <authorList>
            <person name="Choudhary C."/>
            <person name="Kumar C."/>
            <person name="Gnad F."/>
            <person name="Nielsen M.L."/>
            <person name="Rehman M."/>
            <person name="Walther T.C."/>
            <person name="Olsen J.V."/>
            <person name="Mann M."/>
        </authorList>
    </citation>
    <scope>ACETYLATION [LARGE SCALE ANALYSIS] AT LYS-117; LYS-828; LYS-1209; LYS-1970; LYS-2259; LYS-3241; LYS-3260; LYS-3621; LYS-3638 AND LYS-3642</scope>
    <scope>IDENTIFICATION BY MASS SPECTROMETRY [LARGE SCALE ANALYSIS]</scope>
</reference>
<reference key="62">
    <citation type="journal article" date="2010" name="Genes Dev.">
        <title>A genetic screen identifies the Triple T complex required for DNA damage signaling and ATM and ATR stability.</title>
        <authorList>
            <person name="Hurov K.E."/>
            <person name="Cotta-Ramusino C."/>
            <person name="Elledge S.J."/>
        </authorList>
    </citation>
    <scope>INTERACTION WITH TTI1</scope>
</reference>
<reference key="63">
    <citation type="journal article" date="2010" name="Genes Dev.">
        <title>Tel2 structure and function in the Hsp90-dependent maturation of mTOR and ATR complexes.</title>
        <authorList>
            <person name="Takai H."/>
            <person name="Xie Y."/>
            <person name="de Lange T."/>
            <person name="Pavletich N.P."/>
        </authorList>
    </citation>
    <scope>INTERACTION WITH TELO2</scope>
</reference>
<reference key="64">
    <citation type="journal article" date="2010" name="J. Biol. Chem.">
        <title>Tti1 and Tel2 are critical factors in mammalian target of rapamycin complex assembly.</title>
        <authorList>
            <person name="Kaizuka T."/>
            <person name="Hara T."/>
            <person name="Oshiro N."/>
            <person name="Kikkawa U."/>
            <person name="Yonezawa K."/>
            <person name="Takehana K."/>
            <person name="Iemura S."/>
            <person name="Natsume T."/>
            <person name="Mizushima N."/>
        </authorList>
    </citation>
    <scope>INTERACTION WITH TELO2 AND TTI1</scope>
</reference>
<reference key="65">
    <citation type="journal article" date="2010" name="Sci. Signal.">
        <title>Quantitative phosphoproteomics reveals widespread full phosphorylation site occupancy during mitosis.</title>
        <authorList>
            <person name="Olsen J.V."/>
            <person name="Vermeulen M."/>
            <person name="Santamaria A."/>
            <person name="Kumar C."/>
            <person name="Miller M.L."/>
            <person name="Jensen L.J."/>
            <person name="Gnad F."/>
            <person name="Cox J."/>
            <person name="Jensen T.S."/>
            <person name="Nigg E.A."/>
            <person name="Brunak S."/>
            <person name="Mann M."/>
        </authorList>
    </citation>
    <scope>PHOSPHORYLATION [LARGE SCALE ANALYSIS] AT SER-3205 AND SER-4026</scope>
    <scope>IDENTIFICATION BY MASS SPECTROMETRY [LARGE SCALE ANALYSIS]</scope>
    <source>
        <tissue>Cervix carcinoma</tissue>
    </source>
</reference>
<reference key="66">
    <citation type="journal article" date="2011" name="BMC Syst. Biol.">
        <title>Initial characterization of the human central proteome.</title>
        <authorList>
            <person name="Burkard T.R."/>
            <person name="Planyavsky M."/>
            <person name="Kaupe I."/>
            <person name="Breitwieser F.P."/>
            <person name="Buerckstuemmer T."/>
            <person name="Bennett K.L."/>
            <person name="Superti-Furga G."/>
            <person name="Colinge J."/>
        </authorList>
    </citation>
    <scope>IDENTIFICATION BY MASS SPECTROMETRY [LARGE SCALE ANALYSIS]</scope>
</reference>
<reference key="67">
    <citation type="journal article" date="2011" name="Exp. Ther. Med.">
        <title>Functional interaction of BRCA1/ATM-associated BAAT1 with the DNA-PK catalytic subunit.</title>
        <authorList>
            <person name="So E.Y."/>
            <person name="Ouchi T."/>
        </authorList>
    </citation>
    <scope>INTERACTION WITH BRAT1</scope>
    <scope>PHOSPHORYLATION AT SER-2056</scope>
</reference>
<reference key="68">
    <citation type="journal article" date="2011" name="Sci. Signal.">
        <title>System-wide temporal characterization of the proteome and phosphoproteome of human embryonic stem cell differentiation.</title>
        <authorList>
            <person name="Rigbolt K.T."/>
            <person name="Prokhorova T.A."/>
            <person name="Akimov V."/>
            <person name="Henningsen J."/>
            <person name="Johansen P.T."/>
            <person name="Kratchmarova I."/>
            <person name="Kassem M."/>
            <person name="Mann M."/>
            <person name="Olsen J.V."/>
            <person name="Blagoev B."/>
        </authorList>
    </citation>
    <scope>PHOSPHORYLATION [LARGE SCALE ANALYSIS] AT SER-2612 AND SER-3205</scope>
    <scope>IDENTIFICATION BY MASS SPECTROMETRY [LARGE SCALE ANALYSIS]</scope>
</reference>
<reference key="69">
    <citation type="journal article" date="2012" name="Mol. Cell. Proteomics">
        <title>Systematic analysis of protein pools, isoforms, and modifications affecting turnover and subcellular localization.</title>
        <authorList>
            <person name="Ahmad Y."/>
            <person name="Boisvert F.M."/>
            <person name="Lundberg E."/>
            <person name="Uhlen M."/>
            <person name="Lamond A.I."/>
        </authorList>
    </citation>
    <scope>SUBCELLULAR LOCATION [LARGE SCALE ANALYSIS]</scope>
</reference>
<reference key="70">
    <citation type="journal article" date="2013" name="J. Proteome Res.">
        <title>Toward a comprehensive characterization of a human cancer cell phosphoproteome.</title>
        <authorList>
            <person name="Zhou H."/>
            <person name="Di Palma S."/>
            <person name="Preisinger C."/>
            <person name="Peng M."/>
            <person name="Polat A.N."/>
            <person name="Heck A.J."/>
            <person name="Mohammed S."/>
        </authorList>
    </citation>
    <scope>PHOSPHORYLATION [LARGE SCALE ANALYSIS] AT SER-511; SER-687; SER-841; SER-1065; THR-2535; SER-2612; THR-2638; THR-2647; SER-2789; SER-3205; SER-3731; SER-3821 AND SER-4026</scope>
    <scope>IDENTIFICATION BY MASS SPECTROMETRY [LARGE SCALE ANALYSIS]</scope>
    <source>
        <tissue>Cervix carcinoma</tissue>
        <tissue>Erythroleukemia</tissue>
    </source>
</reference>
<reference key="71">
    <citation type="journal article" date="2013" name="Mol. Cell. Biol.">
        <title>Senataxin, defective in the neurodegenerative disorder ataxia with oculomotor apraxia 2, lies at the interface of transcription and the DNA damage response.</title>
        <authorList>
            <person name="Yuce O."/>
            <person name="West S.C."/>
        </authorList>
    </citation>
    <scope>INTERACTION WITH SETX</scope>
</reference>
<reference key="72">
    <citation type="journal article" date="2014" name="J. Proteomics">
        <title>An enzyme assisted RP-RPLC approach for in-depth analysis of human liver phosphoproteome.</title>
        <authorList>
            <person name="Bian Y."/>
            <person name="Song C."/>
            <person name="Cheng K."/>
            <person name="Dong M."/>
            <person name="Wang F."/>
            <person name="Huang J."/>
            <person name="Sun D."/>
            <person name="Wang L."/>
            <person name="Ye M."/>
            <person name="Zou H."/>
        </authorList>
    </citation>
    <scope>PHOSPHORYLATION [LARGE SCALE ANALYSIS] AT SER-2612</scope>
    <scope>IDENTIFICATION BY MASS SPECTROMETRY [LARGE SCALE ANALYSIS]</scope>
    <source>
        <tissue>Liver</tissue>
    </source>
</reference>
<reference key="73">
    <citation type="journal article" date="2014" name="Proc. Natl. Acad. Sci. U.S.A.">
        <title>RNF144A, an E3 ubiquitin ligase for DNA-PKcs, promotes apoptosis during DNA damage.</title>
        <authorList>
            <person name="Ho S.R."/>
            <person name="Mahanic C.S."/>
            <person name="Lee Y.J."/>
            <person name="Lin W.C."/>
        </authorList>
    </citation>
    <scope>UBIQUITINATION BY RNF144A</scope>
</reference>
<reference key="74">
    <citation type="journal article" date="2015" name="Cardiovasc. Res.">
        <title>DNA-dependent protein kinase (DNA-PK) permits vascular smooth muscle cell proliferation through phosphorylation of the orphan nuclear receptor NOR1.</title>
        <authorList>
            <person name="Medunjanin S."/>
            <person name="Daniel J.M."/>
            <person name="Weinert S."/>
            <person name="Dutzmann J."/>
            <person name="Burgbacher F."/>
            <person name="Brecht S."/>
            <person name="Bruemmer D."/>
            <person name="Kaehne T."/>
            <person name="Naumann M."/>
            <person name="Sedding D.G."/>
            <person name="Zuschratter W."/>
            <person name="Braun-Dullaeus R.C."/>
        </authorList>
    </citation>
    <scope>INTERACTION WITH NR4A3</scope>
</reference>
<reference key="75">
    <citation type="journal article" date="2015" name="Cell Death Differ.">
        <title>XLS (c9orf142) is a new component of mammalian DNA double-stranded break repair.</title>
        <authorList>
            <person name="Craxton A."/>
            <person name="Somers J."/>
            <person name="Munnur D."/>
            <person name="Jukes-Jones R."/>
            <person name="Cain K."/>
            <person name="Malewicz M."/>
        </authorList>
    </citation>
    <scope>SUBUNIT</scope>
</reference>
<reference key="76">
    <citation type="journal article" date="2015" name="Nat. Cell Biol.">
        <title>Local generation of fumarate promotes DNA repair through inhibition of histone H3 demethylation.</title>
        <authorList>
            <person name="Jiang Y."/>
            <person name="Qian X."/>
            <person name="Shen J."/>
            <person name="Wang Y."/>
            <person name="Li X."/>
            <person name="Liu R."/>
            <person name="Xia Y."/>
            <person name="Chen Q."/>
            <person name="Peng G."/>
            <person name="Lin S.Y."/>
            <person name="Lu Z."/>
        </authorList>
    </citation>
    <scope>FUNCTION IN PHOSPHORYLATION OF FH</scope>
    <scope>CATALYTIC ACTIVITY</scope>
</reference>
<reference key="77">
    <citation type="journal article" date="2015" name="Nat. Commun.">
        <title>Interactome analysis identifies a new paralogue of XRCC4 in non-homologous end joining DNA repair pathway.</title>
        <authorList>
            <person name="Xing M."/>
            <person name="Yang M."/>
            <person name="Huo W."/>
            <person name="Feng F."/>
            <person name="Wei L."/>
            <person name="Jiang W."/>
            <person name="Ning S."/>
            <person name="Yan Z."/>
            <person name="Li W."/>
            <person name="Wang Q."/>
            <person name="Hou M."/>
            <person name="Dong C."/>
            <person name="Guo R."/>
            <person name="Gao G."/>
            <person name="Ji J."/>
            <person name="Zha S."/>
            <person name="Lan L."/>
            <person name="Liang H."/>
            <person name="Xu D."/>
        </authorList>
    </citation>
    <scope>SUBUNIT</scope>
</reference>
<reference key="78">
    <citation type="journal article" date="2015" name="Proteomics">
        <title>N-terminome analysis of the human mitochondrial proteome.</title>
        <authorList>
            <person name="Vaca Jacome A.S."/>
            <person name="Rabilloud T."/>
            <person name="Schaeffer-Reiss C."/>
            <person name="Rompais M."/>
            <person name="Ayoub D."/>
            <person name="Lane L."/>
            <person name="Bairoch A."/>
            <person name="Van Dorsselaer A."/>
            <person name="Carapito C."/>
        </authorList>
    </citation>
    <scope>IDENTIFICATION BY MASS SPECTROMETRY [LARGE SCALE ANALYSIS]</scope>
</reference>
<reference key="79">
    <citation type="journal article" date="2015" name="Science">
        <title>DNA repair. PAXX, a paralog of XRCC4 and XLF, interacts with Ku to promote DNA double-strand break repair.</title>
        <authorList>
            <person name="Ochi T."/>
            <person name="Blackford A.N."/>
            <person name="Coates J."/>
            <person name="Jhujh S."/>
            <person name="Mehmood S."/>
            <person name="Tamura N."/>
            <person name="Travers J."/>
            <person name="Wu Q."/>
            <person name="Draviam V.M."/>
            <person name="Robinson C.V."/>
            <person name="Blundell T.L."/>
            <person name="Jackson S.P."/>
        </authorList>
    </citation>
    <scope>INTERACTION WITH PAXX</scope>
</reference>
<reference key="80">
    <citation type="journal article" date="2017" name="Mol. Cell">
        <title>HEXIM1 and NEAT1 Long non-coding RNA form a multi-subunit complex that regulates DNA-mediated innate immune response.</title>
        <authorList>
            <person name="Morchikh M."/>
            <person name="Cribier A."/>
            <person name="Raffel R."/>
            <person name="Amraoui S."/>
            <person name="Cau J."/>
            <person name="Severac D."/>
            <person name="Dubois E."/>
            <person name="Schwartz O."/>
            <person name="Bennasser Y."/>
            <person name="Benkirane M."/>
        </authorList>
    </citation>
    <scope>FUNCTION</scope>
    <scope>INTERACTION WITH HEXIM1; XRCC5; XRCC6; SFPQ; NONO; PSPC1; RBM14 AND MATR3</scope>
</reference>
<reference key="81">
    <citation type="journal article" date="2018" name="Mol. Cell">
        <title>The histone chaperones ASF1 and CAF-1 promote MMS22L-TONSL-mediated Rad51 loading onto ssDNA during homologous recombination in human cells.</title>
        <authorList>
            <person name="Huang T.H."/>
            <person name="Fowler F."/>
            <person name="Chen C.C."/>
            <person name="Shen Z.J."/>
            <person name="Sleckman B."/>
            <person name="Tyler J.K."/>
        </authorList>
    </citation>
    <scope>FUNCTION</scope>
    <scope>CATALYTIC ACTIVITY</scope>
</reference>
<reference key="82">
    <citation type="journal article" date="2020" name="Nature">
        <title>DNA-PKcs has KU-dependent function in rRNA processing and haematopoiesis.</title>
        <authorList>
            <person name="Shao Z."/>
            <person name="Flynn R.A."/>
            <person name="Crowe J.L."/>
            <person name="Zhu Y."/>
            <person name="Liang J."/>
            <person name="Jiang W."/>
            <person name="Aryan F."/>
            <person name="Aoude P."/>
            <person name="Bertozzi C.R."/>
            <person name="Estes V.M."/>
            <person name="Lee B.J."/>
            <person name="Bhagat G."/>
            <person name="Zha S."/>
            <person name="Calo E."/>
        </authorList>
    </citation>
    <scope>FUNCTION</scope>
    <scope>CATALYTIC ACTIVITY</scope>
    <scope>SUBCELLULAR LOCATION</scope>
    <scope>PHOSPHORYLATION AT THR-2609</scope>
</reference>
<reference key="83">
    <citation type="journal article" date="2020" name="Nat. Commun.">
        <title>DNA-PK deficiency potentiates cGAS-mediated antiviral innate immunity.</title>
        <authorList>
            <person name="Sun X."/>
            <person name="Liu T."/>
            <person name="Zhao J."/>
            <person name="Xia H."/>
            <person name="Xie J."/>
            <person name="Guo Y."/>
            <person name="Zhong L."/>
            <person name="Li M."/>
            <person name="Yang Q."/>
            <person name="Peng C."/>
            <person name="Rouvet I."/>
            <person name="Belot A."/>
            <person name="Shu H.B."/>
            <person name="Feng P."/>
            <person name="Zhang J."/>
        </authorList>
    </citation>
    <scope>FUNCTION</scope>
</reference>
<reference key="84">
    <citation type="journal article" date="2020" name="Sci. Adv.">
        <title>TIP60 K430 SUMOylation attenuates its interaction with DNA-PKcs in S-phase cells: Facilitating homologous recombination and emerging target for cancer therapy.</title>
        <authorList>
            <person name="Gao S.S."/>
            <person name="Guan H."/>
            <person name="Yan S."/>
            <person name="Hu S."/>
            <person name="Song M."/>
            <person name="Guo Z.P."/>
            <person name="Xie D.F."/>
            <person name="Liu Y."/>
            <person name="Liu X."/>
            <person name="Zhang S."/>
            <person name="Zhou P.K."/>
        </authorList>
    </citation>
    <scope>INTERACTION WITH KAT5</scope>
</reference>
<reference key="85">
    <citation type="journal article" date="2022" name="Mol. Cell">
        <title>Cytoplasmic PARP1 links the genome instability to the inhibition of antiviral immunity through PARylating cGAS.</title>
        <authorList>
            <person name="Wang F."/>
            <person name="Zhao M."/>
            <person name="Chang B."/>
            <person name="Zhou Y."/>
            <person name="Wu X."/>
            <person name="Ma M."/>
            <person name="Liu S."/>
            <person name="Cao Y."/>
            <person name="Zheng M."/>
            <person name="Dang Y."/>
            <person name="Xu J."/>
            <person name="Chen L."/>
            <person name="Liu T."/>
            <person name="Tang F."/>
            <person name="Ren Y."/>
            <person name="Xu Z."/>
            <person name="Mao Z."/>
            <person name="Huang K."/>
            <person name="Luo M."/>
            <person name="Li J."/>
            <person name="Liu H."/>
            <person name="Ge B."/>
        </authorList>
    </citation>
    <scope>FUNCTION</scope>
    <scope>CATALYTIC ACTIVITY</scope>
</reference>
<reference evidence="74 75" key="86">
    <citation type="journal article" date="2021" name="Mol. Cell">
        <title>Cryo-EM of NHEJ supercomplexes provides insights into DNA repair.</title>
        <authorList>
            <person name="Chaplin A.K."/>
            <person name="Hardwick S.W."/>
            <person name="Stavridi A.K."/>
            <person name="Buehl C.J."/>
            <person name="Goff N.J."/>
            <person name="Ropars V."/>
            <person name="Liang S."/>
            <person name="De Oliveira T.M."/>
            <person name="Chirgadze D.Y."/>
            <person name="Meek K."/>
            <person name="Charbonnier J.B."/>
            <person name="Blundell T.L."/>
        </authorList>
    </citation>
    <scope>STRUCTURE BY ELECTRON MICROSCOPY (4.14 ANGSTROMS) IN COMPLEX WITH THE NHEJ COMPLEX AND DNA</scope>
    <scope>FUNCTION</scope>
    <scope>IDENTIFICATION IN THE NHEJ COMPLEX</scope>
    <scope>PHOSPHORYLATION AT SER-2056 AND THR-2609</scope>
</reference>
<reference evidence="73" key="87">
    <citation type="journal article" date="2021" name="Nature">
        <title>Structural basis of long-range to short-range synaptic transition in NHEJ.</title>
        <authorList>
            <person name="Chen S."/>
            <person name="Lee L."/>
            <person name="Naila T."/>
            <person name="Fishbain S."/>
            <person name="Wang A."/>
            <person name="Tomkinson A.E."/>
            <person name="Lees-Miller S.P."/>
            <person name="He Y."/>
        </authorList>
    </citation>
    <scope>STRUCTURE BY ELECTRON MICROSCOPY (4.6 ANGSTROMS) IN COMPLEX WITH THE NHEJ COMPLEX</scope>
    <scope>FUNCTION</scope>
    <scope>IDENTIFICATION IN THE NHEJ COMPLEX</scope>
    <scope>AUTOPHOSPHORYLATION</scope>
</reference>
<reference key="88">
    <citation type="journal article" date="2007" name="Nature">
        <title>Patterns of somatic mutation in human cancer genomes.</title>
        <authorList>
            <person name="Greenman C."/>
            <person name="Stephens P."/>
            <person name="Smith R."/>
            <person name="Dalgliesh G.L."/>
            <person name="Hunter C."/>
            <person name="Bignell G."/>
            <person name="Davies H."/>
            <person name="Teague J."/>
            <person name="Butler A."/>
            <person name="Stevens C."/>
            <person name="Edkins S."/>
            <person name="O'Meara S."/>
            <person name="Vastrik I."/>
            <person name="Schmidt E.E."/>
            <person name="Avis T."/>
            <person name="Barthorpe S."/>
            <person name="Bhamra G."/>
            <person name="Buck G."/>
            <person name="Choudhury B."/>
            <person name="Clements J."/>
            <person name="Cole J."/>
            <person name="Dicks E."/>
            <person name="Forbes S."/>
            <person name="Gray K."/>
            <person name="Halliday K."/>
            <person name="Harrison R."/>
            <person name="Hills K."/>
            <person name="Hinton J."/>
            <person name="Jenkinson A."/>
            <person name="Jones D."/>
            <person name="Menzies A."/>
            <person name="Mironenko T."/>
            <person name="Perry J."/>
            <person name="Raine K."/>
            <person name="Richardson D."/>
            <person name="Shepherd R."/>
            <person name="Small A."/>
            <person name="Tofts C."/>
            <person name="Varian J."/>
            <person name="Webb T."/>
            <person name="West S."/>
            <person name="Widaa S."/>
            <person name="Yates A."/>
            <person name="Cahill D.P."/>
            <person name="Louis D.N."/>
            <person name="Goldstraw P."/>
            <person name="Nicholson A.G."/>
            <person name="Brasseur F."/>
            <person name="Looijenga L."/>
            <person name="Weber B.L."/>
            <person name="Chiew Y.-E."/>
            <person name="DeFazio A."/>
            <person name="Greaves M.F."/>
            <person name="Green A.R."/>
            <person name="Campbell P."/>
            <person name="Birney E."/>
            <person name="Easton D.F."/>
            <person name="Chenevix-Trench G."/>
            <person name="Tan M.-H."/>
            <person name="Khoo S.K."/>
            <person name="Teh B.T."/>
            <person name="Yuen S.T."/>
            <person name="Leung S.Y."/>
            <person name="Wooster R."/>
            <person name="Futreal P.A."/>
            <person name="Stratton M.R."/>
        </authorList>
    </citation>
    <scope>VARIANTS [LARGE SCALE ANALYSIS] SER-6; ASN-263; ILE-333; ILE-420; SER-500; SER-605; LEU-649; SER-695; HIS-1136; VAL-1190; THR-1237; PHE-1279; MET-1447; GLY-1619; VAL-1680; VAL-1680; PRO-2023; GLN-2598; ASN-2810; CYS-2899; ALA-2941; ASP-3085; ASP-3149; SER-3198; SER-3201; GLU-3404; THR-3434; MET-3562; PHE-3584; ILE-3800; LEU-3836; SER-3936 AND MET-3937</scope>
</reference>
<reference key="89">
    <citation type="journal article" date="2013" name="J. Clin. Invest.">
        <title>PRKDC mutations in a SCID patient with profound neurological abnormalities.</title>
        <authorList>
            <person name="Woodbine L."/>
            <person name="Neal J.A."/>
            <person name="Sasi N.K."/>
            <person name="Shimada M."/>
            <person name="Deem K."/>
            <person name="Coleman H."/>
            <person name="Dobyns W.B."/>
            <person name="Ogi T."/>
            <person name="Meek K."/>
            <person name="Davies E.G."/>
            <person name="Jeggo P.A."/>
        </authorList>
    </citation>
    <scope>VARIANT IMD26 VAL-3574</scope>
    <scope>CHARACTERIZATION OF VARIANT IMD26 VAL-3574</scope>
</reference>